<proteinExistence type="evidence at protein level"/>
<evidence type="ECO:0000250" key="1">
    <source>
        <dbReference type="UniProtKB" id="Q9JK66"/>
    </source>
</evidence>
<evidence type="ECO:0000250" key="2">
    <source>
        <dbReference type="UniProtKB" id="Q9WVS6"/>
    </source>
</evidence>
<evidence type="ECO:0000255" key="3">
    <source>
        <dbReference type="PROSITE-ProRule" id="PRU00214"/>
    </source>
</evidence>
<evidence type="ECO:0000255" key="4">
    <source>
        <dbReference type="PROSITE-ProRule" id="PRU01221"/>
    </source>
</evidence>
<evidence type="ECO:0000256" key="5">
    <source>
        <dbReference type="SAM" id="MobiDB-lite"/>
    </source>
</evidence>
<evidence type="ECO:0000269" key="6">
    <source>
    </source>
</evidence>
<evidence type="ECO:0000269" key="7">
    <source>
    </source>
</evidence>
<evidence type="ECO:0000269" key="8">
    <source>
    </source>
</evidence>
<evidence type="ECO:0000269" key="9">
    <source>
    </source>
</evidence>
<evidence type="ECO:0000269" key="10">
    <source>
    </source>
</evidence>
<evidence type="ECO:0000269" key="11">
    <source>
    </source>
</evidence>
<evidence type="ECO:0000269" key="12">
    <source>
    </source>
</evidence>
<evidence type="ECO:0000269" key="13">
    <source>
    </source>
</evidence>
<evidence type="ECO:0000269" key="14">
    <source>
    </source>
</evidence>
<evidence type="ECO:0000269" key="15">
    <source>
    </source>
</evidence>
<evidence type="ECO:0000269" key="16">
    <source>
    </source>
</evidence>
<evidence type="ECO:0000269" key="17">
    <source>
    </source>
</evidence>
<evidence type="ECO:0000269" key="18">
    <source>
    </source>
</evidence>
<evidence type="ECO:0000269" key="19">
    <source>
    </source>
</evidence>
<evidence type="ECO:0000269" key="20">
    <source>
    </source>
</evidence>
<evidence type="ECO:0000269" key="21">
    <source>
    </source>
</evidence>
<evidence type="ECO:0000269" key="22">
    <source>
    </source>
</evidence>
<evidence type="ECO:0000269" key="23">
    <source>
    </source>
</evidence>
<evidence type="ECO:0000269" key="24">
    <source>
    </source>
</evidence>
<evidence type="ECO:0000269" key="25">
    <source>
    </source>
</evidence>
<evidence type="ECO:0000269" key="26">
    <source>
    </source>
</evidence>
<evidence type="ECO:0000269" key="27">
    <source>
    </source>
</evidence>
<evidence type="ECO:0000269" key="28">
    <source>
    </source>
</evidence>
<evidence type="ECO:0000269" key="29">
    <source>
    </source>
</evidence>
<evidence type="ECO:0000269" key="30">
    <source>
    </source>
</evidence>
<evidence type="ECO:0000269" key="31">
    <source>
    </source>
</evidence>
<evidence type="ECO:0000269" key="32">
    <source>
    </source>
</evidence>
<evidence type="ECO:0000269" key="33">
    <source>
    </source>
</evidence>
<evidence type="ECO:0000269" key="34">
    <source>
    </source>
</evidence>
<evidence type="ECO:0000269" key="35">
    <source>
    </source>
</evidence>
<evidence type="ECO:0000269" key="36">
    <source>
    </source>
</evidence>
<evidence type="ECO:0000269" key="37">
    <source>
    </source>
</evidence>
<evidence type="ECO:0000269" key="38">
    <source>
    </source>
</evidence>
<evidence type="ECO:0000269" key="39">
    <source>
    </source>
</evidence>
<evidence type="ECO:0000269" key="40">
    <source>
    </source>
</evidence>
<evidence type="ECO:0000269" key="41">
    <source>
    </source>
</evidence>
<evidence type="ECO:0000269" key="42">
    <source>
    </source>
</evidence>
<evidence type="ECO:0000269" key="43">
    <source>
    </source>
</evidence>
<evidence type="ECO:0000269" key="44">
    <source>
    </source>
</evidence>
<evidence type="ECO:0000269" key="45">
    <source>
    </source>
</evidence>
<evidence type="ECO:0000269" key="46">
    <source>
    </source>
</evidence>
<evidence type="ECO:0000269" key="47">
    <source>
    </source>
</evidence>
<evidence type="ECO:0000269" key="48">
    <source>
    </source>
</evidence>
<evidence type="ECO:0000269" key="49">
    <source>
    </source>
</evidence>
<evidence type="ECO:0000269" key="50">
    <source>
    </source>
</evidence>
<evidence type="ECO:0000269" key="51">
    <source>
    </source>
</evidence>
<evidence type="ECO:0000269" key="52">
    <source>
    </source>
</evidence>
<evidence type="ECO:0000269" key="53">
    <source>
    </source>
</evidence>
<evidence type="ECO:0000269" key="54">
    <source>
    </source>
</evidence>
<evidence type="ECO:0000269" key="55">
    <source>
    </source>
</evidence>
<evidence type="ECO:0000269" key="56">
    <source>
    </source>
</evidence>
<evidence type="ECO:0000269" key="57">
    <source>
    </source>
</evidence>
<evidence type="ECO:0000269" key="58">
    <source>
    </source>
</evidence>
<evidence type="ECO:0000269" key="59">
    <source>
    </source>
</evidence>
<evidence type="ECO:0000269" key="60">
    <source>
    </source>
</evidence>
<evidence type="ECO:0000269" key="61">
    <source>
    </source>
</evidence>
<evidence type="ECO:0000269" key="62">
    <source>
    </source>
</evidence>
<evidence type="ECO:0000269" key="63">
    <source>
    </source>
</evidence>
<evidence type="ECO:0000269" key="64">
    <source>
    </source>
</evidence>
<evidence type="ECO:0000269" key="65">
    <source>
    </source>
</evidence>
<evidence type="ECO:0000269" key="66">
    <source>
    </source>
</evidence>
<evidence type="ECO:0000269" key="67">
    <source>
    </source>
</evidence>
<evidence type="ECO:0000269" key="68">
    <source>
    </source>
</evidence>
<evidence type="ECO:0000269" key="69">
    <source>
    </source>
</evidence>
<evidence type="ECO:0000269" key="70">
    <source>
    </source>
</evidence>
<evidence type="ECO:0000269" key="71">
    <source>
    </source>
</evidence>
<evidence type="ECO:0000269" key="72">
    <source>
    </source>
</evidence>
<evidence type="ECO:0000269" key="73">
    <source>
    </source>
</evidence>
<evidence type="ECO:0000269" key="74">
    <source>
    </source>
</evidence>
<evidence type="ECO:0000269" key="75">
    <source>
    </source>
</evidence>
<evidence type="ECO:0000269" key="76">
    <source>
    </source>
</evidence>
<evidence type="ECO:0000269" key="77">
    <source>
    </source>
</evidence>
<evidence type="ECO:0000269" key="78">
    <source>
    </source>
</evidence>
<evidence type="ECO:0000269" key="79">
    <source>
    </source>
</evidence>
<evidence type="ECO:0000269" key="80">
    <source>
    </source>
</evidence>
<evidence type="ECO:0000269" key="81">
    <source>
    </source>
</evidence>
<evidence type="ECO:0000269" key="82">
    <source>
    </source>
</evidence>
<evidence type="ECO:0000269" key="83">
    <source>
    </source>
</evidence>
<evidence type="ECO:0000269" key="84">
    <source>
    </source>
</evidence>
<evidence type="ECO:0000269" key="85">
    <source>
    </source>
</evidence>
<evidence type="ECO:0000269" key="86">
    <source>
    </source>
</evidence>
<evidence type="ECO:0000269" key="87">
    <source>
    </source>
</evidence>
<evidence type="ECO:0000303" key="88">
    <source>
    </source>
</evidence>
<evidence type="ECO:0000303" key="89">
    <source>
    </source>
</evidence>
<evidence type="ECO:0000303" key="90">
    <source ref="3"/>
</evidence>
<evidence type="ECO:0000303" key="91">
    <source ref="4"/>
</evidence>
<evidence type="ECO:0000305" key="92"/>
<evidence type="ECO:0000305" key="93">
    <source>
    </source>
</evidence>
<evidence type="ECO:0000312" key="94">
    <source>
        <dbReference type="HGNC" id="HGNC:8607"/>
    </source>
</evidence>
<evidence type="ECO:0007829" key="95">
    <source>
        <dbReference type="PDB" id="1IYF"/>
    </source>
</evidence>
<evidence type="ECO:0007829" key="96">
    <source>
        <dbReference type="PDB" id="4BM9"/>
    </source>
</evidence>
<evidence type="ECO:0007829" key="97">
    <source>
        <dbReference type="PDB" id="4I1F"/>
    </source>
</evidence>
<evidence type="ECO:0007829" key="98">
    <source>
        <dbReference type="PDB" id="4I1H"/>
    </source>
</evidence>
<evidence type="ECO:0007829" key="99">
    <source>
        <dbReference type="PDB" id="5C1Z"/>
    </source>
</evidence>
<evidence type="ECO:0007829" key="100">
    <source>
        <dbReference type="PDB" id="5N2W"/>
    </source>
</evidence>
<evidence type="ECO:0007829" key="101">
    <source>
        <dbReference type="PDB" id="5N38"/>
    </source>
</evidence>
<evidence type="ECO:0007829" key="102">
    <source>
        <dbReference type="PDB" id="6GLC"/>
    </source>
</evidence>
<evidence type="ECO:0007829" key="103">
    <source>
        <dbReference type="PDB" id="6N13"/>
    </source>
</evidence>
<evidence type="ECO:0007829" key="104">
    <source>
        <dbReference type="PDB" id="8WZN"/>
    </source>
</evidence>
<evidence type="ECO:0007829" key="105">
    <source>
        <dbReference type="PDB" id="8WZO"/>
    </source>
</evidence>
<reference key="1">
    <citation type="journal article" date="1998" name="Nature">
        <title>Mutations in the parkin gene cause autosomal recessive juvenile parkinsonism.</title>
        <authorList>
            <person name="Kitada T."/>
            <person name="Asakawa S."/>
            <person name="Hattori N."/>
            <person name="Matsumine H."/>
            <person name="Yamamura Y."/>
            <person name="Minoshima S."/>
            <person name="Yokochi M."/>
            <person name="Mizuno Y."/>
            <person name="Shimizu N."/>
        </authorList>
    </citation>
    <scope>NUCLEOTIDE SEQUENCE [MRNA] (ISOFORMS 1 AND 2)</scope>
    <scope>INVOLVEMENT IN PARK2</scope>
    <scope>TISSUE SPECIFICITY</scope>
    <source>
        <tissue>Fetal brain</tissue>
        <tissue>Skeletal muscle</tissue>
    </source>
</reference>
<reference key="2">
    <citation type="journal article" date="2009" name="Neurosci. Lett.">
        <title>Evidence for the presence of full-length PARK2 mRNA and Parkin protein in human blood.</title>
        <authorList>
            <person name="Kasap M."/>
            <person name="Akpinar G."/>
            <person name="Sazci A."/>
            <person name="Idrisoglu H.A."/>
            <person name="Vahaboglu H."/>
        </authorList>
    </citation>
    <scope>NUCLEOTIDE SEQUENCE [MRNA]</scope>
    <scope>SUBCELLULAR LOCATION</scope>
    <scope>TISSUE SPECIFICITY</scope>
    <scope>VARIANTS ARG-311 AND THR-371</scope>
    <scope>IDENTIFICATION BY MASS SPECTROMETRY</scope>
</reference>
<reference key="3">
    <citation type="submission" date="2001-05" db="EMBL/GenBank/DDBJ databases">
        <title>Functional and molecular diversity of parkin.</title>
        <authorList>
            <person name="D'Agata V."/>
            <person name="Scapagnini G."/>
            <person name="Cavallaro S."/>
        </authorList>
    </citation>
    <scope>NUCLEOTIDE SEQUENCE [MRNA] (ISOFORMS 3 AND 4)</scope>
</reference>
<reference key="4">
    <citation type="submission" date="2009-12" db="EMBL/GenBank/DDBJ databases">
        <title>Homo sapiens PARK2 transcript variants.</title>
        <authorList>
            <person name="Campello L."/>
            <person name="Esteve-Rudd J."/>
            <person name="Cuenca N."/>
            <person name="Martin-Nieto J."/>
        </authorList>
    </citation>
    <scope>NUCLEOTIDE SEQUENCE [MRNA] (ISOFORMS 2; 7 AND 8)</scope>
    <source>
        <tissue>Retina</tissue>
    </source>
</reference>
<reference key="5">
    <citation type="journal article" date="2004" name="Nat. Genet.">
        <title>Complete sequencing and characterization of 21,243 full-length human cDNAs.</title>
        <authorList>
            <person name="Ota T."/>
            <person name="Suzuki Y."/>
            <person name="Nishikawa T."/>
            <person name="Otsuki T."/>
            <person name="Sugiyama T."/>
            <person name="Irie R."/>
            <person name="Wakamatsu A."/>
            <person name="Hayashi K."/>
            <person name="Sato H."/>
            <person name="Nagai K."/>
            <person name="Kimura K."/>
            <person name="Makita H."/>
            <person name="Sekine M."/>
            <person name="Obayashi M."/>
            <person name="Nishi T."/>
            <person name="Shibahara T."/>
            <person name="Tanaka T."/>
            <person name="Ishii S."/>
            <person name="Yamamoto J."/>
            <person name="Saito K."/>
            <person name="Kawai Y."/>
            <person name="Isono Y."/>
            <person name="Nakamura Y."/>
            <person name="Nagahari K."/>
            <person name="Murakami K."/>
            <person name="Yasuda T."/>
            <person name="Iwayanagi T."/>
            <person name="Wagatsuma M."/>
            <person name="Shiratori A."/>
            <person name="Sudo H."/>
            <person name="Hosoiri T."/>
            <person name="Kaku Y."/>
            <person name="Kodaira H."/>
            <person name="Kondo H."/>
            <person name="Sugawara M."/>
            <person name="Takahashi M."/>
            <person name="Kanda K."/>
            <person name="Yokoi T."/>
            <person name="Furuya T."/>
            <person name="Kikkawa E."/>
            <person name="Omura Y."/>
            <person name="Abe K."/>
            <person name="Kamihara K."/>
            <person name="Katsuta N."/>
            <person name="Sato K."/>
            <person name="Tanikawa M."/>
            <person name="Yamazaki M."/>
            <person name="Ninomiya K."/>
            <person name="Ishibashi T."/>
            <person name="Yamashita H."/>
            <person name="Murakawa K."/>
            <person name="Fujimori K."/>
            <person name="Tanai H."/>
            <person name="Kimata M."/>
            <person name="Watanabe M."/>
            <person name="Hiraoka S."/>
            <person name="Chiba Y."/>
            <person name="Ishida S."/>
            <person name="Ono Y."/>
            <person name="Takiguchi S."/>
            <person name="Watanabe S."/>
            <person name="Yosida M."/>
            <person name="Hotuta T."/>
            <person name="Kusano J."/>
            <person name="Kanehori K."/>
            <person name="Takahashi-Fujii A."/>
            <person name="Hara H."/>
            <person name="Tanase T.-O."/>
            <person name="Nomura Y."/>
            <person name="Togiya S."/>
            <person name="Komai F."/>
            <person name="Hara R."/>
            <person name="Takeuchi K."/>
            <person name="Arita M."/>
            <person name="Imose N."/>
            <person name="Musashino K."/>
            <person name="Yuuki H."/>
            <person name="Oshima A."/>
            <person name="Sasaki N."/>
            <person name="Aotsuka S."/>
            <person name="Yoshikawa Y."/>
            <person name="Matsunawa H."/>
            <person name="Ichihara T."/>
            <person name="Shiohata N."/>
            <person name="Sano S."/>
            <person name="Moriya S."/>
            <person name="Momiyama H."/>
            <person name="Satoh N."/>
            <person name="Takami S."/>
            <person name="Terashima Y."/>
            <person name="Suzuki O."/>
            <person name="Nakagawa S."/>
            <person name="Senoh A."/>
            <person name="Mizoguchi H."/>
            <person name="Goto Y."/>
            <person name="Shimizu F."/>
            <person name="Wakebe H."/>
            <person name="Hishigaki H."/>
            <person name="Watanabe T."/>
            <person name="Sugiyama A."/>
            <person name="Takemoto M."/>
            <person name="Kawakami B."/>
            <person name="Yamazaki M."/>
            <person name="Watanabe K."/>
            <person name="Kumagai A."/>
            <person name="Itakura S."/>
            <person name="Fukuzumi Y."/>
            <person name="Fujimori Y."/>
            <person name="Komiyama M."/>
            <person name="Tashiro H."/>
            <person name="Tanigami A."/>
            <person name="Fujiwara T."/>
            <person name="Ono T."/>
            <person name="Yamada K."/>
            <person name="Fujii Y."/>
            <person name="Ozaki K."/>
            <person name="Hirao M."/>
            <person name="Ohmori Y."/>
            <person name="Kawabata A."/>
            <person name="Hikiji T."/>
            <person name="Kobatake N."/>
            <person name="Inagaki H."/>
            <person name="Ikema Y."/>
            <person name="Okamoto S."/>
            <person name="Okitani R."/>
            <person name="Kawakami T."/>
            <person name="Noguchi S."/>
            <person name="Itoh T."/>
            <person name="Shigeta K."/>
            <person name="Senba T."/>
            <person name="Matsumura K."/>
            <person name="Nakajima Y."/>
            <person name="Mizuno T."/>
            <person name="Morinaga M."/>
            <person name="Sasaki M."/>
            <person name="Togashi T."/>
            <person name="Oyama M."/>
            <person name="Hata H."/>
            <person name="Watanabe M."/>
            <person name="Komatsu T."/>
            <person name="Mizushima-Sugano J."/>
            <person name="Satoh T."/>
            <person name="Shirai Y."/>
            <person name="Takahashi Y."/>
            <person name="Nakagawa K."/>
            <person name="Okumura K."/>
            <person name="Nagase T."/>
            <person name="Nomura N."/>
            <person name="Kikuchi H."/>
            <person name="Masuho Y."/>
            <person name="Yamashita R."/>
            <person name="Nakai K."/>
            <person name="Yada T."/>
            <person name="Nakamura Y."/>
            <person name="Ohara O."/>
            <person name="Isogai T."/>
            <person name="Sugano S."/>
        </authorList>
    </citation>
    <scope>NUCLEOTIDE SEQUENCE [LARGE SCALE MRNA] (ISOFORM 1)</scope>
    <source>
        <tissue>Testis</tissue>
    </source>
</reference>
<reference key="6">
    <citation type="journal article" date="2003" name="Nature">
        <title>The DNA sequence and analysis of human chromosome 6.</title>
        <authorList>
            <person name="Mungall A.J."/>
            <person name="Palmer S.A."/>
            <person name="Sims S.K."/>
            <person name="Edwards C.A."/>
            <person name="Ashurst J.L."/>
            <person name="Wilming L."/>
            <person name="Jones M.C."/>
            <person name="Horton R."/>
            <person name="Hunt S.E."/>
            <person name="Scott C.E."/>
            <person name="Gilbert J.G.R."/>
            <person name="Clamp M.E."/>
            <person name="Bethel G."/>
            <person name="Milne S."/>
            <person name="Ainscough R."/>
            <person name="Almeida J.P."/>
            <person name="Ambrose K.D."/>
            <person name="Andrews T.D."/>
            <person name="Ashwell R.I.S."/>
            <person name="Babbage A.K."/>
            <person name="Bagguley C.L."/>
            <person name="Bailey J."/>
            <person name="Banerjee R."/>
            <person name="Barker D.J."/>
            <person name="Barlow K.F."/>
            <person name="Bates K."/>
            <person name="Beare D.M."/>
            <person name="Beasley H."/>
            <person name="Beasley O."/>
            <person name="Bird C.P."/>
            <person name="Blakey S.E."/>
            <person name="Bray-Allen S."/>
            <person name="Brook J."/>
            <person name="Brown A.J."/>
            <person name="Brown J.Y."/>
            <person name="Burford D.C."/>
            <person name="Burrill W."/>
            <person name="Burton J."/>
            <person name="Carder C."/>
            <person name="Carter N.P."/>
            <person name="Chapman J.C."/>
            <person name="Clark S.Y."/>
            <person name="Clark G."/>
            <person name="Clee C.M."/>
            <person name="Clegg S."/>
            <person name="Cobley V."/>
            <person name="Collier R.E."/>
            <person name="Collins J.E."/>
            <person name="Colman L.K."/>
            <person name="Corby N.R."/>
            <person name="Coville G.J."/>
            <person name="Culley K.M."/>
            <person name="Dhami P."/>
            <person name="Davies J."/>
            <person name="Dunn M."/>
            <person name="Earthrowl M.E."/>
            <person name="Ellington A.E."/>
            <person name="Evans K.A."/>
            <person name="Faulkner L."/>
            <person name="Francis M.D."/>
            <person name="Frankish A."/>
            <person name="Frankland J."/>
            <person name="French L."/>
            <person name="Garner P."/>
            <person name="Garnett J."/>
            <person name="Ghori M.J."/>
            <person name="Gilby L.M."/>
            <person name="Gillson C.J."/>
            <person name="Glithero R.J."/>
            <person name="Grafham D.V."/>
            <person name="Grant M."/>
            <person name="Gribble S."/>
            <person name="Griffiths C."/>
            <person name="Griffiths M.N.D."/>
            <person name="Hall R."/>
            <person name="Halls K.S."/>
            <person name="Hammond S."/>
            <person name="Harley J.L."/>
            <person name="Hart E.A."/>
            <person name="Heath P.D."/>
            <person name="Heathcott R."/>
            <person name="Holmes S.J."/>
            <person name="Howden P.J."/>
            <person name="Howe K.L."/>
            <person name="Howell G.R."/>
            <person name="Huckle E."/>
            <person name="Humphray S.J."/>
            <person name="Humphries M.D."/>
            <person name="Hunt A.R."/>
            <person name="Johnson C.M."/>
            <person name="Joy A.A."/>
            <person name="Kay M."/>
            <person name="Keenan S.J."/>
            <person name="Kimberley A.M."/>
            <person name="King A."/>
            <person name="Laird G.K."/>
            <person name="Langford C."/>
            <person name="Lawlor S."/>
            <person name="Leongamornlert D.A."/>
            <person name="Leversha M."/>
            <person name="Lloyd C.R."/>
            <person name="Lloyd D.M."/>
            <person name="Loveland J.E."/>
            <person name="Lovell J."/>
            <person name="Martin S."/>
            <person name="Mashreghi-Mohammadi M."/>
            <person name="Maslen G.L."/>
            <person name="Matthews L."/>
            <person name="McCann O.T."/>
            <person name="McLaren S.J."/>
            <person name="McLay K."/>
            <person name="McMurray A."/>
            <person name="Moore M.J.F."/>
            <person name="Mullikin J.C."/>
            <person name="Niblett D."/>
            <person name="Nickerson T."/>
            <person name="Novik K.L."/>
            <person name="Oliver K."/>
            <person name="Overton-Larty E.K."/>
            <person name="Parker A."/>
            <person name="Patel R."/>
            <person name="Pearce A.V."/>
            <person name="Peck A.I."/>
            <person name="Phillimore B.J.C.T."/>
            <person name="Phillips S."/>
            <person name="Plumb R.W."/>
            <person name="Porter K.M."/>
            <person name="Ramsey Y."/>
            <person name="Ranby S.A."/>
            <person name="Rice C.M."/>
            <person name="Ross M.T."/>
            <person name="Searle S.M."/>
            <person name="Sehra H.K."/>
            <person name="Sheridan E."/>
            <person name="Skuce C.D."/>
            <person name="Smith S."/>
            <person name="Smith M."/>
            <person name="Spraggon L."/>
            <person name="Squares S.L."/>
            <person name="Steward C.A."/>
            <person name="Sycamore N."/>
            <person name="Tamlyn-Hall G."/>
            <person name="Tester J."/>
            <person name="Theaker A.J."/>
            <person name="Thomas D.W."/>
            <person name="Thorpe A."/>
            <person name="Tracey A."/>
            <person name="Tromans A."/>
            <person name="Tubby B."/>
            <person name="Wall M."/>
            <person name="Wallis J.M."/>
            <person name="West A.P."/>
            <person name="White S.S."/>
            <person name="Whitehead S.L."/>
            <person name="Whittaker H."/>
            <person name="Wild A."/>
            <person name="Willey D.J."/>
            <person name="Wilmer T.E."/>
            <person name="Wood J.M."/>
            <person name="Wray P.W."/>
            <person name="Wyatt J.C."/>
            <person name="Young L."/>
            <person name="Younger R.M."/>
            <person name="Bentley D.R."/>
            <person name="Coulson A."/>
            <person name="Durbin R.M."/>
            <person name="Hubbard T."/>
            <person name="Sulston J.E."/>
            <person name="Dunham I."/>
            <person name="Rogers J."/>
            <person name="Beck S."/>
        </authorList>
    </citation>
    <scope>NUCLEOTIDE SEQUENCE [LARGE SCALE GENOMIC DNA]</scope>
</reference>
<reference key="7">
    <citation type="submission" date="2005-09" db="EMBL/GenBank/DDBJ databases">
        <authorList>
            <person name="Mural R.J."/>
            <person name="Istrail S."/>
            <person name="Sutton G.G."/>
            <person name="Florea L."/>
            <person name="Halpern A.L."/>
            <person name="Mobarry C.M."/>
            <person name="Lippert R."/>
            <person name="Walenz B."/>
            <person name="Shatkay H."/>
            <person name="Dew I."/>
            <person name="Miller J.R."/>
            <person name="Flanigan M.J."/>
            <person name="Edwards N.J."/>
            <person name="Bolanos R."/>
            <person name="Fasulo D."/>
            <person name="Halldorsson B.V."/>
            <person name="Hannenhalli S."/>
            <person name="Turner R."/>
            <person name="Yooseph S."/>
            <person name="Lu F."/>
            <person name="Nusskern D.R."/>
            <person name="Shue B.C."/>
            <person name="Zheng X.H."/>
            <person name="Zhong F."/>
            <person name="Delcher A.L."/>
            <person name="Huson D.H."/>
            <person name="Kravitz S.A."/>
            <person name="Mouchard L."/>
            <person name="Reinert K."/>
            <person name="Remington K.A."/>
            <person name="Clark A.G."/>
            <person name="Waterman M.S."/>
            <person name="Eichler E.E."/>
            <person name="Adams M.D."/>
            <person name="Hunkapiller M.W."/>
            <person name="Myers E.W."/>
            <person name="Venter J.C."/>
        </authorList>
    </citation>
    <scope>NUCLEOTIDE SEQUENCE [LARGE SCALE GENOMIC DNA]</scope>
</reference>
<reference key="8">
    <citation type="journal article" date="2004" name="Genome Res.">
        <title>The status, quality, and expansion of the NIH full-length cDNA project: the Mammalian Gene Collection (MGC).</title>
        <authorList>
            <consortium name="The MGC Project Team"/>
        </authorList>
    </citation>
    <scope>NUCLEOTIDE SEQUENCE [LARGE SCALE MRNA] (ISOFORM 5)</scope>
    <source>
        <tissue>Testis</tissue>
    </source>
</reference>
<reference key="9">
    <citation type="submission" date="2004-03" db="EMBL/GenBank/DDBJ databases">
        <authorList>
            <person name="Zou H.Q."/>
            <person name="Chan P."/>
        </authorList>
    </citation>
    <scope>NUCLEOTIDE SEQUENCE [GENOMIC DNA] OF 312-361</scope>
</reference>
<reference key="10">
    <citation type="journal article" date="1999" name="Ann. Neurol.">
        <title>Immunohistochemical and subcellular localization of Parkin protein: absence of protein in autosomal recessive juvenile parkinsonism patients.</title>
        <authorList>
            <person name="Shimura H."/>
            <person name="Hattori N."/>
            <person name="Kubo S."/>
            <person name="Yoshikawa M."/>
            <person name="Kitada T."/>
            <person name="Matsumine H."/>
            <person name="Asakawa S."/>
            <person name="Minoshima S."/>
            <person name="Yamamura Y."/>
            <person name="Shimizu N."/>
            <person name="Mizuno Y."/>
        </authorList>
    </citation>
    <scope>SUBCELLULAR LOCATION</scope>
</reference>
<reference key="11">
    <citation type="journal article" date="2000" name="J. Biol. Chem.">
        <title>Parkin suppresses unfolded protein stress-induced cell death through its E3 ubiquitin-protein ligase activity.</title>
        <authorList>
            <person name="Imai Y."/>
            <person name="Soda M."/>
            <person name="Takahashi R."/>
        </authorList>
    </citation>
    <scope>FUNCTION IN UBIQUITINATION</scope>
</reference>
<reference key="12">
    <citation type="journal article" date="2000" name="Nat. Genet.">
        <title>Familial Parkinson disease gene product, parkin, is a ubiquitin-protein ligase.</title>
        <authorList>
            <person name="Shimura H."/>
            <person name="Hattori N."/>
            <person name="Kubo S."/>
            <person name="Mizuno Y."/>
            <person name="Asakawa S."/>
            <person name="Minoshima S."/>
            <person name="Shimizu N."/>
            <person name="Iwai K."/>
            <person name="Chiba T."/>
            <person name="Tanaka K."/>
            <person name="Suzuki T."/>
        </authorList>
    </citation>
    <scope>FUNCTION</scope>
    <scope>CHARACTERIZATION OF VARIANTS PARK2 PRO-42 AND ARG-240</scope>
</reference>
<reference key="13">
    <citation type="journal article" date="2000" name="Proc. Natl. Acad. Sci. U.S.A.">
        <title>Parkin functions as an E2-dependent ubiquitin-protein ligase and promotes the degradation of the synaptic vesicle-associated protein, CDCrel-1.</title>
        <authorList>
            <person name="Zhang Y."/>
            <person name="Gao J."/>
            <person name="Chung K.K.K."/>
            <person name="Huang H."/>
            <person name="Dawson V.L."/>
            <person name="Dawson T.M."/>
        </authorList>
    </citation>
    <scope>INTERACTION WITH UBE2L6 AND SEPTIN5</scope>
    <scope>UBIQUITINATION OF SEPTIN5</scope>
</reference>
<reference key="14">
    <citation type="journal article" date="2001" name="Cell">
        <title>An unfolded putative transmembrane polypeptide, which can lead to endoplasmic reticulum stress, is a substrate of Parkin.</title>
        <authorList>
            <person name="Imai Y."/>
            <person name="Soda M."/>
            <person name="Inoue H."/>
            <person name="Hattori N."/>
            <person name="Mizuno Y."/>
            <person name="Takahashi R."/>
        </authorList>
    </citation>
    <scope>UBIQUITINATION OF GPR37</scope>
</reference>
<reference key="15">
    <citation type="journal article" date="2001" name="Nat. Med.">
        <title>Parkin ubiquitinates the alpha-synuclein-interacting protein, synphilin-1: implications for Lewy-body formation in Parkinson disease.</title>
        <authorList>
            <person name="Chung K.K.K."/>
            <person name="Zhang Y."/>
            <person name="Lim K.L."/>
            <person name="Tanaka Y."/>
            <person name="Huang H."/>
            <person name="Gao J."/>
            <person name="Ross C.A."/>
            <person name="Dawson V.L."/>
            <person name="Dawson T.M."/>
        </authorList>
    </citation>
    <scope>FUNCTION</scope>
    <scope>INTERACTION WITH SNCAIP</scope>
    <scope>CHARACTERIZATION OF VARIANTS PARK2 ARG-240; CYS-256; TRP-275 AND ASN-415</scope>
    <scope>MUTAGENESIS OF CYS-337; CYS-421 AND CYS-431</scope>
</reference>
<reference key="16">
    <citation type="journal article" date="2001" name="Science">
        <title>Ubiquitination of a new form of alpha-synuclein by parkin from human brain: implications for Parkinson's disease.</title>
        <authorList>
            <person name="Shimura H."/>
            <person name="Schlossmacher M.G."/>
            <person name="Hattori N."/>
            <person name="Frosch M.P."/>
            <person name="Trockenbacher A."/>
            <person name="Schneider R."/>
            <person name="Mizuno Y."/>
            <person name="Kosik K.S."/>
            <person name="Selkoe D.J."/>
        </authorList>
    </citation>
    <scope>FUNCTION</scope>
    <scope>SUBCELLULAR LOCATION</scope>
    <scope>CHARACTERIZATION OF VARIANTS PARK2 PRO-42 AND ARG-240</scope>
</reference>
<reference key="17">
    <citation type="journal article" date="2002" name="Mol. Biol. Evol.">
        <title>Comparative genomics of the RBR family, including the Parkinson's disease-related gene parkin and the genes of the ariadne subfamily.</title>
        <authorList>
            <person name="Marin I."/>
            <person name="Ferrus A."/>
        </authorList>
    </citation>
    <scope>PRESENCE OF ATYPICAL RING FINGER DOMAINS</scope>
</reference>
<reference key="18">
    <citation type="journal article" date="2002" name="Mol. Cell">
        <title>CHIP is associated with Parkin, a gene responsible for familial Parkinson's disease, and enhances its ubiquitin ligase activity.</title>
        <authorList>
            <person name="Imai Y."/>
            <person name="Soda M."/>
            <person name="Hatakeyama S."/>
            <person name="Akagi T."/>
            <person name="Hashikawa T."/>
            <person name="Nakayama K."/>
            <person name="Takahashi R."/>
        </authorList>
    </citation>
    <scope>FUNCTION</scope>
    <scope>INTERACTION WITH STUB1; HSP70 AND GPR37</scope>
    <scope>UBIQUITINATION OF STUB1</scope>
</reference>
<reference key="19">
    <citation type="journal article" date="2003" name="Hum. Mol. Genet.">
        <title>The autosomal recessive juvenile Parkinson disease gene product, parkin, interacts with and ubiquitinates synaptotagmin XI.</title>
        <authorList>
            <person name="Huynh D.P."/>
            <person name="Scoles D.R."/>
            <person name="Nguyen D."/>
            <person name="Pulst S.M."/>
        </authorList>
    </citation>
    <scope>INTERACTION WITH SYT11</scope>
    <scope>SUBCELLULAR LOCATION</scope>
    <scope>CHARACTERIZATION OF VARIANTS PARK2 GLY-289 AND ARG-418</scope>
</reference>
<reference key="20">
    <citation type="journal article" date="2003" name="J. Biol. Chem.">
        <title>A product of the human gene adjacent to parkin is a component of Lewy bodies and suppresses Pael receptor-induced cell death.</title>
        <authorList>
            <person name="Imai Y."/>
            <person name="Soda M."/>
            <person name="Murakami T."/>
            <person name="Shoji M."/>
            <person name="Abe K."/>
            <person name="Takahashi R."/>
        </authorList>
    </citation>
    <scope>INTERACTION WITH PACRG</scope>
</reference>
<reference key="21">
    <citation type="journal article" date="2003" name="Neuron">
        <title>Parkin is a component of an SCF-like ubiquitin ligase complex and protects postmitotic neurons from kainate excitotoxicity.</title>
        <authorList>
            <person name="Staropoli J.F."/>
            <person name="McDermott C."/>
            <person name="Martinat C."/>
            <person name="Schulman B."/>
            <person name="Demireva E."/>
            <person name="Abeliovich A."/>
        </authorList>
    </citation>
    <scope>FUNCTION</scope>
    <scope>INTERACTION WITH FBXW7 AND CUL1</scope>
    <scope>TISSUE SPECIFICITY</scope>
    <scope>UBIQUITINATION OF CYCLIN E</scope>
</reference>
<reference key="22">
    <citation type="journal article" date="2003" name="Oncogene">
        <title>Alterations in the common fragile site gene Parkin in ovarian and other cancers.</title>
        <authorList>
            <person name="Denison S.R."/>
            <person name="Wang F."/>
            <person name="Becker N.A."/>
            <person name="Schuele B."/>
            <person name="Kock N."/>
            <person name="Phillips L.A."/>
            <person name="Klein C."/>
            <person name="Smith D.I."/>
        </authorList>
    </citation>
    <scope>INVOLVEMENT IN CANCER</scope>
    <scope>TISSUE SPECIFICITY</scope>
</reference>
<reference key="23">
    <citation type="journal article" date="2003" name="Proc. Natl. Acad. Sci. U.S.A.">
        <title>Parkin, a gene implicated in autosomal recessive juvenile parkinsonism, is a candidate tumor suppressor gene on chromosome 6q25-q27.</title>
        <authorList>
            <person name="Cesari R."/>
            <person name="Martin E.S."/>
            <person name="Calin G.A."/>
            <person name="Pentimalli F."/>
            <person name="Bichi R."/>
            <person name="McAdams H."/>
            <person name="Trapasso F."/>
            <person name="Drusco A."/>
            <person name="Shimizu M."/>
            <person name="Masciullo V."/>
            <person name="D'Andrilli G."/>
            <person name="Scambia G."/>
            <person name="Picchio M.C."/>
            <person name="Alder H."/>
            <person name="Godwin A.K."/>
            <person name="Croce C.M."/>
        </authorList>
    </citation>
    <scope>FUNCTION</scope>
    <scope>INVOLVEMENT IN CANCER</scope>
    <scope>TISSUE SPECIFICITY</scope>
</reference>
<reference key="24">
    <citation type="journal article" date="2004" name="EMBO Rep.">
        <title>How does parkin ligate ubiquitin to Parkinson's disease?</title>
        <authorList>
            <person name="Kahle P.J."/>
            <person name="Haass C."/>
        </authorList>
    </citation>
    <scope>REVIEW</scope>
</reference>
<reference key="25">
    <citation type="journal article" date="2004" name="Science">
        <title>S-nitrosylation of parkin regulates ubiquitination and compromises parkin's protective function.</title>
        <authorList>
            <person name="Chung K.K.K."/>
            <person name="Thomas B."/>
            <person name="Li X."/>
            <person name="Pletnikova O."/>
            <person name="Troncoso J.C."/>
            <person name="Marsh L."/>
            <person name="Dawson V.L."/>
            <person name="Dawson T.M."/>
        </authorList>
    </citation>
    <scope>FUNCTION</scope>
    <scope>UBIQUITINATION</scope>
    <scope>S-NITROSYLATION</scope>
</reference>
<reference key="26">
    <citation type="journal article" date="2005" name="FEBS Lett.">
        <title>Parkin interacts with the proteasome subunit alpha4.</title>
        <authorList>
            <person name="Dachsel J.C."/>
            <person name="Lucking C.B."/>
            <person name="Deeg S."/>
            <person name="Schultz E."/>
            <person name="Lalowski M."/>
            <person name="Casademunt E."/>
            <person name="Corti O."/>
            <person name="Hampe C."/>
            <person name="Patenge N."/>
            <person name="Vaupel K."/>
            <person name="Yamamoto A."/>
            <person name="Dichgans M."/>
            <person name="Brice A."/>
            <person name="Wanker E.E."/>
            <person name="Kahle P.J."/>
            <person name="Gasser T."/>
        </authorList>
    </citation>
    <scope>INTERACTION WITH PSMA7</scope>
</reference>
<reference key="27">
    <citation type="journal article" date="2005" name="J. Neurosci.">
        <title>Parkin mediates nonclassical, proteasomal-independent ubiquitination of synphilin-1: implications for Lewy body formation.</title>
        <authorList>
            <person name="Lim K.L."/>
            <person name="Chew K.C."/>
            <person name="Tan J.M."/>
            <person name="Wang C."/>
            <person name="Chung K.K."/>
            <person name="Zhang Y."/>
            <person name="Tanaka Y."/>
            <person name="Smith W."/>
            <person name="Engelender S."/>
            <person name="Ross C.A."/>
            <person name="Dawson V.L."/>
            <person name="Dawson T.M."/>
        </authorList>
    </citation>
    <scope>FUNCTION</scope>
    <scope>INTERACTION WITH SNCAIP</scope>
</reference>
<reference key="28">
    <citation type="journal article" date="2005" name="J. Neurosci.">
        <title>Accumulation of the authentic parkin substrate aminoacyl-tRNA synthetase cofactor, p38/JTV-1, leads to catecholaminergic cell death.</title>
        <authorList>
            <person name="Ko H.S."/>
            <person name="von Coelln R."/>
            <person name="Sriram S.R."/>
            <person name="Kim S.W."/>
            <person name="Chung K.K.K."/>
            <person name="Pletnikova O."/>
            <person name="Troncoso J."/>
            <person name="Johnson B."/>
            <person name="Saffary R."/>
            <person name="Goh E.L."/>
            <person name="Song H."/>
            <person name="Park B.-J."/>
            <person name="Kim M.J."/>
            <person name="Kim S."/>
            <person name="Dawson V.L."/>
            <person name="Dawson T.M."/>
        </authorList>
    </citation>
    <scope>FUNCTION</scope>
    <scope>INTERACTION WITH AIMP2</scope>
</reference>
<reference key="29">
    <citation type="journal article" date="2005" name="Proc. Natl. Acad. Sci. U.S.A.">
        <title>Leucine-rich repeat kinase 2 (LRRK2) interacts with parkin and mutant LRRK2 induces neuronal degeneration.</title>
        <authorList>
            <person name="Smith W.W."/>
            <person name="Pei Z."/>
            <person name="Jiang H."/>
            <person name="Moore D.J."/>
            <person name="Liang Y."/>
            <person name="West A.B."/>
            <person name="Dawson V.L."/>
            <person name="Dawson T.M."/>
            <person name="Ross C.A."/>
        </authorList>
    </citation>
    <scope>INTERACTION WITH LRRK2</scope>
</reference>
<reference key="30">
    <citation type="journal article" date="2006" name="J. Biol. Chem.">
        <title>Parkin ubiquitinates and promotes the degradation of RanBP2.</title>
        <authorList>
            <person name="Um J.W."/>
            <person name="Min D.S."/>
            <person name="Rhim H."/>
            <person name="Kim J."/>
            <person name="Paik S.R."/>
            <person name="Chung K.C."/>
        </authorList>
    </citation>
    <scope>INTERACTION WITH RANBP2</scope>
</reference>
<reference key="31">
    <citation type="journal article" date="2006" name="J. Neurosci. Res.">
        <title>Functional modulation of parkin through physical interaction with SUMO-1.</title>
        <authorList>
            <person name="Um J.W."/>
            <person name="Chung K.C."/>
        </authorList>
    </citation>
    <scope>INTERACTION WITH SUMO1</scope>
    <scope>SUBCELLULAR LOCATION</scope>
</reference>
<reference key="32">
    <citation type="journal article" date="2007" name="J. Cell Biol.">
        <title>Parkin-mediated K63-linked polyubiquitination targets misfolded DJ-1 to aggresomes via binding to HDAC6.</title>
        <authorList>
            <person name="Olzmann J.A."/>
            <person name="Li L."/>
            <person name="Chudaev M.V."/>
            <person name="Chen J."/>
            <person name="Perez F.A."/>
            <person name="Palmiter R.D."/>
            <person name="Chin L.S."/>
        </authorList>
    </citation>
    <scope>FUNCTION</scope>
    <scope>SUBCELLULAR LOCATION</scope>
</reference>
<reference key="33">
    <citation type="journal article" date="2008" name="Biochem. Biophys. Res. Commun.">
        <title>PINK1 controls mitochondrial localization of Parkin through direct phosphorylation.</title>
        <authorList>
            <person name="Kim Y."/>
            <person name="Park J."/>
            <person name="Kim S."/>
            <person name="Song S."/>
            <person name="Kwon S.K."/>
            <person name="Lee S.H."/>
            <person name="Kitada T."/>
            <person name="Kim J.M."/>
            <person name="Chung J."/>
        </authorList>
    </citation>
    <scope>FUNCTION</scope>
    <scope>SUBCELLULAR LOCATION</scope>
    <scope>PHOSPHORYLATION AT THR-175 AND THR-217</scope>
    <scope>MUTAGENESIS OF THR-175; THR-217 AND CYS-238</scope>
</reference>
<reference key="34">
    <citation type="journal article" date="2008" name="J. Cell Biol.">
        <title>Parkin is recruited selectively to impaired mitochondria and promotes their autophagy.</title>
        <authorList>
            <person name="Narendra D."/>
            <person name="Tanaka A."/>
            <person name="Suen D.F."/>
            <person name="Youle R.J."/>
        </authorList>
    </citation>
    <scope>FUNCTION IN MITOCHONDRIAL AUTOPHAGY</scope>
    <scope>SUBCELLULAR LOCATION</scope>
</reference>
<reference key="35">
    <citation type="journal article" date="2008" name="Neurosci. Lett.">
        <title>Parkin is ubiquitinated by Nrdp1 and abrogates Nrdp1-induced oxidative stress.</title>
        <authorList>
            <person name="Yu F."/>
            <person name="Zhou J."/>
        </authorList>
    </citation>
    <scope>INTERACTION WITH RNF41</scope>
    <scope>UBIQUITINATION</scope>
    <scope>MUTAGENESIS OF CYS-421</scope>
    <scope>FUNCTION</scope>
</reference>
<reference key="36">
    <citation type="journal article" date="2009" name="J. Clin. Invest.">
        <title>Parkin, PINK1, and DJ-1 form a ubiquitin E3 ligase complex promoting unfolded protein degradation.</title>
        <authorList>
            <person name="Xiong H."/>
            <person name="Wang D."/>
            <person name="Chen L."/>
            <person name="Choo Y.S."/>
            <person name="Ma H."/>
            <person name="Tang C."/>
            <person name="Xia K."/>
            <person name="Jiang W."/>
            <person name="Ronai Z."/>
            <person name="Zhuang X."/>
            <person name="Zhang Z."/>
        </authorList>
    </citation>
    <scope>FUNCTION</scope>
    <scope>COMPONENT OF A COMPLEX COMPOSED OF PRKN; PARK7 AND PINK1</scope>
    <scope>SUBCELLULAR LOCATION</scope>
    <scope>UBIQUITINATION</scope>
    <scope>CHARACTERIZATION OF VARIANT PARK2 PRO-42</scope>
</reference>
<reference key="37">
    <citation type="journal article" date="2009" name="Nat. Cell Biol.">
        <title>Transcriptional repression of p53 by parkin and impairment by mutations associated with autosomal recessive juvenile Parkinson's disease.</title>
        <authorList>
            <person name="da Costa C.A."/>
            <person name="Sunyach C."/>
            <person name="Giaime E."/>
            <person name="West A."/>
            <person name="Corti O."/>
            <person name="Brice A."/>
            <person name="Safe S."/>
            <person name="Abou-Sleiman P.M."/>
            <person name="Wood N.W."/>
            <person name="Takahashi H."/>
            <person name="Goldberg M.S."/>
            <person name="Shen J."/>
            <person name="Checler F."/>
        </authorList>
    </citation>
    <scope>FUNCTION IN PROTECTION OF APOPTOSIS</scope>
    <scope>CHARACTERIZATION OF VARIANTS PARK2 ASN-161; CYS-256; TRP-275; ARG-418 AND ARG-441</scope>
    <scope>DOMAIN</scope>
</reference>
<reference key="38">
    <citation type="journal article" date="2010" name="Autophagy">
        <title>The PINK1/Parkin-mediated mitophagy is compromised by PD-associated mutations.</title>
        <authorList>
            <person name="Geisler S."/>
            <person name="Holmstrom K.M."/>
            <person name="Treis A."/>
            <person name="Skujat D."/>
            <person name="Weber S.S."/>
            <person name="Fiesel F.C."/>
            <person name="Kahle P.J."/>
            <person name="Springer W."/>
        </authorList>
    </citation>
    <scope>INTERACTION WITH PINK1</scope>
</reference>
<reference key="39">
    <citation type="journal article" date="2010" name="J. Biol. Chem.">
        <title>Parkin mono-ubiquitinates Bcl-2 and regulates autophagy.</title>
        <authorList>
            <person name="Chen D."/>
            <person name="Gao F."/>
            <person name="Li B."/>
            <person name="Wang H."/>
            <person name="Xu Y."/>
            <person name="Zhu C."/>
            <person name="Wang G."/>
        </authorList>
    </citation>
    <scope>FUNCTION</scope>
    <scope>INTERACTION WITH BCL2</scope>
    <scope>SUBCELLULAR LOCATION</scope>
    <scope>CHARACTERIZATION OF VARIANTS PARK2 ASN-161; ARG-240; PHE-431 AND LEU-437</scope>
</reference>
<reference key="40">
    <citation type="journal article" date="2010" name="Proc. Natl. Acad. Sci. U.S.A.">
        <title>PINK1-dependent recruitment of Parkin to mitochondria in mitophagy.</title>
        <authorList>
            <person name="Vives-Bauza C."/>
            <person name="Zhou C."/>
            <person name="Huang Y."/>
            <person name="Cui M."/>
            <person name="de Vries R.L."/>
            <person name="Kim J."/>
            <person name="May J."/>
            <person name="Tocilescu M.A."/>
            <person name="Liu W."/>
            <person name="Ko H.S."/>
            <person name="Magrane J."/>
            <person name="Moore D.J."/>
            <person name="Dawson V.L."/>
            <person name="Grailhe R."/>
            <person name="Dawson T.M."/>
            <person name="Li C."/>
            <person name="Tieu K."/>
            <person name="Przedborski S."/>
        </authorList>
    </citation>
    <scope>FUNCTION IN MITOCHONDRIAL AUTOPHAGY</scope>
    <scope>SUBCELLULAR LOCATION</scope>
    <scope>INTERACTION WITH PINK1</scope>
    <scope>CHARACTERIZATION OF VARIANTS PARK ASN-415 AND ASP-430</scope>
</reference>
<reference key="41">
    <citation type="journal article" date="2011" name="Cell">
        <title>PARIS (ZNF746) repression of PGC-1alpha contributes to neurodegeneration in Parkinson's disease.</title>
        <authorList>
            <person name="Shin J.H."/>
            <person name="Ko H.S."/>
            <person name="Kang H."/>
            <person name="Lee Y."/>
            <person name="Lee Y.I."/>
            <person name="Pletinkova O."/>
            <person name="Troconso J.C."/>
            <person name="Dawson V.L."/>
            <person name="Dawson T.M."/>
        </authorList>
    </citation>
    <scope>FUNCTION</scope>
    <scope>INTERACTION WITH ZNF746</scope>
    <scope>CHARACTERIZATION OF VARIANTS PARK2 TRP-275; ASP-430 AND PHE-431</scope>
</reference>
<reference key="42">
    <citation type="journal article" date="2011" name="Hum. Mol. Genet.">
        <title>Molecular chaperone-mediated rescue of mitophagy by a Parkin RING1 domain mutant.</title>
        <authorList>
            <person name="Rose J.M."/>
            <person name="Novoselov S.S."/>
            <person name="Robinson P.A."/>
            <person name="Cheetham M.E."/>
        </authorList>
    </citation>
    <scope>CHARACTERIZATION OF VARIANTS PARK2 PRO-42 AND GLY-289</scope>
</reference>
<reference key="43">
    <citation type="journal article" date="2011" name="J. Neurosci.">
        <title>Parkin interacts with Ambra1 to induce mitophagy.</title>
        <authorList>
            <person name="Van Humbeeck C."/>
            <person name="Cornelissen T."/>
            <person name="Hofkens H."/>
            <person name="Mandemakers W."/>
            <person name="Gevaert K."/>
            <person name="De Strooper B."/>
            <person name="Vandenberghe W."/>
        </authorList>
    </citation>
    <scope>FUNCTION</scope>
</reference>
<reference key="44">
    <citation type="journal article" date="2011" name="Nature">
        <title>UBCH7 reactivity profile reveals parkin and HHARI to be RING/HECT hybrids.</title>
        <authorList>
            <person name="Wenzel D.M."/>
            <person name="Lissounov A."/>
            <person name="Brzovic P.S."/>
            <person name="Klevit R.E."/>
        </authorList>
    </citation>
    <scope>FUNCTION</scope>
    <scope>REACTION MECHANISM</scope>
    <scope>INTERACTION WITH UBE2L3</scope>
</reference>
<reference key="45">
    <citation type="journal article" date="2012" name="Hum. Mol. Genet.">
        <title>Parkin interacts with Klokin1 for mitochondrial import and maintenance of membrane potential.</title>
        <authorList>
            <person name="Kuroda Y."/>
            <person name="Sako W."/>
            <person name="Goto S."/>
            <person name="Sawada T."/>
            <person name="Uchida D."/>
            <person name="Izumi Y."/>
            <person name="Takahashi T."/>
            <person name="Kagawa N."/>
            <person name="Matsumoto M."/>
            <person name="Matsumoto M."/>
            <person name="Takahashi R."/>
            <person name="Kaji R."/>
            <person name="Mitsui T."/>
        </authorList>
    </citation>
    <scope>FUNCTION</scope>
    <scope>INTERACTION WITH CHPF</scope>
    <scope>SUBCELLULAR LOCATION</scope>
</reference>
<reference key="46">
    <citation type="journal article" date="2012" name="PLoS Genet.">
        <title>Parkinson's disease-associated kinase PINK1 regulates Miro protein level and axonal transport of mitochondria.</title>
        <authorList>
            <person name="Liu S."/>
            <person name="Sawada T."/>
            <person name="Lee S."/>
            <person name="Yu W."/>
            <person name="Silverio G."/>
            <person name="Alapatt P."/>
            <person name="Millan I."/>
            <person name="Shen A."/>
            <person name="Saxton W."/>
            <person name="Kanao T."/>
            <person name="Takahashi R."/>
            <person name="Hattori N."/>
            <person name="Imai Y."/>
            <person name="Lu B."/>
        </authorList>
    </citation>
    <scope>FUNCTION</scope>
    <scope>CHARACTERIZATION OF VARIANTS PARK2 ASN-211 AND ASN-415</scope>
</reference>
<reference key="47">
    <citation type="journal article" date="2013" name="J. Biol. Chem.">
        <title>Parkin-catalyzed ubiquitin-ester transfer is triggered by PINK1-dependent phosphorylation.</title>
        <authorList>
            <person name="Iguchi M."/>
            <person name="Kujuro Y."/>
            <person name="Okatsu K."/>
            <person name="Koyano F."/>
            <person name="Kosako H."/>
            <person name="Kimura M."/>
            <person name="Suzuki N."/>
            <person name="Uchiyama S."/>
            <person name="Tanaka K."/>
            <person name="Matsuda N."/>
        </authorList>
    </citation>
    <scope>PHOSPHORYLATION AT SER-65</scope>
    <scope>FUNCTION</scope>
    <scope>SUBCELLULAR LOCATION</scope>
</reference>
<reference key="48">
    <citation type="journal article" date="2013" name="Mol. Cell">
        <title>Mutations in the intellectual disability gene Ube2a cause neuronal dysfunction and impair parkin-dependent mitophagy.</title>
        <authorList>
            <person name="Haddad D.M."/>
            <person name="Vilain S."/>
            <person name="Vos M."/>
            <person name="Esposito G."/>
            <person name="Matta S."/>
            <person name="Kalscheuer V.M."/>
            <person name="Craessaerts K."/>
            <person name="Leyssen M."/>
            <person name="Nascimento R.M."/>
            <person name="Vianna-Morgante A.M."/>
            <person name="De Strooper B."/>
            <person name="Van Esch H."/>
            <person name="Morais V.A."/>
            <person name="Verstreken P."/>
        </authorList>
    </citation>
    <scope>FUNCTION</scope>
</reference>
<reference key="49">
    <citation type="journal article" date="2013" name="Nat. Neurosci.">
        <title>The Parkinson's disease-linked proteins Fbxo7 and Parkin interact to mediate mitophagy.</title>
        <authorList>
            <person name="Burchell V.S."/>
            <person name="Nelson D.E."/>
            <person name="Sanchez-Martinez A."/>
            <person name="Delgado-Camprubi M."/>
            <person name="Ivatt R.M."/>
            <person name="Pogson J.H."/>
            <person name="Randle S.J."/>
            <person name="Wray S."/>
            <person name="Lewis P.A."/>
            <person name="Houlden H."/>
            <person name="Abramov A.Y."/>
            <person name="Hardy J."/>
            <person name="Wood N.W."/>
            <person name="Whitworth A.J."/>
            <person name="Laman H."/>
            <person name="Plun-Favreau H."/>
        </authorList>
    </citation>
    <scope>FUNCTION</scope>
    <scope>SUBCELLULAR LOCATION</scope>
    <scope>INTERACTION WITH FBXO7</scope>
</reference>
<reference key="50">
    <citation type="journal article" date="2013" name="Nature">
        <title>High-content genome-wide RNAi screens identify regulators of parkin upstream of mitophagy.</title>
        <authorList>
            <person name="Hasson S.A."/>
            <person name="Kane L.A."/>
            <person name="Yamano K."/>
            <person name="Huang C.H."/>
            <person name="Sliter D.A."/>
            <person name="Buehler E."/>
            <person name="Wang C."/>
            <person name="Heman-Ackah S.M."/>
            <person name="Hessa T."/>
            <person name="Guha R."/>
            <person name="Martin S.E."/>
            <person name="Youle R.J."/>
        </authorList>
    </citation>
    <scope>INTERACTION WITH BAG4; BAG5; HSPA1L; HSPA1A AND HSPA8</scope>
</reference>
<reference key="51">
    <citation type="journal article" date="2013" name="Nat. Commun.">
        <title>A molecular explanation for the recessive nature of parkin-linked Parkinson's disease.</title>
        <authorList>
            <person name="Spratt D.E."/>
            <person name="Martinez-Torres R.J."/>
            <person name="Noh Y.J."/>
            <person name="Mercier P."/>
            <person name="Manczyk N."/>
            <person name="Barber K.R."/>
            <person name="Aguirre J.D."/>
            <person name="Burchell L."/>
            <person name="Purkiss A."/>
            <person name="Walden H."/>
            <person name="Shaw G.S."/>
        </authorList>
    </citation>
    <scope>UBIQUITINATION</scope>
    <scope>MUTAGENESIS OF GLY-429</scope>
    <scope>CHARACTERIZATION OF VARIANTS PARK2 ASN-415 AND ASP-430</scope>
</reference>
<reference key="52">
    <citation type="journal article" date="2013" name="Science">
        <title>PINK1-phosphorylated mitofusin 2 is a Parkin receptor for culling damaged mitochondria.</title>
        <authorList>
            <person name="Chen Y."/>
            <person name="Dorn G.W. II"/>
        </authorList>
    </citation>
    <scope>FUNCTION IN MITOPHAGY</scope>
    <scope>INTERACTION WITH MFN2</scope>
    <scope>SUBCELLULAR LOCATION</scope>
</reference>
<reference key="53">
    <citation type="journal article" date="2014" name="Biochem. J.">
        <title>Parkin is activated by PINK1-dependent phosphorylation of ubiquitin at Ser65.</title>
        <authorList>
            <person name="Kazlauskaite A."/>
            <person name="Kondapalli C."/>
            <person name="Gourlay R."/>
            <person name="Campbell D.G."/>
            <person name="Ritorto M.S."/>
            <person name="Hofmann K."/>
            <person name="Alessi D.R."/>
            <person name="Knebel A."/>
            <person name="Trost M."/>
            <person name="Muqit M.M."/>
        </authorList>
    </citation>
    <scope>FUNCTION</scope>
    <scope>PHOSPHORYLATION AT SER-65</scope>
    <scope>UBIQUITIN-BINDING</scope>
    <scope>ACTIVITY REGULATION</scope>
    <scope>MUTAGENESIS OF SER-65</scope>
</reference>
<reference key="54">
    <citation type="journal article" date="2014" name="Elife">
        <title>MUL1 acts in parallel to the PINK1/parkin pathway in regulating mitofusin and compensates for loss of PINK1/parkin.</title>
        <authorList>
            <person name="Yun J."/>
            <person name="Puri R."/>
            <person name="Yang H."/>
            <person name="Lizzio M.A."/>
            <person name="Wu C."/>
            <person name="Sheng Z.H."/>
            <person name="Guo M."/>
        </authorList>
    </citation>
    <scope>SUBCELLULAR LOCATION</scope>
</reference>
<reference key="55">
    <citation type="journal article" date="2014" name="PLoS Genet.">
        <title>Phosphorylation of mitochondrial polyubiquitin by PINK1 promotes Parkin mitochondrial tethering.</title>
        <authorList>
            <person name="Shiba-Fukushima K."/>
            <person name="Arano T."/>
            <person name="Matsumoto G."/>
            <person name="Inoshita T."/>
            <person name="Yoshida S."/>
            <person name="Ishihama Y."/>
            <person name="Ryu K.Y."/>
            <person name="Nukina N."/>
            <person name="Hattori N."/>
            <person name="Imai Y."/>
        </authorList>
    </citation>
    <scope>FUNCTION</scope>
    <scope>PHOSPHORYLATION AT SER-65</scope>
    <scope>UBIQUITIN-BINDING</scope>
    <scope>ACTIVITY REGULATION</scope>
    <scope>MUTAGENESIS OF SER-65 AND CYS-431</scope>
</reference>
<reference key="56">
    <citation type="journal article" date="2014" name="J. Cell Biol.">
        <title>PINK1 phosphorylates ubiquitin to activate Parkin E3 ubiquitin ligase activity.</title>
        <authorList>
            <person name="Kane L.A."/>
            <person name="Lazarou M."/>
            <person name="Fogel A.I."/>
            <person name="Li Y."/>
            <person name="Yamano K."/>
            <person name="Sarraf S.A."/>
            <person name="Banerjee S."/>
            <person name="Youle R.J."/>
        </authorList>
    </citation>
    <scope>FUNCTION</scope>
    <scope>ACTIVITY REGULATION</scope>
</reference>
<reference key="57">
    <citation type="journal article" date="2014" name="Nature">
        <title>Ubiquitin is phosphorylated by PINK1 to activate parkin.</title>
        <authorList>
            <person name="Koyano F."/>
            <person name="Okatsu K."/>
            <person name="Kosako H."/>
            <person name="Tamura Y."/>
            <person name="Go E."/>
            <person name="Kimura M."/>
            <person name="Kimura Y."/>
            <person name="Tsuchiya H."/>
            <person name="Yoshihara H."/>
            <person name="Hirokawa T."/>
            <person name="Endo T."/>
            <person name="Fon E.A."/>
            <person name="Trempe J.F."/>
            <person name="Saeki Y."/>
            <person name="Tanaka K."/>
            <person name="Matsuda N."/>
        </authorList>
    </citation>
    <scope>FUNCTION</scope>
    <scope>PHOSPHORYLATION AT SER-65</scope>
    <scope>UBIQUITIN-BINDING</scope>
    <scope>ACTIVITY REGULATION</scope>
    <scope>MUTAGENESIS OF SER-65 AND TRP-403</scope>
</reference>
<reference key="58">
    <citation type="journal article" date="2014" name="Nature">
        <title>The mitochondrial deubiquitinase USP30 opposes parkin-mediated mitophagy.</title>
        <authorList>
            <person name="Bingol B."/>
            <person name="Tea J.S."/>
            <person name="Phu L."/>
            <person name="Reichelt M."/>
            <person name="Bakalarski C.E."/>
            <person name="Song Q."/>
            <person name="Foreman O."/>
            <person name="Kirkpatrick D.S."/>
            <person name="Sheng M."/>
        </authorList>
    </citation>
    <scope>FUNCTION</scope>
</reference>
<reference key="59">
    <citation type="journal article" date="2015" name="EMBO J.">
        <title>Ubiquitin Ser65 phosphorylation affects ubiquitin structure, chain assembly and hydrolysis.</title>
        <authorList>
            <person name="Wauer T."/>
            <person name="Swatek K.N."/>
            <person name="Wagstaff J.L."/>
            <person name="Gladkova C."/>
            <person name="Pruneda J.N."/>
            <person name="Michel M.A."/>
            <person name="Gersch M."/>
            <person name="Johnson C.M."/>
            <person name="Freund S.M."/>
            <person name="Komander D."/>
        </authorList>
    </citation>
    <scope>FUNCTION</scope>
    <scope>ACTIVITY REGULATION</scope>
</reference>
<reference key="60">
    <citation type="journal article" date="2015" name="Nat. Cell Biol.">
        <title>USP30 and parkin homeostatically regulate atypical ubiquitin chains on mitochondria.</title>
        <authorList>
            <person name="Cunningham C.N."/>
            <person name="Baughman J.M."/>
            <person name="Phu L."/>
            <person name="Tea J.S."/>
            <person name="Yu C."/>
            <person name="Coons M."/>
            <person name="Kirkpatrick D.S."/>
            <person name="Bingol B."/>
            <person name="Corn J.E."/>
        </authorList>
    </citation>
    <scope>FUNCTION</scope>
</reference>
<reference key="61">
    <citation type="journal article" date="2016" name="Open Biol.">
        <title>Covalent ISG15 conjugation positively regulates the ubiquitin E3 ligase activity of parkin.</title>
        <authorList>
            <person name="Im E."/>
            <person name="Yoo L."/>
            <person name="Hyun M."/>
            <person name="Shin W.H."/>
            <person name="Chung K.C."/>
        </authorList>
    </citation>
    <scope>FUNCTION</scope>
    <scope>ISGYLATION OF LYS-349 AND LYS-369</scope>
    <scope>ACTIVITY REGULATION</scope>
</reference>
<reference key="62">
    <citation type="journal article" date="2020" name="Proc. Natl. Acad. Sci. U.S.A.">
        <title>Decision between mitophagy and apoptosis by Parkin via VDAC1 ubiquitination.</title>
        <authorList>
            <person name="Ham S.J."/>
            <person name="Lee D."/>
            <person name="Yoo H."/>
            <person name="Jun K."/>
            <person name="Shin H."/>
            <person name="Chung J."/>
        </authorList>
    </citation>
    <scope>FUNCTION</scope>
    <scope>MUTAGENESIS OF CYS-431</scope>
    <scope>CHARACTERIZATION OF VARIANT PARK2 ASN-415</scope>
</reference>
<reference key="63">
    <citation type="journal article" date="2021" name="Autophagy">
        <title>Mammalian BCAS3 and C16orf70 associate with the phagophore assembly site in response to selective and non-selective autophagy.</title>
        <authorList>
            <person name="Kojima W."/>
            <person name="Yamano K."/>
            <person name="Kosako H."/>
            <person name="Imai K."/>
            <person name="Kikuchi R."/>
            <person name="Tanaka K."/>
            <person name="Matsuda N."/>
        </authorList>
    </citation>
    <scope>FUNCTION</scope>
</reference>
<reference key="64">
    <citation type="journal article" date="2003" name="EMBO Rep.">
        <title>Parkin binds the Rpn10 subunit of 26S proteasomes through its ubiquitin-like domain.</title>
        <authorList>
            <person name="Sakata E."/>
            <person name="Yamaguchi Y."/>
            <person name="Kurimoto E."/>
            <person name="Kikuchi J."/>
            <person name="Yokoyama S."/>
            <person name="Yamada S."/>
            <person name="Kawahara H."/>
            <person name="Yokosawa H."/>
            <person name="Hattori N."/>
            <person name="Mizuno Y."/>
            <person name="Tanaka K."/>
            <person name="Kato K."/>
        </authorList>
    </citation>
    <scope>STRUCTURE BY NMR OF 1-76</scope>
    <scope>INTERACTION WITH PSMD4</scope>
</reference>
<reference key="65">
    <citation type="journal article" date="2007" name="Proc. Natl. Acad. Sci. U.S.A.">
        <title>Structure of the Parkin in-between-ring domain provides insights for E3-ligase dysfunction in autosomal recessive Parkinson's disease.</title>
        <authorList>
            <person name="Beasley S.A."/>
            <person name="Hristova V.A."/>
            <person name="Shaw G.S."/>
        </authorList>
    </citation>
    <scope>STRUCTURE BY NMR OF 307-384 IN COMPLEX WITH ZINC IONS</scope>
    <scope>CHARACTERIZATION OF VARIANT PARK2 PRO-351</scope>
    <scope>MUTAGENESIS OF CYS-332 AND CYS-365</scope>
    <scope>IDENTIFICATION BY MASS SPECTROMETRY</scope>
</reference>
<reference key="66">
    <citation type="journal article" date="2013" name="EMBO J.">
        <title>Structure of the human Parkin ligase domain in an autoinhibited state.</title>
        <authorList>
            <person name="Wauer T."/>
            <person name="Komander D."/>
        </authorList>
    </citation>
    <scope>X-RAY CRYSTALLOGRAPHY (2.25 ANGSTROMS) OF 137-465</scope>
    <scope>ACTIVITY REGULATION</scope>
    <scope>MUTAGENESIS OF CYS-431; HIS-433 AND GLU-444</scope>
</reference>
<reference key="67">
    <citation type="journal article" date="2013" name="Nat. Commun.">
        <title>Structure and function of Parkin E3 ubiquitin ligase reveals aspects of RING and HECT ligases.</title>
        <authorList>
            <person name="Riley B.E."/>
            <person name="Lougheed J.C."/>
            <person name="Callaway K."/>
            <person name="Velasquez M."/>
            <person name="Brecht E."/>
            <person name="Nguyen L."/>
            <person name="Shaler T."/>
            <person name="Walker D."/>
            <person name="Yang Y."/>
            <person name="Regnstrom K."/>
            <person name="Diep L."/>
            <person name="Zhang Z."/>
            <person name="Chiou S."/>
            <person name="Bova M."/>
            <person name="Artis D.R."/>
            <person name="Yao N."/>
            <person name="Baker J."/>
            <person name="Yednock T."/>
            <person name="Johnston J.A."/>
        </authorList>
    </citation>
    <scope>X-RAY CRYSTALLOGRAPHY (1.58 ANGSTROMS) OF 137-465</scope>
    <scope>ACTIVE SITE</scope>
    <scope>CATALYTIC ACTIVITY</scope>
    <scope>ACTIVITY REGULATION</scope>
    <scope>MUTAGENESIS OF CYS-431; HIS-433 AND GLU-444</scope>
</reference>
<reference key="68">
    <citation type="journal article" date="2004" name="Hum. Mol. Genet.">
        <title>Parkin genetics: one model for Parkinson's disease.</title>
        <authorList>
            <person name="Mata I.F."/>
            <person name="Lockhart P.J."/>
            <person name="Farrer M.J."/>
        </authorList>
    </citation>
    <scope>REVIEW ON VARIANTS</scope>
</reference>
<reference key="69">
    <citation type="journal article" date="1998" name="Biochem. Biophys. Res. Commun.">
        <title>Point mutations (Thr240Arg and Gln311Stop) in the Parkin gene.</title>
        <authorList>
            <person name="Hattori N."/>
            <person name="Matsumine H."/>
            <person name="Asakawa S."/>
            <person name="Kitada T."/>
            <person name="Yoshino H."/>
            <person name="Elibol B."/>
            <person name="Brookes A.J."/>
            <person name="Yamamura Y."/>
            <person name="Kobayashi T."/>
            <person name="Wang M."/>
            <person name="Yoritaka A."/>
            <person name="Minoshima S."/>
            <person name="Shimizu N."/>
            <person name="Mizuno Y."/>
        </authorList>
    </citation>
    <scope>VARIANT PARK2 ARG-240</scope>
</reference>
<reference key="70">
    <citation type="journal article" date="1998" name="Biochem. Biophys. Res. Commun.">
        <authorList>
            <person name="Hattori N."/>
            <person name="Matsumine H."/>
            <person name="Asakawa S."/>
            <person name="Kitada T."/>
            <person name="Yoshino H."/>
            <person name="Elibol B."/>
            <person name="Brookes A.J."/>
            <person name="Yamamura Y."/>
            <person name="Kobayashi T."/>
            <person name="Wang M."/>
            <person name="Yoritaka A."/>
            <person name="Minoshima S."/>
            <person name="Shimizu N."/>
            <person name="Mizuno Y."/>
        </authorList>
    </citation>
    <scope>ERRATUM OF PUBMED:9731209</scope>
</reference>
<reference key="71">
    <citation type="journal article" date="1999" name="Hum. Mol. Genet.">
        <title>A wide variety of mutations in the parkin gene are responsible for autosomal recessive parkinsonism in Europe.</title>
        <authorList>
            <person name="Abbas N."/>
            <person name="Luecking C.B."/>
            <person name="Ricard S."/>
            <person name="Duerr A."/>
            <person name="Bonifati V."/>
            <person name="De Michele G."/>
            <person name="Bouley S."/>
            <person name="Vaughan J.R."/>
            <person name="Gasser T."/>
            <person name="Marconi R."/>
            <person name="Broussolle E."/>
            <person name="Brefel-Courbon C."/>
            <person name="Harhangi B.S."/>
            <person name="Oostra B.A."/>
            <person name="Fabrizio E."/>
            <person name="Bohme G.A."/>
            <person name="Pradier L."/>
            <person name="Wood N.W."/>
            <person name="Filla A."/>
            <person name="Meco G."/>
            <person name="Denefle P."/>
            <person name="Agid Y."/>
            <person name="Brice A."/>
        </authorList>
    </citation>
    <scope>VARIANTS PARK2 ASN-161; CYS-256; TRP-275 AND ASN-415</scope>
    <scope>VARIANTS ASN-167; LEU-380 AND ASN-394</scope>
</reference>
<reference key="72">
    <citation type="journal article" date="1999" name="NeuroReport">
        <title>Association of codon 167 Ser/Asn heterozygosity in the parkin gene with sporadic Parkinson's disease.</title>
        <authorList>
            <person name="Satoh J."/>
            <person name="Kuroda Y."/>
        </authorList>
    </citation>
    <scope>VARIANT ASN-167</scope>
</reference>
<reference key="73">
    <citation type="journal article" date="2000" name="Ann. Neurol.">
        <title>Novel mutations, pseudo-dominant inheritance, and possible familial affects in patients with autosomal recessive juvenile parkinsonism.</title>
        <authorList>
            <person name="Maruyama M."/>
            <person name="Ikeuchi T."/>
            <person name="Saito M."/>
            <person name="Ishikawa A."/>
            <person name="Yuasa T."/>
            <person name="Tanaka H."/>
            <person name="Hayashi S."/>
            <person name="Wakabayashi K."/>
            <person name="Takahashi H."/>
            <person name="Tsuji S."/>
        </authorList>
    </citation>
    <scope>VARIANT PARK2 PHE-431</scope>
</reference>
<reference key="74">
    <citation type="journal article" date="2000" name="Eur. Neurol.">
        <title>Polymorphisms of the parkin gene in sporadic Parkinson's disease among Chinese in Taiwan.</title>
        <authorList>
            <person name="Hu C.-J."/>
            <person name="Sung S.-M."/>
            <person name="Liu H.-C."/>
            <person name="Lee C.-C."/>
            <person name="Tsai C.-H."/>
            <person name="Chang J.-G."/>
        </authorList>
    </citation>
    <scope>VARIANTS ASN-167; TRP-366 AND LEU-380</scope>
</reference>
<reference key="75">
    <citation type="journal article" date="2000" name="N. Engl. J. Med.">
        <title>Association between early-onset Parkinson's disease and mutations in the parkin gene.</title>
        <authorList>
            <person name="Luecking C.B."/>
            <person name="Duerr A."/>
            <person name="Bonifati V."/>
            <person name="Vaughan J.R."/>
            <person name="De Michele G."/>
            <person name="Gasser T."/>
            <person name="Harhangi B.S."/>
            <person name="Meco G."/>
            <person name="Denefle P."/>
            <person name="Wood N.W."/>
            <person name="Agid Y."/>
            <person name="Brice A."/>
        </authorList>
    </citation>
    <scope>VARIANTS PARK2 ASN-161; ASN-211; CYS-256; TRP-275; ASN-280; GLY-289; GLU-328; ASN-415 AND ASP-430</scope>
    <scope>VARIANT CYS-334</scope>
</reference>
<reference key="76">
    <citation type="journal article" date="2001" name="Am. J. Hum. Genet.">
        <title>Origin of the mutations in the parkin gene in Europe: exon rearrangements are independent recurrent events, whereas point mutations may result from founder effects.</title>
        <authorList>
            <person name="Periquet M."/>
            <person name="Luecking C.B."/>
            <person name="Vaughan J.R."/>
            <person name="Bonifati V."/>
            <person name="Duerr A."/>
            <person name="De Michele G."/>
            <person name="Horstink M."/>
            <person name="Farrer M."/>
            <person name="Illarioshkin S.N."/>
            <person name="Pollak P."/>
            <person name="Borg M."/>
            <person name="Brefel-Courbon C."/>
            <person name="Denefle P."/>
            <person name="Meco G."/>
            <person name="Gasser T."/>
            <person name="Breteler M.M."/>
            <person name="Wood N.W."/>
            <person name="Agid Y."/>
            <person name="Brice A."/>
        </authorList>
    </citation>
    <scope>VARIANTS PARK2 ASN-211; TRP-275 AND ASP-430</scope>
</reference>
<reference key="77">
    <citation type="journal article" date="2001" name="Hum. Mol. Genet.">
        <title>The importance of gene dosage studies: mutational analysis of the parkin gene in early-onset parkinsonism.</title>
        <authorList>
            <person name="Hedrich K."/>
            <person name="Kann M."/>
            <person name="Lanthaler A.J."/>
            <person name="Dalski A."/>
            <person name="Eskelson C."/>
            <person name="Landt O."/>
            <person name="Schwinger E."/>
            <person name="Vieregge P."/>
            <person name="Lang A.E."/>
            <person name="Breakefield X.O."/>
            <person name="Ozelius L.J."/>
            <person name="Pramstaller P.P."/>
            <person name="Klein C."/>
        </authorList>
    </citation>
    <scope>VARIANT PARK2 GLU-82</scope>
</reference>
<reference key="78">
    <citation type="journal article" date="2001" name="Neurosci. Lett.">
        <title>A novel Cys212Tyr founder mutation in parkin and allelic heterogeneity of juvenile parkinsonism in a population from North West Colombia.</title>
        <authorList>
            <person name="Pineda-Trujillo N."/>
            <person name="Carvajal-Carmona L.G."/>
            <person name="Buritica O."/>
            <person name="Moreno S."/>
            <person name="Uribe C."/>
            <person name="Pineda D."/>
            <person name="Toro M."/>
            <person name="Garcia F."/>
            <person name="Arias W."/>
            <person name="Bedoya G."/>
            <person name="Lopera F."/>
            <person name="Ruiz-Linares A."/>
        </authorList>
    </citation>
    <scope>VARIANT PARK2 TYR-212</scope>
</reference>
<reference key="79">
    <citation type="journal article" date="2002" name="Am. J. Med. Genet.">
        <title>Complex relationship between parkin mutations and Parkinson disease.</title>
        <authorList>
            <consortium name="French Parkinson's disease genetics study group"/>
            <consortium name="European consortium on genetic susceptibility on Parkinson's disease"/>
            <person name="West A."/>
            <person name="Periquet M."/>
            <person name="Lincoln S."/>
            <person name="Luecking C.B."/>
            <person name="Nicholl D."/>
            <person name="Bonifati V."/>
            <person name="Rawal N."/>
            <person name="Gasser T."/>
            <person name="Lohmann E."/>
            <person name="Deleuze J.-F."/>
            <person name="Maraganore D."/>
            <person name="Levey A."/>
            <person name="Wood N.W."/>
            <person name="Duerr A."/>
            <person name="Hardy J."/>
            <person name="Brice A."/>
            <person name="Farrer M."/>
        </authorList>
    </citation>
    <scope>VARIANTS PARK2 GLU-82; CYS-256; TRP-275; GLU-328 AND ARG-441</scope>
</reference>
<reference key="80">
    <citation type="journal article" date="2002" name="Am. J. Med. Genet.">
        <authorList>
            <consortium name="French Parkinson's disease genetics study group"/>
            <consortium name="European consortium on genetic susceptibility on Parkinson's disease"/>
            <person name="West A."/>
            <person name="Periquet M."/>
            <person name="Lincoln S."/>
            <person name="Luecking C.B."/>
            <person name="Nicholl D."/>
            <person name="Bonifati V."/>
            <person name="Rawal N."/>
            <person name="Gasser T."/>
            <person name="Lohmann E."/>
            <person name="Deleuze J.-F."/>
            <person name="Maraganore D."/>
            <person name="Levey A."/>
            <person name="Wood N.W."/>
            <person name="Duerr A."/>
            <person name="Hardy J."/>
            <person name="Brice A."/>
            <person name="Farrer M.J."/>
        </authorList>
    </citation>
    <scope>ERRATUM OF PUBMED:12116199</scope>
</reference>
<reference key="81">
    <citation type="journal article" date="2002" name="Ann. Neurol.">
        <title>Role of parkin mutations in 111 community-based patients with early-onset parkinsonism.</title>
        <authorList>
            <person name="Kann M."/>
            <person name="Jacobs H."/>
            <person name="Mohrmann K."/>
            <person name="Schumacher K."/>
            <person name="Hedrich K."/>
            <person name="Garrels J."/>
            <person name="Wiegers K."/>
            <person name="Schwinger E."/>
            <person name="Pramstaller P.P."/>
            <person name="Breakefield X.O."/>
            <person name="Ozelius L.J."/>
            <person name="Vieregge P."/>
            <person name="Klein C."/>
        </authorList>
    </citation>
    <scope>VARIANTS PARK2 LEU-37 AND PRO-351</scope>
</reference>
<reference key="82">
    <citation type="journal article" date="2002" name="Arch. Neurol.">
        <title>Molecular findings in familial Parkinson disease in Spain.</title>
        <authorList>
            <person name="Hoenicka J."/>
            <person name="Vidal L."/>
            <person name="Morales B."/>
            <person name="Ampuero I."/>
            <person name="Jimenez-Jimenez F.J."/>
            <person name="Berciano J."/>
            <person name="del Ser T."/>
            <person name="Jimenez A."/>
            <person name="Ruiz P.G."/>
            <person name="de Yebenes J.G."/>
        </authorList>
    </citation>
    <scope>VARIANTS PARK2 GLU-56 AND TYR-212</scope>
</reference>
<reference key="83">
    <citation type="journal article" date="2002" name="J. Med. Genet.">
        <title>Linkage stratification and mutation analysis at the parkin locus identifies mutation positive Parkinson's disease families.</title>
        <authorList>
            <person name="Nichols W.C."/>
            <person name="Pankratz N."/>
            <person name="Uniacke S.K."/>
            <person name="Pauciulo M.W."/>
            <person name="Halter C."/>
            <person name="Rudolph A."/>
            <person name="Conneally P.M."/>
            <person name="Foroud T."/>
        </authorList>
    </citation>
    <scope>VARIANTS PARK2 ASN-211; TRP-275; ASP-430 AND LEU-437</scope>
</reference>
<reference key="84">
    <citation type="journal article" date="2002" name="J. Neurol. Neurosurg. Psych.">
        <title>Relative high frequency of the c.255delA parkin gene mutation in Spanish patients with autosomal recessive parkinsonism.</title>
        <authorList>
            <person name="Munoz E."/>
            <person name="Tolosa E."/>
            <person name="Pastor P."/>
            <person name="Marti M.J."/>
            <person name="Valldeoriola F."/>
            <person name="Campdelacreu J."/>
            <person name="Oliva R."/>
        </authorList>
    </citation>
    <scope>VARIANT PARK2 MET-15</scope>
    <scope>VARIANTS LEU-380 AND ASN-394</scope>
</reference>
<reference key="85">
    <citation type="journal article" date="2002" name="Neurology">
        <title>Evaluation of 50 probands with early-onset Parkinson's disease for parkin mutations.</title>
        <authorList>
            <person name="Hedrich K."/>
            <person name="Marder K."/>
            <person name="Harris J."/>
            <person name="Kann M."/>
            <person name="Lynch T."/>
            <person name="Meija-Santana H."/>
            <person name="Pramstaller P.P."/>
            <person name="Schwinger E."/>
            <person name="Bressman S.B."/>
            <person name="Fahn S."/>
            <person name="Klein C."/>
        </authorList>
    </citation>
    <scope>VARIANTS PARK2 PRO-42; LEU-192; CYS-256; TRP-275; ASP-430 AND LEU-437</scope>
</reference>
<reference key="86">
    <citation type="journal article" date="2002" name="Zhonghua Yi Xue Yi Chuan Xue Za Zhi">
        <title>A new point mutation on exon 2 of parkin gene in Parkinson's disease.</title>
        <authorList>
            <person name="Xu Y."/>
            <person name="Liu Z."/>
            <person name="Wang Y."/>
            <person name="Tao E."/>
            <person name="Chen G."/>
            <person name="Chen B."/>
        </authorList>
    </citation>
    <scope>VARIANT PARK2 PRO-46</scope>
</reference>
<reference key="87">
    <citation type="journal article" date="2003" name="Ann. Neurol.">
        <title>Parkin mutations and susceptibility alleles in late-onset Parkinson's disease.</title>
        <authorList>
            <person name="Oliveira S.A."/>
            <person name="Scott W.K."/>
            <person name="Martin E.R."/>
            <person name="Nance M.A."/>
            <person name="Watts R.L."/>
            <person name="Hubble J.P."/>
            <person name="Koller W.C."/>
            <person name="Pahwa R."/>
            <person name="Stern M.B."/>
            <person name="Hiner B.C."/>
            <person name="Ondo W.G."/>
            <person name="Allen F.H. Jr."/>
            <person name="Scott B.L."/>
            <person name="Goetz C.G."/>
            <person name="Small G.W."/>
            <person name="Mastaglia F."/>
            <person name="Stajich J.M."/>
            <person name="Zhang F."/>
            <person name="Booze M.W."/>
            <person name="Winn M.P."/>
            <person name="Middleton L.T."/>
            <person name="Haines J.L."/>
            <person name="Pericak-Vance M.A."/>
            <person name="Vance J.M."/>
        </authorList>
    </citation>
    <scope>VARIANTS PARK2 GLN-33; GLU-82; ASP-430 AND LEU-437</scope>
    <scope>VARIANTS PARK TYR-253; CYS-256; TRP-275 AND ASN-280</scope>
    <scope>VARIANTS LEU-380 AND ASN-394</scope>
</reference>
<reference key="88">
    <citation type="journal article" date="2003" name="Neurology">
        <title>Heterozygosity for a mutation in the parkin gene leads to later onset Parkinson disease.</title>
        <authorList>
            <person name="Foroud T."/>
            <person name="Uniacke S.K."/>
            <person name="Liu L."/>
            <person name="Pankratz N."/>
            <person name="Rudolph A."/>
            <person name="Halter C."/>
            <person name="Shults C."/>
            <person name="Marder K."/>
            <person name="Conneally P.M."/>
            <person name="Nichols W.C."/>
        </authorList>
    </citation>
    <scope>VARIANTS PARK2 VAL-192; ASN-211; MET-240 AND LEU-437</scope>
    <scope>VARIANT ASN-167</scope>
    <scope>INVOLVEMENT IN LATE-ONSET PARK</scope>
</reference>
<reference key="89">
    <citation type="journal article" date="2003" name="Parkinsonism Relat. Disord.">
        <title>Parkin mutations are rare in patients with young-onset parkinsonism in a US population.</title>
        <authorList>
            <person name="Chen R."/>
            <person name="Gosavi N.S."/>
            <person name="Langston J.W."/>
            <person name="Chan P."/>
        </authorList>
    </citation>
    <scope>VARIANTS HIS-100; SER-271 AND SER-339</scope>
</reference>
<reference key="90">
    <citation type="journal article" date="2005" name="Mov. Disord.">
        <title>Novel parkin mutations detected in patients with early-onset Parkinson's disease.</title>
        <authorList>
            <consortium name="Italian Parkinson Genetics Network"/>
            <person name="Bertoli-Avella A.M."/>
            <person name="Giroud-Benitez J.L."/>
            <person name="Akyol A."/>
            <person name="Barbosa E."/>
            <person name="Schaap O."/>
            <person name="van der Linde H.C."/>
            <person name="Martignoni E."/>
            <person name="Lopiano L."/>
            <person name="Lamberti P."/>
            <person name="Fincati E."/>
            <person name="Antonini A."/>
            <person name="Stocchi F."/>
            <person name="Montagna P."/>
            <person name="Squitieri F."/>
            <person name="Marini P."/>
            <person name="Abbruzzese G."/>
            <person name="Fabbrini G."/>
            <person name="Marconi R."/>
            <person name="Dalla Libera A."/>
            <person name="Trianni G."/>
            <person name="Guidi M."/>
            <person name="De Gaetano A."/>
            <person name="Boff Maegawa G."/>
            <person name="De Leo A."/>
            <person name="Gallai V."/>
            <person name="de Rosa G."/>
            <person name="Vanacore N."/>
            <person name="Meco G."/>
            <person name="van Duijn C.M."/>
            <person name="Oostra B.A."/>
            <person name="Heutink P."/>
            <person name="Bonifati V."/>
        </authorList>
    </citation>
    <scope>VARIANTS PARK2 PRO-42; CYS-402; ASN-415 AND ARG-418</scope>
</reference>
<reference key="91">
    <citation type="journal article" date="2010" name="J. Cell Biol.">
        <title>PINK1 stabilized by mitochondrial depolarization recruits Parkin to damaged mitochondria and activates latent Parkin for mitophagy.</title>
        <authorList>
            <person name="Matsuda N."/>
            <person name="Sato S."/>
            <person name="Shiba K."/>
            <person name="Okatsu K."/>
            <person name="Saisho K."/>
            <person name="Gautier C.A."/>
            <person name="Sou Y.S."/>
            <person name="Saiki S."/>
            <person name="Kawajiri S."/>
            <person name="Sato F."/>
            <person name="Kimura M."/>
            <person name="Komatsu M."/>
            <person name="Hattori N."/>
            <person name="Tanaka K."/>
        </authorList>
    </citation>
    <scope>CHARACTERIZATION OF VARIANTS PARK2 ASN-161; ASN-211; ARG-240; ASN-280 AND GLU-328</scope>
</reference>
<reference key="92">
    <citation type="journal article" date="2012" name="Mov. Disord.">
        <title>Systematic review and UK-based study of PARK2 (parkin), PINK1, PARK7 (DJ-1) and LRRK2 in early-onset Parkinson's disease.</title>
        <authorList>
            <person name="Kilarski L.L."/>
            <person name="Pearson J.P."/>
            <person name="Newsway V."/>
            <person name="Majounie E."/>
            <person name="Knipe M.D."/>
            <person name="Misbahuddin A."/>
            <person name="Chinnery P.F."/>
            <person name="Burn D.J."/>
            <person name="Clarke C.E."/>
            <person name="Marion M.H."/>
            <person name="Lewthwaite A.J."/>
            <person name="Nicholl D.J."/>
            <person name="Wood N.W."/>
            <person name="Morrison K.E."/>
            <person name="Williams-Gray C.H."/>
            <person name="Evans J.R."/>
            <person name="Sawcer S.J."/>
            <person name="Barker R.A."/>
            <person name="Wickremaratchi M.M."/>
            <person name="Ben-Shlomo Y."/>
            <person name="Williams N.M."/>
            <person name="Morris H.R."/>
        </authorList>
    </citation>
    <scope>VARIANT PARK2 TRP-275</scope>
</reference>
<reference key="93">
    <citation type="journal article" date="2016" name="Nature">
        <title>Analysis of protein-coding genetic variation in 60,706 humans.</title>
        <authorList>
            <consortium name="Exome Aggregation Consortium"/>
            <person name="Lek M."/>
            <person name="Karczewski K.J."/>
            <person name="Minikel E.V."/>
            <person name="Samocha K.E."/>
            <person name="Banks E."/>
            <person name="Fennell T."/>
            <person name="O'Donnell-Luria A.H."/>
            <person name="Ware J.S."/>
            <person name="Hill A.J."/>
            <person name="Cummings B.B."/>
            <person name="Tukiainen T."/>
            <person name="Birnbaum D.P."/>
            <person name="Kosmicki J.A."/>
            <person name="Duncan L.E."/>
            <person name="Estrada K."/>
            <person name="Zhao F."/>
            <person name="Zou J."/>
            <person name="Pierce-Hoffman E."/>
            <person name="Berghout J."/>
            <person name="Cooper D.N."/>
            <person name="Deflaux N."/>
            <person name="DePristo M."/>
            <person name="Do R."/>
            <person name="Flannick J."/>
            <person name="Fromer M."/>
            <person name="Gauthier L."/>
            <person name="Goldstein J."/>
            <person name="Gupta N."/>
            <person name="Howrigan D."/>
            <person name="Kiezun A."/>
            <person name="Kurki M.I."/>
            <person name="Moonshine A.L."/>
            <person name="Natarajan P."/>
            <person name="Orozco L."/>
            <person name="Peloso G.M."/>
            <person name="Poplin R."/>
            <person name="Rivas M.A."/>
            <person name="Ruano-Rubio V."/>
            <person name="Rose S.A."/>
            <person name="Ruderfer D.M."/>
            <person name="Shakir K."/>
            <person name="Stenson P.D."/>
            <person name="Stevens C."/>
            <person name="Thomas B.P."/>
            <person name="Tiao G."/>
            <person name="Tusie-Luna M.T."/>
            <person name="Weisburd B."/>
            <person name="Won H.H."/>
            <person name="Yu D."/>
            <person name="Altshuler D.M."/>
            <person name="Ardissino D."/>
            <person name="Boehnke M."/>
            <person name="Danesh J."/>
            <person name="Donnelly S."/>
            <person name="Elosua R."/>
            <person name="Florez J.C."/>
            <person name="Gabriel S.B."/>
            <person name="Getz G."/>
            <person name="Glatt S.J."/>
            <person name="Hultman C.M."/>
            <person name="Kathiresan S."/>
            <person name="Laakso M."/>
            <person name="McCarroll S."/>
            <person name="McCarthy M.I."/>
            <person name="McGovern D."/>
            <person name="McPherson R."/>
            <person name="Neale B.M."/>
            <person name="Palotie A."/>
            <person name="Purcell S.M."/>
            <person name="Saleheen D."/>
            <person name="Scharf J.M."/>
            <person name="Sklar P."/>
            <person name="Sullivan P.F."/>
            <person name="Tuomilehto J."/>
            <person name="Tsuang M.T."/>
            <person name="Watkins H.C."/>
            <person name="Wilson J.G."/>
            <person name="Daly M.J."/>
            <person name="MacArthur D.G."/>
        </authorList>
    </citation>
    <scope>VARIANT CYS-334</scope>
</reference>
<reference key="94">
    <citation type="journal article" date="2018" name="Nat. Commun.">
        <title>Synaptotagmin-11 is a critical mediator of parkin-linked neurotoxicity and Parkinson's disease-like pathology.</title>
        <authorList>
            <person name="Wang C."/>
            <person name="Kang X."/>
            <person name="Zhou L."/>
            <person name="Chai Z."/>
            <person name="Wu Q."/>
            <person name="Huang R."/>
            <person name="Xu H."/>
            <person name="Hu M."/>
            <person name="Sun X."/>
            <person name="Sun S."/>
            <person name="Li J."/>
            <person name="Jiao R."/>
            <person name="Zuo P."/>
            <person name="Zheng L."/>
            <person name="Yue Z."/>
            <person name="Zhou Z."/>
        </authorList>
    </citation>
    <scope>CHARACTERIZATION OF VARIANTS PARK PRO-42 AND TRP-275</scope>
    <scope>FUNCTION</scope>
</reference>
<dbReference type="EC" id="2.3.2.31" evidence="69 84"/>
<dbReference type="EMBL" id="AB009973">
    <property type="protein sequence ID" value="BAA25751.1"/>
    <property type="molecule type" value="mRNA"/>
</dbReference>
<dbReference type="EMBL" id="EF375726">
    <property type="protein sequence ID" value="ABN46990.1"/>
    <property type="molecule type" value="mRNA"/>
</dbReference>
<dbReference type="EMBL" id="AF381282">
    <property type="protein sequence ID" value="AAM21457.1"/>
    <property type="molecule type" value="mRNA"/>
</dbReference>
<dbReference type="EMBL" id="AF381283">
    <property type="protein sequence ID" value="AAM21458.1"/>
    <property type="molecule type" value="mRNA"/>
</dbReference>
<dbReference type="EMBL" id="AF381286">
    <property type="protein sequence ID" value="AAM21461.1"/>
    <property type="molecule type" value="mRNA"/>
</dbReference>
<dbReference type="EMBL" id="GU345839">
    <property type="protein sequence ID" value="ADB90270.1"/>
    <property type="molecule type" value="mRNA"/>
</dbReference>
<dbReference type="EMBL" id="GU345840">
    <property type="protein sequence ID" value="ADB90271.1"/>
    <property type="molecule type" value="mRNA"/>
</dbReference>
<dbReference type="EMBL" id="GU361467">
    <property type="protein sequence ID" value="ADB91979.1"/>
    <property type="molecule type" value="mRNA"/>
</dbReference>
<dbReference type="EMBL" id="AK292590">
    <property type="protein sequence ID" value="BAF85279.1"/>
    <property type="molecule type" value="mRNA"/>
</dbReference>
<dbReference type="EMBL" id="AL035697">
    <property type="status" value="NOT_ANNOTATED_CDS"/>
    <property type="molecule type" value="Genomic_DNA"/>
</dbReference>
<dbReference type="EMBL" id="AL132982">
    <property type="status" value="NOT_ANNOTATED_CDS"/>
    <property type="molecule type" value="Genomic_DNA"/>
</dbReference>
<dbReference type="EMBL" id="AL445215">
    <property type="status" value="NOT_ANNOTATED_CDS"/>
    <property type="molecule type" value="Genomic_DNA"/>
</dbReference>
<dbReference type="EMBL" id="AP000886">
    <property type="status" value="NOT_ANNOTATED_CDS"/>
    <property type="molecule type" value="Genomic_DNA"/>
</dbReference>
<dbReference type="EMBL" id="AP000887">
    <property type="status" value="NOT_ANNOTATED_CDS"/>
    <property type="molecule type" value="Genomic_DNA"/>
</dbReference>
<dbReference type="EMBL" id="AP001576">
    <property type="status" value="NOT_ANNOTATED_CDS"/>
    <property type="molecule type" value="Genomic_DNA"/>
</dbReference>
<dbReference type="EMBL" id="AP001577">
    <property type="status" value="NOT_ANNOTATED_CDS"/>
    <property type="molecule type" value="Genomic_DNA"/>
</dbReference>
<dbReference type="EMBL" id="AP001578">
    <property type="status" value="NOT_ANNOTATED_CDS"/>
    <property type="molecule type" value="Genomic_DNA"/>
</dbReference>
<dbReference type="EMBL" id="AP003699">
    <property type="status" value="NOT_ANNOTATED_CDS"/>
    <property type="molecule type" value="Genomic_DNA"/>
</dbReference>
<dbReference type="EMBL" id="CH471051">
    <property type="protein sequence ID" value="EAW47573.1"/>
    <property type="molecule type" value="Genomic_DNA"/>
</dbReference>
<dbReference type="EMBL" id="CH471051">
    <property type="protein sequence ID" value="EAW47574.1"/>
    <property type="molecule type" value="Genomic_DNA"/>
</dbReference>
<dbReference type="EMBL" id="BC022014">
    <property type="protein sequence ID" value="AAH22014.1"/>
    <property type="molecule type" value="mRNA"/>
</dbReference>
<dbReference type="EMBL" id="AY564225">
    <property type="protein sequence ID" value="AAS88422.1"/>
    <property type="molecule type" value="Genomic_DNA"/>
</dbReference>
<dbReference type="CCDS" id="CCDS5281.1">
    <molecule id="O60260-1"/>
</dbReference>
<dbReference type="CCDS" id="CCDS5282.1">
    <molecule id="O60260-2"/>
</dbReference>
<dbReference type="CCDS" id="CCDS5283.1">
    <molecule id="O60260-6"/>
</dbReference>
<dbReference type="RefSeq" id="NP_004553.2">
    <molecule id="O60260-1"/>
    <property type="nucleotide sequence ID" value="NM_004562.3"/>
</dbReference>
<dbReference type="RefSeq" id="NP_054642.2">
    <molecule id="O60260-2"/>
    <property type="nucleotide sequence ID" value="NM_013987.3"/>
</dbReference>
<dbReference type="RefSeq" id="NP_054643.2">
    <molecule id="O60260-6"/>
    <property type="nucleotide sequence ID" value="NM_013988.3"/>
</dbReference>
<dbReference type="PDB" id="1IYF">
    <property type="method" value="NMR"/>
    <property type="chains" value="A=1-76"/>
</dbReference>
<dbReference type="PDB" id="2JMO">
    <property type="method" value="NMR"/>
    <property type="chains" value="A=308-384"/>
</dbReference>
<dbReference type="PDB" id="4BM9">
    <property type="method" value="X-ray"/>
    <property type="resolution" value="2.25 A"/>
    <property type="chains" value="A=137-465"/>
</dbReference>
<dbReference type="PDB" id="4I1F">
    <property type="method" value="X-ray"/>
    <property type="resolution" value="1.58 A"/>
    <property type="chains" value="A=141-465"/>
</dbReference>
<dbReference type="PDB" id="4I1H">
    <property type="method" value="X-ray"/>
    <property type="resolution" value="2.00 A"/>
    <property type="chains" value="A=141-465"/>
</dbReference>
<dbReference type="PDB" id="5C1Z">
    <property type="method" value="X-ray"/>
    <property type="resolution" value="1.79 A"/>
    <property type="chains" value="A/B=1-465"/>
</dbReference>
<dbReference type="PDB" id="5C23">
    <property type="method" value="X-ray"/>
    <property type="resolution" value="2.37 A"/>
    <property type="chains" value="A/B=1-465"/>
</dbReference>
<dbReference type="PDB" id="5C9V">
    <property type="method" value="X-ray"/>
    <property type="resolution" value="2.35 A"/>
    <property type="chains" value="A=137-465"/>
</dbReference>
<dbReference type="PDB" id="5N2W">
    <property type="method" value="X-ray"/>
    <property type="resolution" value="2.68 A"/>
    <property type="chains" value="A=1-465"/>
</dbReference>
<dbReference type="PDB" id="5N38">
    <property type="method" value="X-ray"/>
    <property type="resolution" value="2.60 A"/>
    <property type="chains" value="A=1-465"/>
</dbReference>
<dbReference type="PDB" id="5TR5">
    <property type="method" value="NMR"/>
    <property type="chains" value="A=1-76"/>
</dbReference>
<dbReference type="PDB" id="6GLC">
    <property type="method" value="X-ray"/>
    <property type="resolution" value="1.80 A"/>
    <property type="chains" value="A=1-382"/>
</dbReference>
<dbReference type="PDB" id="6HUE">
    <property type="method" value="X-ray"/>
    <property type="resolution" value="2.85 A"/>
    <property type="chains" value="A/B=1-465"/>
</dbReference>
<dbReference type="PDB" id="6N13">
    <property type="method" value="NMR"/>
    <property type="chains" value="B=144-465"/>
</dbReference>
<dbReference type="PDB" id="8IK6">
    <property type="method" value="X-ray"/>
    <property type="resolution" value="3.30 A"/>
    <property type="chains" value="A/C=139-465"/>
</dbReference>
<dbReference type="PDB" id="8IKV">
    <property type="method" value="X-ray"/>
    <property type="resolution" value="2.35 A"/>
    <property type="chains" value="A/C=139-465"/>
</dbReference>
<dbReference type="PDB" id="8JWV">
    <property type="method" value="X-ray"/>
    <property type="resolution" value="2.90 A"/>
    <property type="chains" value="A=141-465"/>
</dbReference>
<dbReference type="PDB" id="8WZN">
    <property type="method" value="X-ray"/>
    <property type="resolution" value="1.80 A"/>
    <property type="chains" value="A=141-465"/>
</dbReference>
<dbReference type="PDB" id="8WZO">
    <property type="method" value="X-ray"/>
    <property type="resolution" value="2.25 A"/>
    <property type="chains" value="A=141-465"/>
</dbReference>
<dbReference type="PDBsum" id="1IYF"/>
<dbReference type="PDBsum" id="2JMO"/>
<dbReference type="PDBsum" id="4BM9"/>
<dbReference type="PDBsum" id="4I1F"/>
<dbReference type="PDBsum" id="4I1H"/>
<dbReference type="PDBsum" id="5C1Z"/>
<dbReference type="PDBsum" id="5C23"/>
<dbReference type="PDBsum" id="5C9V"/>
<dbReference type="PDBsum" id="5N2W"/>
<dbReference type="PDBsum" id="5N38"/>
<dbReference type="PDBsum" id="5TR5"/>
<dbReference type="PDBsum" id="6GLC"/>
<dbReference type="PDBsum" id="6HUE"/>
<dbReference type="PDBsum" id="6N13"/>
<dbReference type="PDBsum" id="8IK6"/>
<dbReference type="PDBsum" id="8IKV"/>
<dbReference type="PDBsum" id="8JWV"/>
<dbReference type="PDBsum" id="8WZN"/>
<dbReference type="PDBsum" id="8WZO"/>
<dbReference type="BMRB" id="O60260"/>
<dbReference type="SMR" id="O60260"/>
<dbReference type="BioGRID" id="111105">
    <property type="interactions" value="3437"/>
</dbReference>
<dbReference type="CORUM" id="O60260"/>
<dbReference type="DIP" id="DIP-37655N"/>
<dbReference type="FunCoup" id="O60260">
    <property type="interactions" value="952"/>
</dbReference>
<dbReference type="IntAct" id="O60260">
    <property type="interactions" value="276"/>
</dbReference>
<dbReference type="MINT" id="O60260"/>
<dbReference type="STRING" id="9606.ENSP00000355865"/>
<dbReference type="BindingDB" id="O60260"/>
<dbReference type="TCDB" id="8.A.52.2.1">
    <property type="family name" value="the ubiquitin-related protein degradation (upd) family"/>
</dbReference>
<dbReference type="GlyGen" id="O60260">
    <property type="glycosylation" value="2 sites, 1 O-linked glycan (1 site)"/>
</dbReference>
<dbReference type="iPTMnet" id="O60260"/>
<dbReference type="PhosphoSitePlus" id="O60260"/>
<dbReference type="BioMuta" id="PRKN"/>
<dbReference type="MassIVE" id="O60260"/>
<dbReference type="PaxDb" id="9606-ENSP00000355865"/>
<dbReference type="PeptideAtlas" id="O60260"/>
<dbReference type="ProteomicsDB" id="49290">
    <molecule id="O60260-1"/>
</dbReference>
<dbReference type="ProteomicsDB" id="49291">
    <molecule id="O60260-2"/>
</dbReference>
<dbReference type="ProteomicsDB" id="49292">
    <molecule id="O60260-3"/>
</dbReference>
<dbReference type="ProteomicsDB" id="49293">
    <molecule id="O60260-4"/>
</dbReference>
<dbReference type="ProteomicsDB" id="49294">
    <molecule id="O60260-5"/>
</dbReference>
<dbReference type="ProteomicsDB" id="49295">
    <molecule id="O60260-6"/>
</dbReference>
<dbReference type="Antibodypedia" id="4264">
    <property type="antibodies" value="791 antibodies from 51 providers"/>
</dbReference>
<dbReference type="DNASU" id="5071"/>
<dbReference type="Ensembl" id="ENST00000366896.5">
    <molecule id="O60260-6"/>
    <property type="protein sequence ID" value="ENSP00000355862.1"/>
    <property type="gene ID" value="ENSG00000185345.25"/>
</dbReference>
<dbReference type="Ensembl" id="ENST00000366897.5">
    <molecule id="O60260-2"/>
    <property type="protein sequence ID" value="ENSP00000355863.1"/>
    <property type="gene ID" value="ENSG00000185345.25"/>
</dbReference>
<dbReference type="Ensembl" id="ENST00000366898.6">
    <molecule id="O60260-1"/>
    <property type="protein sequence ID" value="ENSP00000355865.1"/>
    <property type="gene ID" value="ENSG00000185345.25"/>
</dbReference>
<dbReference type="Ensembl" id="ENST00000479615.5">
    <molecule id="O60260-3"/>
    <property type="protein sequence ID" value="ENSP00000434414.1"/>
    <property type="gene ID" value="ENSG00000185345.25"/>
</dbReference>
<dbReference type="GeneID" id="5071"/>
<dbReference type="KEGG" id="hsa:5071"/>
<dbReference type="MANE-Select" id="ENST00000366898.6">
    <property type="protein sequence ID" value="ENSP00000355865.1"/>
    <property type="RefSeq nucleotide sequence ID" value="NM_004562.3"/>
    <property type="RefSeq protein sequence ID" value="NP_004553.2"/>
</dbReference>
<dbReference type="UCSC" id="uc003qty.5">
    <molecule id="O60260-1"/>
    <property type="organism name" value="human"/>
</dbReference>
<dbReference type="AGR" id="HGNC:8607"/>
<dbReference type="CTD" id="5071"/>
<dbReference type="DisGeNET" id="5071"/>
<dbReference type="GeneCards" id="PRKN"/>
<dbReference type="GeneReviews" id="PRKN"/>
<dbReference type="HGNC" id="HGNC:8607">
    <property type="gene designation" value="PRKN"/>
</dbReference>
<dbReference type="HPA" id="ENSG00000185345">
    <property type="expression patterns" value="Tissue enhanced (skeletal muscle, tongue)"/>
</dbReference>
<dbReference type="MalaCards" id="PRKN"/>
<dbReference type="MIM" id="168600">
    <property type="type" value="phenotype"/>
</dbReference>
<dbReference type="MIM" id="600116">
    <property type="type" value="phenotype"/>
</dbReference>
<dbReference type="MIM" id="602544">
    <property type="type" value="gene"/>
</dbReference>
<dbReference type="neXtProt" id="NX_O60260"/>
<dbReference type="OpenTargets" id="ENSG00000185345"/>
<dbReference type="Orphanet" id="2828">
    <property type="disease" value="Young-onset Parkinson disease"/>
</dbReference>
<dbReference type="PharmGKB" id="PA32942"/>
<dbReference type="VEuPathDB" id="HostDB:ENSG00000185345"/>
<dbReference type="eggNOG" id="KOG0006">
    <property type="taxonomic scope" value="Eukaryota"/>
</dbReference>
<dbReference type="GeneTree" id="ENSGT00390000011034"/>
<dbReference type="HOGENOM" id="CLU_050804_0_0_1"/>
<dbReference type="InParanoid" id="O60260"/>
<dbReference type="OMA" id="DPKWDIK"/>
<dbReference type="OrthoDB" id="1431934at2759"/>
<dbReference type="PAN-GO" id="O60260">
    <property type="GO annotations" value="15 GO annotations based on evolutionary models"/>
</dbReference>
<dbReference type="PhylomeDB" id="O60260"/>
<dbReference type="TreeFam" id="TF314529"/>
<dbReference type="BRENDA" id="2.3.2.27">
    <property type="organism ID" value="2681"/>
</dbReference>
<dbReference type="BRENDA" id="2.3.2.31">
    <property type="organism ID" value="2681"/>
</dbReference>
<dbReference type="PathwayCommons" id="O60260"/>
<dbReference type="Reactome" id="R-HSA-5205685">
    <property type="pathway name" value="PINK1-PRKN Mediated Mitophagy"/>
</dbReference>
<dbReference type="Reactome" id="R-HSA-5675482">
    <property type="pathway name" value="Regulation of necroptotic cell death"/>
</dbReference>
<dbReference type="Reactome" id="R-HSA-5689877">
    <property type="pathway name" value="Josephin domain DUBs"/>
</dbReference>
<dbReference type="Reactome" id="R-HSA-9646399">
    <property type="pathway name" value="Aggrephagy"/>
</dbReference>
<dbReference type="Reactome" id="R-HSA-977225">
    <property type="pathway name" value="Amyloid fiber formation"/>
</dbReference>
<dbReference type="Reactome" id="R-HSA-983168">
    <property type="pathway name" value="Antigen processing: Ubiquitination &amp; Proteasome degradation"/>
</dbReference>
<dbReference type="SignaLink" id="O60260"/>
<dbReference type="SIGNOR" id="O60260"/>
<dbReference type="UniPathway" id="UPA00143"/>
<dbReference type="BioGRID-ORCS" id="5071">
    <property type="hits" value="13 hits in 1187 CRISPR screens"/>
</dbReference>
<dbReference type="CD-CODE" id="8C2F96ED">
    <property type="entry name" value="Centrosome"/>
</dbReference>
<dbReference type="ChiTaRS" id="PARK2">
    <property type="organism name" value="human"/>
</dbReference>
<dbReference type="EvolutionaryTrace" id="O60260"/>
<dbReference type="GeneWiki" id="Parkin_(ligase)"/>
<dbReference type="GenomeRNAi" id="5071"/>
<dbReference type="Pharos" id="O60260">
    <property type="development level" value="Tbio"/>
</dbReference>
<dbReference type="PRO" id="PR:O60260"/>
<dbReference type="Proteomes" id="UP000005640">
    <property type="component" value="Chromosome 6"/>
</dbReference>
<dbReference type="RNAct" id="O60260">
    <property type="molecule type" value="protein"/>
</dbReference>
<dbReference type="Bgee" id="ENSG00000185345">
    <property type="expression patterns" value="Expressed in sural nerve and 107 other cell types or tissues"/>
</dbReference>
<dbReference type="ExpressionAtlas" id="O60260">
    <property type="expression patterns" value="baseline and differential"/>
</dbReference>
<dbReference type="GO" id="GO:0016235">
    <property type="term" value="C:aggresome"/>
    <property type="evidence" value="ECO:0000314"/>
    <property type="project" value="BHF-UCL"/>
</dbReference>
<dbReference type="GO" id="GO:0005737">
    <property type="term" value="C:cytoplasm"/>
    <property type="evidence" value="ECO:0000314"/>
    <property type="project" value="UniProtKB"/>
</dbReference>
<dbReference type="GO" id="GO:0005829">
    <property type="term" value="C:cytosol"/>
    <property type="evidence" value="ECO:0000314"/>
    <property type="project" value="HPA"/>
</dbReference>
<dbReference type="GO" id="GO:0098691">
    <property type="term" value="C:dopaminergic synapse"/>
    <property type="evidence" value="ECO:0007669"/>
    <property type="project" value="Ensembl"/>
</dbReference>
<dbReference type="GO" id="GO:0005783">
    <property type="term" value="C:endoplasmic reticulum"/>
    <property type="evidence" value="ECO:0000314"/>
    <property type="project" value="ParkinsonsUK-UCL"/>
</dbReference>
<dbReference type="GO" id="GO:0005789">
    <property type="term" value="C:endoplasmic reticulum membrane"/>
    <property type="evidence" value="ECO:0007669"/>
    <property type="project" value="Ensembl"/>
</dbReference>
<dbReference type="GO" id="GO:0098978">
    <property type="term" value="C:glutamatergic synapse"/>
    <property type="evidence" value="ECO:0007669"/>
    <property type="project" value="Ensembl"/>
</dbReference>
<dbReference type="GO" id="GO:0005794">
    <property type="term" value="C:Golgi apparatus"/>
    <property type="evidence" value="ECO:0000314"/>
    <property type="project" value="UniProtKB"/>
</dbReference>
<dbReference type="GO" id="GO:0000139">
    <property type="term" value="C:Golgi membrane"/>
    <property type="evidence" value="ECO:0007669"/>
    <property type="project" value="Ensembl"/>
</dbReference>
<dbReference type="GO" id="GO:0097413">
    <property type="term" value="C:Lewy body"/>
    <property type="evidence" value="ECO:0000304"/>
    <property type="project" value="ParkinsonsUK-UCL"/>
</dbReference>
<dbReference type="GO" id="GO:0005741">
    <property type="term" value="C:mitochondrial outer membrane"/>
    <property type="evidence" value="ECO:0007669"/>
    <property type="project" value="UniProtKB-SubCell"/>
</dbReference>
<dbReference type="GO" id="GO:0005739">
    <property type="term" value="C:mitochondrion"/>
    <property type="evidence" value="ECO:0000314"/>
    <property type="project" value="UniProtKB"/>
</dbReference>
<dbReference type="GO" id="GO:0043005">
    <property type="term" value="C:neuron projection"/>
    <property type="evidence" value="ECO:0000314"/>
    <property type="project" value="ParkinsonsUK-UCL"/>
</dbReference>
<dbReference type="GO" id="GO:0043025">
    <property type="term" value="C:neuronal cell body"/>
    <property type="evidence" value="ECO:0007669"/>
    <property type="project" value="Ensembl"/>
</dbReference>
<dbReference type="GO" id="GO:0016607">
    <property type="term" value="C:nuclear speck"/>
    <property type="evidence" value="ECO:0000314"/>
    <property type="project" value="HPA"/>
</dbReference>
<dbReference type="GO" id="GO:0005634">
    <property type="term" value="C:nucleus"/>
    <property type="evidence" value="ECO:0000314"/>
    <property type="project" value="ParkinsonsUK-UCL"/>
</dbReference>
<dbReference type="GO" id="GO:1990452">
    <property type="term" value="C:Parkin-FBXW7-Cul1 ubiquitin ligase complex"/>
    <property type="evidence" value="ECO:0000353"/>
    <property type="project" value="ParkinsonsUK-UCL"/>
</dbReference>
<dbReference type="GO" id="GO:0048471">
    <property type="term" value="C:perinuclear region of cytoplasm"/>
    <property type="evidence" value="ECO:0000314"/>
    <property type="project" value="UniProtKB"/>
</dbReference>
<dbReference type="GO" id="GO:0014069">
    <property type="term" value="C:postsynaptic density"/>
    <property type="evidence" value="ECO:0007669"/>
    <property type="project" value="UniProtKB-SubCell"/>
</dbReference>
<dbReference type="GO" id="GO:0030672">
    <property type="term" value="C:synaptic vesicle membrane"/>
    <property type="evidence" value="ECO:0007669"/>
    <property type="project" value="Ensembl"/>
</dbReference>
<dbReference type="GO" id="GO:0043195">
    <property type="term" value="C:terminal bouton"/>
    <property type="evidence" value="ECO:0007669"/>
    <property type="project" value="Ensembl"/>
</dbReference>
<dbReference type="GO" id="GO:0000151">
    <property type="term" value="C:ubiquitin ligase complex"/>
    <property type="evidence" value="ECO:0000314"/>
    <property type="project" value="UniProtKB"/>
</dbReference>
<dbReference type="GO" id="GO:0003779">
    <property type="term" value="F:actin binding"/>
    <property type="evidence" value="ECO:0000353"/>
    <property type="project" value="ParkinsonsUK-UCL"/>
</dbReference>
<dbReference type="GO" id="GO:0008013">
    <property type="term" value="F:beta-catenin binding"/>
    <property type="evidence" value="ECO:0000314"/>
    <property type="project" value="ParkinsonsUK-UCL"/>
</dbReference>
<dbReference type="GO" id="GO:0097602">
    <property type="term" value="F:cullin family protein binding"/>
    <property type="evidence" value="ECO:0000314"/>
    <property type="project" value="ParkinsonsUK-UCL"/>
</dbReference>
<dbReference type="GO" id="GO:0019899">
    <property type="term" value="F:enzyme binding"/>
    <property type="evidence" value="ECO:0000353"/>
    <property type="project" value="ParkinsonsUK-UCL"/>
</dbReference>
<dbReference type="GO" id="GO:1990444">
    <property type="term" value="F:F-box domain binding"/>
    <property type="evidence" value="ECO:0000353"/>
    <property type="project" value="ParkinsonsUK-UCL"/>
</dbReference>
<dbReference type="GO" id="GO:0001664">
    <property type="term" value="F:G protein-coupled receptor binding"/>
    <property type="evidence" value="ECO:0000353"/>
    <property type="project" value="ParkinsonsUK-UCL"/>
</dbReference>
<dbReference type="GO" id="GO:0031072">
    <property type="term" value="F:heat shock protein binding"/>
    <property type="evidence" value="ECO:0000353"/>
    <property type="project" value="ParkinsonsUK-UCL"/>
</dbReference>
<dbReference type="GO" id="GO:0042826">
    <property type="term" value="F:histone deacetylase binding"/>
    <property type="evidence" value="ECO:0000353"/>
    <property type="project" value="ParkinsonsUK-UCL"/>
</dbReference>
<dbReference type="GO" id="GO:0030544">
    <property type="term" value="F:Hsp70 protein binding"/>
    <property type="evidence" value="ECO:0000353"/>
    <property type="project" value="ParkinsonsUK-UCL"/>
</dbReference>
<dbReference type="GO" id="GO:0042802">
    <property type="term" value="F:identical protein binding"/>
    <property type="evidence" value="ECO:0000353"/>
    <property type="project" value="IntAct"/>
</dbReference>
<dbReference type="GO" id="GO:0019900">
    <property type="term" value="F:kinase binding"/>
    <property type="evidence" value="ECO:0000353"/>
    <property type="project" value="UniProtKB"/>
</dbReference>
<dbReference type="GO" id="GO:0030165">
    <property type="term" value="F:PDZ domain binding"/>
    <property type="evidence" value="ECO:0000353"/>
    <property type="project" value="BHF-UCL"/>
</dbReference>
<dbReference type="GO" id="GO:0043274">
    <property type="term" value="F:phospholipase binding"/>
    <property type="evidence" value="ECO:0000353"/>
    <property type="project" value="ParkinsonsUK-UCL"/>
</dbReference>
<dbReference type="GO" id="GO:0019901">
    <property type="term" value="F:protein kinase binding"/>
    <property type="evidence" value="ECO:0000353"/>
    <property type="project" value="UniProtKB"/>
</dbReference>
<dbReference type="GO" id="GO:0044877">
    <property type="term" value="F:protein-containing complex binding"/>
    <property type="evidence" value="ECO:0000353"/>
    <property type="project" value="ParkinsonsUK-UCL"/>
</dbReference>
<dbReference type="GO" id="GO:0051087">
    <property type="term" value="F:protein-folding chaperone binding"/>
    <property type="evidence" value="ECO:0000353"/>
    <property type="project" value="BHF-UCL"/>
</dbReference>
<dbReference type="GO" id="GO:0017124">
    <property type="term" value="F:SH3 domain binding"/>
    <property type="evidence" value="ECO:0000304"/>
    <property type="project" value="ParkinsonsUK-UCL"/>
</dbReference>
<dbReference type="GO" id="GO:0003714">
    <property type="term" value="F:transcription corepressor activity"/>
    <property type="evidence" value="ECO:0000314"/>
    <property type="project" value="ParkinsonsUK-UCL"/>
</dbReference>
<dbReference type="GO" id="GO:0015631">
    <property type="term" value="F:tubulin binding"/>
    <property type="evidence" value="ECO:0000353"/>
    <property type="project" value="ParkinsonsUK-UCL"/>
</dbReference>
<dbReference type="GO" id="GO:0043130">
    <property type="term" value="F:ubiquitin binding"/>
    <property type="evidence" value="ECO:0000314"/>
    <property type="project" value="UniProtKB"/>
</dbReference>
<dbReference type="GO" id="GO:0031624">
    <property type="term" value="F:ubiquitin conjugating enzyme binding"/>
    <property type="evidence" value="ECO:0000314"/>
    <property type="project" value="ParkinsonsUK-UCL"/>
</dbReference>
<dbReference type="GO" id="GO:0061630">
    <property type="term" value="F:ubiquitin protein ligase activity"/>
    <property type="evidence" value="ECO:0000314"/>
    <property type="project" value="UniProtKB"/>
</dbReference>
<dbReference type="GO" id="GO:0031625">
    <property type="term" value="F:ubiquitin protein ligase binding"/>
    <property type="evidence" value="ECO:0000315"/>
    <property type="project" value="UniProtKB"/>
</dbReference>
<dbReference type="GO" id="GO:0004842">
    <property type="term" value="F:ubiquitin-protein transferase activity"/>
    <property type="evidence" value="ECO:0000314"/>
    <property type="project" value="UniProtKB"/>
</dbReference>
<dbReference type="GO" id="GO:1990381">
    <property type="term" value="F:ubiquitin-specific protease binding"/>
    <property type="evidence" value="ECO:0000353"/>
    <property type="project" value="ParkinsonsUK-UCL"/>
</dbReference>
<dbReference type="GO" id="GO:0008270">
    <property type="term" value="F:zinc ion binding"/>
    <property type="evidence" value="ECO:0000304"/>
    <property type="project" value="ParkinsonsUK-UCL"/>
</dbReference>
<dbReference type="GO" id="GO:0008344">
    <property type="term" value="P:adult locomotory behavior"/>
    <property type="evidence" value="ECO:0000250"/>
    <property type="project" value="ParkinsonsUK-UCL"/>
</dbReference>
<dbReference type="GO" id="GO:0070842">
    <property type="term" value="P:aggresome assembly"/>
    <property type="evidence" value="ECO:0000315"/>
    <property type="project" value="BHF-UCL"/>
</dbReference>
<dbReference type="GO" id="GO:1990000">
    <property type="term" value="P:amyloid fibril formation"/>
    <property type="evidence" value="ECO:0000304"/>
    <property type="project" value="Reactome"/>
</dbReference>
<dbReference type="GO" id="GO:0000422">
    <property type="term" value="P:autophagy of mitochondrion"/>
    <property type="evidence" value="ECO:0000314"/>
    <property type="project" value="UniProtKB"/>
</dbReference>
<dbReference type="GO" id="GO:1903351">
    <property type="term" value="P:cellular response to dopamine"/>
    <property type="evidence" value="ECO:0000304"/>
    <property type="project" value="ParkinsonsUK-UCL"/>
</dbReference>
<dbReference type="GO" id="GO:1904881">
    <property type="term" value="P:cellular response to hydrogen sulfide"/>
    <property type="evidence" value="ECO:0007669"/>
    <property type="project" value="Ensembl"/>
</dbReference>
<dbReference type="GO" id="GO:1905232">
    <property type="term" value="P:cellular response to L-glutamate"/>
    <property type="evidence" value="ECO:0007669"/>
    <property type="project" value="Ensembl"/>
</dbReference>
<dbReference type="GO" id="GO:1904845">
    <property type="term" value="P:cellular response to L-glutamine"/>
    <property type="evidence" value="ECO:0007669"/>
    <property type="project" value="Ensembl"/>
</dbReference>
<dbReference type="GO" id="GO:0071287">
    <property type="term" value="P:cellular response to manganese ion"/>
    <property type="evidence" value="ECO:0000304"/>
    <property type="project" value="ParkinsonsUK-UCL"/>
</dbReference>
<dbReference type="GO" id="GO:0034599">
    <property type="term" value="P:cellular response to oxidative stress"/>
    <property type="evidence" value="ECO:0000304"/>
    <property type="project" value="ParkinsonsUK-UCL"/>
</dbReference>
<dbReference type="GO" id="GO:0097237">
    <property type="term" value="P:cellular response to toxic substance"/>
    <property type="evidence" value="ECO:0000315"/>
    <property type="project" value="ParkinsonsUK-UCL"/>
</dbReference>
<dbReference type="GO" id="GO:0034620">
    <property type="term" value="P:cellular response to unfolded protein"/>
    <property type="evidence" value="ECO:0000304"/>
    <property type="project" value="ParkinsonsUK-UCL"/>
</dbReference>
<dbReference type="GO" id="GO:0007417">
    <property type="term" value="P:central nervous system development"/>
    <property type="evidence" value="ECO:0000304"/>
    <property type="project" value="ProtInc"/>
</dbReference>
<dbReference type="GO" id="GO:0042417">
    <property type="term" value="P:dopamine metabolic process"/>
    <property type="evidence" value="ECO:0000304"/>
    <property type="project" value="ParkinsonsUK-UCL"/>
</dbReference>
<dbReference type="GO" id="GO:0051583">
    <property type="term" value="P:dopamine uptake involved in synaptic transmission"/>
    <property type="evidence" value="ECO:0007669"/>
    <property type="project" value="Ensembl"/>
</dbReference>
<dbReference type="GO" id="GO:0036503">
    <property type="term" value="P:ERAD pathway"/>
    <property type="evidence" value="ECO:0000303"/>
    <property type="project" value="ParkinsonsUK-UCL"/>
</dbReference>
<dbReference type="GO" id="GO:0010994">
    <property type="term" value="P:free ubiquitin chain polymerization"/>
    <property type="evidence" value="ECO:0000315"/>
    <property type="project" value="ParkinsonsUK-UCL"/>
</dbReference>
<dbReference type="GO" id="GO:0007612">
    <property type="term" value="P:learning"/>
    <property type="evidence" value="ECO:0007669"/>
    <property type="project" value="Ensembl"/>
</dbReference>
<dbReference type="GO" id="GO:0016236">
    <property type="term" value="P:macroautophagy"/>
    <property type="evidence" value="ECO:0000304"/>
    <property type="project" value="Reactome"/>
</dbReference>
<dbReference type="GO" id="GO:0000266">
    <property type="term" value="P:mitochondrial fission"/>
    <property type="evidence" value="ECO:0000250"/>
    <property type="project" value="ParkinsonsUK-UCL"/>
</dbReference>
<dbReference type="GO" id="GO:0043653">
    <property type="term" value="P:mitochondrial fragmentation involved in apoptotic process"/>
    <property type="evidence" value="ECO:0007669"/>
    <property type="project" value="Ensembl"/>
</dbReference>
<dbReference type="GO" id="GO:0051646">
    <property type="term" value="P:mitochondrion localization"/>
    <property type="evidence" value="ECO:0007669"/>
    <property type="project" value="Ensembl"/>
</dbReference>
<dbReference type="GO" id="GO:0007005">
    <property type="term" value="P:mitochondrion organization"/>
    <property type="evidence" value="ECO:0000250"/>
    <property type="project" value="ParkinsonsUK-UCL"/>
</dbReference>
<dbReference type="GO" id="GO:0099074">
    <property type="term" value="P:mitochondrion to lysosome vesicle-mediated transport"/>
    <property type="evidence" value="ECO:0000314"/>
    <property type="project" value="ParkinsonsUK-UCL"/>
</dbReference>
<dbReference type="GO" id="GO:0000423">
    <property type="term" value="P:mitophagy"/>
    <property type="evidence" value="ECO:0000314"/>
    <property type="project" value="UniProtKB"/>
</dbReference>
<dbReference type="GO" id="GO:0044828">
    <property type="term" value="P:negative regulation by host of viral genome replication"/>
    <property type="evidence" value="ECO:0000314"/>
    <property type="project" value="AgBase"/>
</dbReference>
<dbReference type="GO" id="GO:0032232">
    <property type="term" value="P:negative regulation of actin filament bundle assembly"/>
    <property type="evidence" value="ECO:0000314"/>
    <property type="project" value="BHF-UCL"/>
</dbReference>
<dbReference type="GO" id="GO:0090090">
    <property type="term" value="P:negative regulation of canonical Wnt signaling pathway"/>
    <property type="evidence" value="ECO:0000314"/>
    <property type="project" value="ParkinsonsUK-UCL"/>
</dbReference>
<dbReference type="GO" id="GO:1902236">
    <property type="term" value="P:negative regulation of endoplasmic reticulum stress-induced intrinsic apoptotic signaling pathway"/>
    <property type="evidence" value="ECO:0000314"/>
    <property type="project" value="ParkinsonsUK-UCL"/>
</dbReference>
<dbReference type="GO" id="GO:1903382">
    <property type="term" value="P:negative regulation of endoplasmic reticulum stress-induced neuron intrinsic apoptotic signaling pathway"/>
    <property type="evidence" value="ECO:0007669"/>
    <property type="project" value="Ensembl"/>
</dbReference>
<dbReference type="GO" id="GO:0090394">
    <property type="term" value="P:negative regulation of excitatory postsynaptic potential"/>
    <property type="evidence" value="ECO:0007669"/>
    <property type="project" value="Ensembl"/>
</dbReference>
<dbReference type="GO" id="GO:1903542">
    <property type="term" value="P:negative regulation of exosomal secretion"/>
    <property type="evidence" value="ECO:0000315"/>
    <property type="project" value="ParkinsonsUK-UCL"/>
</dbReference>
<dbReference type="GO" id="GO:0010629">
    <property type="term" value="P:negative regulation of gene expression"/>
    <property type="evidence" value="ECO:0000315"/>
    <property type="project" value="BHF-UCL"/>
</dbReference>
<dbReference type="GO" id="GO:0033132">
    <property type="term" value="P:negative regulation of glucokinase activity"/>
    <property type="evidence" value="ECO:0000314"/>
    <property type="project" value="MGI"/>
</dbReference>
<dbReference type="GO" id="GO:0046676">
    <property type="term" value="P:negative regulation of insulin secretion"/>
    <property type="evidence" value="ECO:0000314"/>
    <property type="project" value="MGI"/>
</dbReference>
<dbReference type="GO" id="GO:1905366">
    <property type="term" value="P:negative regulation of intralumenal vesicle formation"/>
    <property type="evidence" value="ECO:0000315"/>
    <property type="project" value="ParkinsonsUK-UCL"/>
</dbReference>
<dbReference type="GO" id="GO:1902254">
    <property type="term" value="P:negative regulation of intrinsic apoptotic signaling pathway by p53 class mediator"/>
    <property type="evidence" value="ECO:0000315"/>
    <property type="project" value="ParkinsonsUK-UCL"/>
</dbReference>
<dbReference type="GO" id="GO:0046329">
    <property type="term" value="P:negative regulation of JNK cascade"/>
    <property type="evidence" value="ECO:0000250"/>
    <property type="project" value="ParkinsonsUK-UCL"/>
</dbReference>
<dbReference type="GO" id="GO:0090258">
    <property type="term" value="P:negative regulation of mitochondrial fission"/>
    <property type="evidence" value="ECO:0007669"/>
    <property type="project" value="Ensembl"/>
</dbReference>
<dbReference type="GO" id="GO:0010637">
    <property type="term" value="P:negative regulation of mitochondrial fusion"/>
    <property type="evidence" value="ECO:0000250"/>
    <property type="project" value="ParkinsonsUK-UCL"/>
</dbReference>
<dbReference type="GO" id="GO:0043524">
    <property type="term" value="P:negative regulation of neuron apoptotic process"/>
    <property type="evidence" value="ECO:0000314"/>
    <property type="project" value="ParkinsonsUK-UCL"/>
</dbReference>
<dbReference type="GO" id="GO:1903377">
    <property type="term" value="P:negative regulation of oxidative stress-induced neuron intrinsic apoptotic signaling pathway"/>
    <property type="evidence" value="ECO:0000314"/>
    <property type="project" value="ParkinsonsUK-UCL"/>
</dbReference>
<dbReference type="GO" id="GO:1902283">
    <property type="term" value="P:negative regulation of primary amine oxidase activity"/>
    <property type="evidence" value="ECO:0000315"/>
    <property type="project" value="ParkinsonsUK-UCL"/>
</dbReference>
<dbReference type="GO" id="GO:1903427">
    <property type="term" value="P:negative regulation of reactive oxygen species biosynthetic process"/>
    <property type="evidence" value="ECO:0007669"/>
    <property type="project" value="Ensembl"/>
</dbReference>
<dbReference type="GO" id="GO:2000378">
    <property type="term" value="P:negative regulation of reactive oxygen species metabolic process"/>
    <property type="evidence" value="ECO:0000316"/>
    <property type="project" value="ParkinsonsUK-UCL"/>
</dbReference>
<dbReference type="GO" id="GO:0090201">
    <property type="term" value="P:negative regulation of release of cytochrome c from mitochondria"/>
    <property type="evidence" value="ECO:0000314"/>
    <property type="project" value="BHF-UCL"/>
</dbReference>
<dbReference type="GO" id="GO:1904049">
    <property type="term" value="P:negative regulation of spontaneous neurotransmitter secretion"/>
    <property type="evidence" value="ECO:0000315"/>
    <property type="project" value="ParkinsonsUK-UCL"/>
</dbReference>
<dbReference type="GO" id="GO:0051967">
    <property type="term" value="P:negative regulation of synaptic transmission, glutamatergic"/>
    <property type="evidence" value="ECO:0007669"/>
    <property type="project" value="Ensembl"/>
</dbReference>
<dbReference type="GO" id="GO:0000122">
    <property type="term" value="P:negative regulation of transcription by RNA polymerase II"/>
    <property type="evidence" value="ECO:0000315"/>
    <property type="project" value="ParkinsonsUK-UCL"/>
</dbReference>
<dbReference type="GO" id="GO:0070050">
    <property type="term" value="P:neuron cellular homeostasis"/>
    <property type="evidence" value="ECO:0000250"/>
    <property type="project" value="ParkinsonsUK-UCL"/>
</dbReference>
<dbReference type="GO" id="GO:0042415">
    <property type="term" value="P:norepinephrine metabolic process"/>
    <property type="evidence" value="ECO:0007669"/>
    <property type="project" value="Ensembl"/>
</dbReference>
<dbReference type="GO" id="GO:0043065">
    <property type="term" value="P:positive regulation of apoptotic process"/>
    <property type="evidence" value="ECO:0007669"/>
    <property type="project" value="Ensembl"/>
</dbReference>
<dbReference type="GO" id="GO:2001171">
    <property type="term" value="P:positive regulation of ATP biosynthetic process"/>
    <property type="evidence" value="ECO:0007669"/>
    <property type="project" value="Ensembl"/>
</dbReference>
<dbReference type="GO" id="GO:0043123">
    <property type="term" value="P:positive regulation of canonical NF-kappaB signal transduction"/>
    <property type="evidence" value="ECO:0000314"/>
    <property type="project" value="ParkinsonsUK-UCL"/>
</dbReference>
<dbReference type="GO" id="GO:1903861">
    <property type="term" value="P:positive regulation of dendrite extension"/>
    <property type="evidence" value="ECO:0007669"/>
    <property type="project" value="Ensembl"/>
</dbReference>
<dbReference type="GO" id="GO:0010628">
    <property type="term" value="P:positive regulation of gene expression"/>
    <property type="evidence" value="ECO:0000315"/>
    <property type="project" value="ParkinsonsUK-UCL"/>
</dbReference>
<dbReference type="GO" id="GO:0035774">
    <property type="term" value="P:positive regulation of insulin secretion involved in cellular response to glucose stimulus"/>
    <property type="evidence" value="ECO:0007669"/>
    <property type="project" value="Ensembl"/>
</dbReference>
<dbReference type="GO" id="GO:0090141">
    <property type="term" value="P:positive regulation of mitochondrial fission"/>
    <property type="evidence" value="ECO:0000250"/>
    <property type="project" value="ParkinsonsUK-UCL"/>
</dbReference>
<dbReference type="GO" id="GO:0010636">
    <property type="term" value="P:positive regulation of mitochondrial fusion"/>
    <property type="evidence" value="ECO:0000315"/>
    <property type="project" value="ParkinsonsUK-UCL"/>
</dbReference>
<dbReference type="GO" id="GO:0010918">
    <property type="term" value="P:positive regulation of mitochondrial membrane potential"/>
    <property type="evidence" value="ECO:0007669"/>
    <property type="project" value="Ensembl"/>
</dbReference>
<dbReference type="GO" id="GO:1901526">
    <property type="term" value="P:positive regulation of mitophagy"/>
    <property type="evidence" value="ECO:0000314"/>
    <property type="project" value="ParkinsonsUK-UCL"/>
</dbReference>
<dbReference type="GO" id="GO:0051582">
    <property type="term" value="P:positive regulation of neurotransmitter uptake"/>
    <property type="evidence" value="ECO:0000315"/>
    <property type="project" value="ParkinsonsUK-UCL"/>
</dbReference>
<dbReference type="GO" id="GO:1901800">
    <property type="term" value="P:positive regulation of proteasomal protein catabolic process"/>
    <property type="evidence" value="ECO:0000316"/>
    <property type="project" value="ParkinsonsUK-UCL"/>
</dbReference>
<dbReference type="GO" id="GO:0032436">
    <property type="term" value="P:positive regulation of proteasomal ubiquitin-dependent protein catabolic process"/>
    <property type="evidence" value="ECO:0000304"/>
    <property type="project" value="ParkinsonsUK-UCL"/>
</dbReference>
<dbReference type="GO" id="GO:0045732">
    <property type="term" value="P:positive regulation of protein catabolic process"/>
    <property type="evidence" value="ECO:0000304"/>
    <property type="project" value="ParkinsonsUK-UCL"/>
</dbReference>
<dbReference type="GO" id="GO:1902530">
    <property type="term" value="P:positive regulation of protein linear polyubiquitination"/>
    <property type="evidence" value="ECO:0000316"/>
    <property type="project" value="ParkinsonsUK-UCL"/>
</dbReference>
<dbReference type="GO" id="GO:1905477">
    <property type="term" value="P:positive regulation of protein localization to membrane"/>
    <property type="evidence" value="ECO:0000315"/>
    <property type="project" value="ParkinsonsUK-UCL"/>
</dbReference>
<dbReference type="GO" id="GO:1905281">
    <property type="term" value="P:positive regulation of retrograde transport, endosome to Golgi"/>
    <property type="evidence" value="ECO:0000303"/>
    <property type="project" value="ParkinsonsUK-UCL"/>
</dbReference>
<dbReference type="GO" id="GO:0045944">
    <property type="term" value="P:positive regulation of transcription by RNA polymerase II"/>
    <property type="evidence" value="ECO:0000314"/>
    <property type="project" value="ParkinsonsUK-UCL"/>
</dbReference>
<dbReference type="GO" id="GO:1903265">
    <property type="term" value="P:positive regulation of tumor necrosis factor-mediated signaling pathway"/>
    <property type="evidence" value="ECO:0000314"/>
    <property type="project" value="ParkinsonsUK-UCL"/>
</dbReference>
<dbReference type="GO" id="GO:1905091">
    <property type="term" value="P:positive regulation of type 2 mitophagy"/>
    <property type="evidence" value="ECO:0000314"/>
    <property type="project" value="ParkinsonsUK-UCL"/>
</dbReference>
<dbReference type="GO" id="GO:0010498">
    <property type="term" value="P:proteasomal protein catabolic process"/>
    <property type="evidence" value="ECO:0000315"/>
    <property type="project" value="BHF-UCL"/>
</dbReference>
<dbReference type="GO" id="GO:0043161">
    <property type="term" value="P:proteasome-mediated ubiquitin-dependent protein catabolic process"/>
    <property type="evidence" value="ECO:0000314"/>
    <property type="project" value="ParkinsonsUK-UCL"/>
</dbReference>
<dbReference type="GO" id="GO:0051865">
    <property type="term" value="P:protein autoubiquitination"/>
    <property type="evidence" value="ECO:0000314"/>
    <property type="project" value="UniProtKB"/>
</dbReference>
<dbReference type="GO" id="GO:0031648">
    <property type="term" value="P:protein destabilization"/>
    <property type="evidence" value="ECO:0000314"/>
    <property type="project" value="UniProtKB"/>
</dbReference>
<dbReference type="GO" id="GO:0016579">
    <property type="term" value="P:protein deubiquitination"/>
    <property type="evidence" value="ECO:0000304"/>
    <property type="project" value="Reactome"/>
</dbReference>
<dbReference type="GO" id="GO:0070979">
    <property type="term" value="P:protein K11-linked ubiquitination"/>
    <property type="evidence" value="ECO:0000314"/>
    <property type="project" value="UniProtKB"/>
</dbReference>
<dbReference type="GO" id="GO:0044314">
    <property type="term" value="P:protein K27-linked ubiquitination"/>
    <property type="evidence" value="ECO:0000304"/>
    <property type="project" value="ParkinsonsUK-UCL"/>
</dbReference>
<dbReference type="GO" id="GO:0035519">
    <property type="term" value="P:protein K29-linked ubiquitination"/>
    <property type="evidence" value="ECO:0000304"/>
    <property type="project" value="ParkinsonsUK-UCL"/>
</dbReference>
<dbReference type="GO" id="GO:0070936">
    <property type="term" value="P:protein K48-linked ubiquitination"/>
    <property type="evidence" value="ECO:0000314"/>
    <property type="project" value="ParkinsonsUK-UCL"/>
</dbReference>
<dbReference type="GO" id="GO:0085020">
    <property type="term" value="P:protein K6-linked ubiquitination"/>
    <property type="evidence" value="ECO:0000314"/>
    <property type="project" value="UniProtKB"/>
</dbReference>
<dbReference type="GO" id="GO:0070534">
    <property type="term" value="P:protein K63-linked ubiquitination"/>
    <property type="evidence" value="ECO:0000314"/>
    <property type="project" value="UniProtKB"/>
</dbReference>
<dbReference type="GO" id="GO:0070585">
    <property type="term" value="P:protein localization to mitochondrion"/>
    <property type="evidence" value="ECO:0007669"/>
    <property type="project" value="Ensembl"/>
</dbReference>
<dbReference type="GO" id="GO:0006513">
    <property type="term" value="P:protein monoubiquitination"/>
    <property type="evidence" value="ECO:0000314"/>
    <property type="project" value="UniProtKB"/>
</dbReference>
<dbReference type="GO" id="GO:0000209">
    <property type="term" value="P:protein polyubiquitination"/>
    <property type="evidence" value="ECO:0000314"/>
    <property type="project" value="UniProtKB"/>
</dbReference>
<dbReference type="GO" id="GO:0050821">
    <property type="term" value="P:protein stabilization"/>
    <property type="evidence" value="ECO:0000315"/>
    <property type="project" value="UniProtKB"/>
</dbReference>
<dbReference type="GO" id="GO:0016567">
    <property type="term" value="P:protein ubiquitination"/>
    <property type="evidence" value="ECO:0000314"/>
    <property type="project" value="ParkinsonsUK-UCL"/>
</dbReference>
<dbReference type="GO" id="GO:0042981">
    <property type="term" value="P:regulation of apoptotic process"/>
    <property type="evidence" value="ECO:0000318"/>
    <property type="project" value="GO_Central"/>
</dbReference>
<dbReference type="GO" id="GO:0010506">
    <property type="term" value="P:regulation of autophagy"/>
    <property type="evidence" value="ECO:0000314"/>
    <property type="project" value="UniProtKB"/>
</dbReference>
<dbReference type="GO" id="GO:0060828">
    <property type="term" value="P:regulation of canonical Wnt signaling pathway"/>
    <property type="evidence" value="ECO:0000304"/>
    <property type="project" value="ParkinsonsUK-UCL"/>
</dbReference>
<dbReference type="GO" id="GO:1900407">
    <property type="term" value="P:regulation of cellular response to oxidative stress"/>
    <property type="evidence" value="ECO:0000314"/>
    <property type="project" value="ParkinsonsUK-UCL"/>
</dbReference>
<dbReference type="GO" id="GO:0042053">
    <property type="term" value="P:regulation of dopamine metabolic process"/>
    <property type="evidence" value="ECO:0000315"/>
    <property type="project" value="ParkinsonsUK-UCL"/>
</dbReference>
<dbReference type="GO" id="GO:0014059">
    <property type="term" value="P:regulation of dopamine secretion"/>
    <property type="evidence" value="ECO:0000304"/>
    <property type="project" value="ParkinsonsUK-UCL"/>
</dbReference>
<dbReference type="GO" id="GO:0010906">
    <property type="term" value="P:regulation of glucose metabolic process"/>
    <property type="evidence" value="ECO:0000304"/>
    <property type="project" value="ParkinsonsUK-UCL"/>
</dbReference>
<dbReference type="GO" id="GO:0032368">
    <property type="term" value="P:regulation of lipid transport"/>
    <property type="evidence" value="ECO:0000304"/>
    <property type="project" value="ParkinsonsUK-UCL"/>
</dbReference>
<dbReference type="GO" id="GO:0010821">
    <property type="term" value="P:regulation of mitochondrion organization"/>
    <property type="evidence" value="ECO:0000314"/>
    <property type="project" value="ParkinsonsUK-UCL"/>
</dbReference>
<dbReference type="GO" id="GO:0060544">
    <property type="term" value="P:regulation of necroptotic process"/>
    <property type="evidence" value="ECO:0000304"/>
    <property type="project" value="Reactome"/>
</dbReference>
<dbReference type="GO" id="GO:0099072">
    <property type="term" value="P:regulation of postsynaptic membrane neurotransmitter receptor levels"/>
    <property type="evidence" value="ECO:0007669"/>
    <property type="project" value="Ensembl"/>
</dbReference>
<dbReference type="GO" id="GO:0031647">
    <property type="term" value="P:regulation of protein stability"/>
    <property type="evidence" value="ECO:0000315"/>
    <property type="project" value="ParkinsonsUK-UCL"/>
</dbReference>
<dbReference type="GO" id="GO:1903214">
    <property type="term" value="P:regulation of protein targeting to mitochondrion"/>
    <property type="evidence" value="ECO:0000303"/>
    <property type="project" value="ParkinsonsUK-UCL"/>
</dbReference>
<dbReference type="GO" id="GO:0031396">
    <property type="term" value="P:regulation of protein ubiquitination"/>
    <property type="evidence" value="ECO:0000315"/>
    <property type="project" value="ParkinsonsUK-UCL"/>
</dbReference>
<dbReference type="GO" id="GO:2000377">
    <property type="term" value="P:regulation of reactive oxygen species metabolic process"/>
    <property type="evidence" value="ECO:0000315"/>
    <property type="project" value="UniProtKB"/>
</dbReference>
<dbReference type="GO" id="GO:1900242">
    <property type="term" value="P:regulation of synaptic vesicle endocytosis"/>
    <property type="evidence" value="ECO:0007669"/>
    <property type="project" value="Ensembl"/>
</dbReference>
<dbReference type="GO" id="GO:1902803">
    <property type="term" value="P:regulation of synaptic vesicle transport"/>
    <property type="evidence" value="ECO:0000303"/>
    <property type="project" value="ParkinsonsUK-UCL"/>
</dbReference>
<dbReference type="GO" id="GO:0140251">
    <property type="term" value="P:regulation protein catabolic process at presynapse"/>
    <property type="evidence" value="ECO:0007669"/>
    <property type="project" value="Ensembl"/>
</dbReference>
<dbReference type="GO" id="GO:0051412">
    <property type="term" value="P:response to corticosterone"/>
    <property type="evidence" value="ECO:0007669"/>
    <property type="project" value="Ensembl"/>
</dbReference>
<dbReference type="GO" id="GO:1904643">
    <property type="term" value="P:response to curcumin"/>
    <property type="evidence" value="ECO:0007669"/>
    <property type="project" value="Ensembl"/>
</dbReference>
<dbReference type="GO" id="GO:0034976">
    <property type="term" value="P:response to endoplasmic reticulum stress"/>
    <property type="evidence" value="ECO:0000315"/>
    <property type="project" value="ParkinsonsUK-UCL"/>
</dbReference>
<dbReference type="GO" id="GO:0014850">
    <property type="term" value="P:response to muscle activity"/>
    <property type="evidence" value="ECO:0007669"/>
    <property type="project" value="Ensembl"/>
</dbReference>
<dbReference type="GO" id="GO:0006979">
    <property type="term" value="P:response to oxidative stress"/>
    <property type="evidence" value="ECO:0000250"/>
    <property type="project" value="ParkinsonsUK-UCL"/>
</dbReference>
<dbReference type="GO" id="GO:0009410">
    <property type="term" value="P:response to xenobiotic stimulus"/>
    <property type="evidence" value="ECO:0007669"/>
    <property type="project" value="Ensembl"/>
</dbReference>
<dbReference type="GO" id="GO:0001964">
    <property type="term" value="P:startle response"/>
    <property type="evidence" value="ECO:0007669"/>
    <property type="project" value="Ensembl"/>
</dbReference>
<dbReference type="GO" id="GO:0035249">
    <property type="term" value="P:synaptic transmission, glutamatergic"/>
    <property type="evidence" value="ECO:0007669"/>
    <property type="project" value="Ensembl"/>
</dbReference>
<dbReference type="GO" id="GO:0061734">
    <property type="term" value="P:type 2 mitophagy"/>
    <property type="evidence" value="ECO:0000314"/>
    <property type="project" value="ParkinsonsUK-UCL"/>
</dbReference>
<dbReference type="GO" id="GO:0006511">
    <property type="term" value="P:ubiquitin-dependent protein catabolic process"/>
    <property type="evidence" value="ECO:0000314"/>
    <property type="project" value="UniProtKB"/>
</dbReference>
<dbReference type="CDD" id="cd20340">
    <property type="entry name" value="BRcat_RBR_parkin"/>
    <property type="match status" value="1"/>
</dbReference>
<dbReference type="CDD" id="cd20357">
    <property type="entry name" value="Rcat_RBR_parkin"/>
    <property type="match status" value="1"/>
</dbReference>
<dbReference type="CDD" id="cd16627">
    <property type="entry name" value="RING-HC_RBR_parkin"/>
    <property type="match status" value="1"/>
</dbReference>
<dbReference type="CDD" id="cd21382">
    <property type="entry name" value="RING0_parkin"/>
    <property type="match status" value="1"/>
</dbReference>
<dbReference type="CDD" id="cd01798">
    <property type="entry name" value="Ubl_parkin"/>
    <property type="match status" value="1"/>
</dbReference>
<dbReference type="DisProt" id="DP01849"/>
<dbReference type="FunFam" id="1.20.120.1750:FF:000009">
    <property type="entry name" value="E3 ubiquitin-protein ligase parkin"/>
    <property type="match status" value="1"/>
</dbReference>
<dbReference type="FunFam" id="2.20.25.20:FF:000008">
    <property type="entry name" value="E3 ubiquitin-protein ligase parkin"/>
    <property type="match status" value="1"/>
</dbReference>
<dbReference type="FunFam" id="3.10.20.90:FF:000142">
    <property type="entry name" value="E3 ubiquitin-protein ligase parkin"/>
    <property type="match status" value="1"/>
</dbReference>
<dbReference type="Gene3D" id="1.20.120.1750">
    <property type="match status" value="1"/>
</dbReference>
<dbReference type="Gene3D" id="2.20.25.20">
    <property type="match status" value="1"/>
</dbReference>
<dbReference type="Gene3D" id="3.10.20.90">
    <property type="entry name" value="Phosphatidylinositol 3-kinase Catalytic Subunit, Chain A, domain 1"/>
    <property type="match status" value="1"/>
</dbReference>
<dbReference type="IDEAL" id="IID00008"/>
<dbReference type="InterPro" id="IPR047534">
    <property type="entry name" value="BRcat_RBR_parkin"/>
</dbReference>
<dbReference type="InterPro" id="IPR002867">
    <property type="entry name" value="IBR_dom"/>
</dbReference>
<dbReference type="InterPro" id="IPR003977">
    <property type="entry name" value="Parkin"/>
</dbReference>
<dbReference type="InterPro" id="IPR054694">
    <property type="entry name" value="Parkin-like_IBR"/>
</dbReference>
<dbReference type="InterPro" id="IPR041565">
    <property type="entry name" value="Parkin_Znf-RING"/>
</dbReference>
<dbReference type="InterPro" id="IPR047536">
    <property type="entry name" value="Rcat_RBR_parkin"/>
</dbReference>
<dbReference type="InterPro" id="IPR047535">
    <property type="entry name" value="RING-HC_RBR_parkin"/>
</dbReference>
<dbReference type="InterPro" id="IPR044066">
    <property type="entry name" value="TRIAD_supradom"/>
</dbReference>
<dbReference type="InterPro" id="IPR015496">
    <property type="entry name" value="Ubiquilin"/>
</dbReference>
<dbReference type="InterPro" id="IPR000626">
    <property type="entry name" value="Ubiquitin-like_dom"/>
</dbReference>
<dbReference type="InterPro" id="IPR029071">
    <property type="entry name" value="Ubiquitin-like_domsf"/>
</dbReference>
<dbReference type="InterPro" id="IPR041170">
    <property type="entry name" value="Znf-RING_14"/>
</dbReference>
<dbReference type="PANTHER" id="PTHR10677">
    <property type="entry name" value="UBIQUILIN"/>
    <property type="match status" value="1"/>
</dbReference>
<dbReference type="PANTHER" id="PTHR10677:SF40">
    <property type="entry name" value="UBIQUITIN-LIKE DOMAIN-CONTAINING PROTEIN"/>
    <property type="match status" value="1"/>
</dbReference>
<dbReference type="Pfam" id="PF22605">
    <property type="entry name" value="IBR_2"/>
    <property type="match status" value="1"/>
</dbReference>
<dbReference type="Pfam" id="PF00240">
    <property type="entry name" value="ubiquitin"/>
    <property type="match status" value="1"/>
</dbReference>
<dbReference type="Pfam" id="PF17976">
    <property type="entry name" value="zf-RING_12"/>
    <property type="match status" value="1"/>
</dbReference>
<dbReference type="Pfam" id="PF17978">
    <property type="entry name" value="zf-RING_14"/>
    <property type="match status" value="1"/>
</dbReference>
<dbReference type="PIRSF" id="PIRSF037880">
    <property type="entry name" value="Parkin"/>
    <property type="match status" value="1"/>
</dbReference>
<dbReference type="PRINTS" id="PR01475">
    <property type="entry name" value="PARKIN"/>
</dbReference>
<dbReference type="SMART" id="SM00647">
    <property type="entry name" value="IBR"/>
    <property type="match status" value="2"/>
</dbReference>
<dbReference type="SMART" id="SM00213">
    <property type="entry name" value="UBQ"/>
    <property type="match status" value="1"/>
</dbReference>
<dbReference type="SUPFAM" id="SSF57850">
    <property type="entry name" value="RING/U-box"/>
    <property type="match status" value="1"/>
</dbReference>
<dbReference type="SUPFAM" id="SSF54236">
    <property type="entry name" value="Ubiquitin-like"/>
    <property type="match status" value="1"/>
</dbReference>
<dbReference type="PROSITE" id="PS51873">
    <property type="entry name" value="TRIAD"/>
    <property type="match status" value="1"/>
</dbReference>
<dbReference type="PROSITE" id="PS50053">
    <property type="entry name" value="UBIQUITIN_2"/>
    <property type="match status" value="1"/>
</dbReference>
<organism>
    <name type="scientific">Homo sapiens</name>
    <name type="common">Human</name>
    <dbReference type="NCBI Taxonomy" id="9606"/>
    <lineage>
        <taxon>Eukaryota</taxon>
        <taxon>Metazoa</taxon>
        <taxon>Chordata</taxon>
        <taxon>Craniata</taxon>
        <taxon>Vertebrata</taxon>
        <taxon>Euteleostomi</taxon>
        <taxon>Mammalia</taxon>
        <taxon>Eutheria</taxon>
        <taxon>Euarchontoglires</taxon>
        <taxon>Primates</taxon>
        <taxon>Haplorrhini</taxon>
        <taxon>Catarrhini</taxon>
        <taxon>Hominidae</taxon>
        <taxon>Homo</taxon>
    </lineage>
</organism>
<sequence>MIVFVRFNSSHGFPVEVDSDTSIFQLKEVVAKRQGVPADQLRVIFAGKELRNDWTVQNCDLDQQSIVHIVQRPWRKGQEMNATGGDDPRNAAGGCEREPQSLTRVDLSSSVLPGDSVGLAVILHTDSRKDSPPAGSPAGRSIYNSFYVYCKGPCQRVQPGKLRVQCSTCRQATLTLTQGPSCWDDVLIPNRMSGECQSPHCPGTSAEFFFKCGAHPTSDKETSVALHLIATNSRNITCITCTDVRSPVLVFQCNSRHVICLDCFHLYCVTRLNDRQFVHDPQLGYSLPCVAGCPNSLIKELHHFRILGEEQYNRYQQYGAEECVLQMGGVLCPRPGCGAGLLPEPDQRKVTCEGGNGLGCGFAFCRECKEAYHEGECSAVFEASGTTTQAYRVDERAAEQARWEAASKETIKKTTKPCPRCHVPVEKNGGCMHMKCPQPQCRLEWCWNCGCEWNRVCMGDHWFDV</sequence>
<gene>
    <name evidence="94" type="primary">PRKN</name>
    <name type="synonym">PARK2</name>
</gene>
<feature type="chain" id="PRO_0000058576" description="E3 ubiquitin-protein ligase parkin">
    <location>
        <begin position="1"/>
        <end position="465"/>
    </location>
</feature>
<feature type="domain" description="Ubiquitin-like" evidence="3">
    <location>
        <begin position="1"/>
        <end position="76"/>
    </location>
</feature>
<feature type="zinc finger region" description="RING-type 0; atypical">
    <location>
        <begin position="141"/>
        <end position="225"/>
    </location>
</feature>
<feature type="zinc finger region" description="RING-type 1" evidence="4">
    <location>
        <begin position="238"/>
        <end position="293"/>
    </location>
</feature>
<feature type="zinc finger region" description="IBR-type" evidence="4">
    <location>
        <begin position="313"/>
        <end position="377"/>
    </location>
</feature>
<feature type="zinc finger region" description="RING-type 2; atypical" evidence="4">
    <location>
        <begin position="418"/>
        <end position="449"/>
    </location>
</feature>
<feature type="region of interest" description="Necessary for PINK1-dependent localization to mitochondria" evidence="49">
    <location>
        <begin position="77"/>
        <end position="237"/>
    </location>
</feature>
<feature type="region of interest" description="Disordered" evidence="5">
    <location>
        <begin position="77"/>
        <end position="99"/>
    </location>
</feature>
<feature type="region of interest" description="SYT11 binding 1" evidence="35">
    <location>
        <begin position="204"/>
        <end position="238"/>
    </location>
</feature>
<feature type="region of interest" description="TRIAD supradomain" evidence="4">
    <location>
        <begin position="234"/>
        <end position="465"/>
    </location>
</feature>
<feature type="region of interest" description="SYT11 binding 2" evidence="35">
    <location>
        <begin position="257"/>
        <end position="293"/>
    </location>
</feature>
<feature type="region of interest" description="REP" evidence="1">
    <location>
        <begin position="378"/>
        <end position="410"/>
    </location>
</feature>
<feature type="active site" evidence="4 70">
    <location>
        <position position="431"/>
    </location>
</feature>
<feature type="binding site" evidence="4">
    <location>
        <position position="238"/>
    </location>
    <ligand>
        <name>Zn(2+)</name>
        <dbReference type="ChEBI" id="CHEBI:29105"/>
        <label>1</label>
    </ligand>
</feature>
<feature type="binding site" evidence="4">
    <location>
        <position position="241"/>
    </location>
    <ligand>
        <name>Zn(2+)</name>
        <dbReference type="ChEBI" id="CHEBI:29105"/>
        <label>1</label>
    </ligand>
</feature>
<feature type="binding site" evidence="4">
    <location>
        <position position="253"/>
    </location>
    <ligand>
        <name>Zn(2+)</name>
        <dbReference type="ChEBI" id="CHEBI:29105"/>
        <label>2</label>
    </ligand>
</feature>
<feature type="binding site" evidence="4">
    <location>
        <position position="257"/>
    </location>
    <ligand>
        <name>Zn(2+)</name>
        <dbReference type="ChEBI" id="CHEBI:29105"/>
        <label>2</label>
    </ligand>
</feature>
<feature type="binding site" evidence="4">
    <location>
        <position position="260"/>
    </location>
    <ligand>
        <name>Zn(2+)</name>
        <dbReference type="ChEBI" id="CHEBI:29105"/>
        <label>1</label>
    </ligand>
</feature>
<feature type="binding site" evidence="4">
    <location>
        <position position="263"/>
    </location>
    <ligand>
        <name>Zn(2+)</name>
        <dbReference type="ChEBI" id="CHEBI:29105"/>
        <label>1</label>
    </ligand>
</feature>
<feature type="binding site" evidence="4">
    <location>
        <position position="289"/>
    </location>
    <ligand>
        <name>Zn(2+)</name>
        <dbReference type="ChEBI" id="CHEBI:29105"/>
        <label>2</label>
    </ligand>
</feature>
<feature type="binding site" evidence="4">
    <location>
        <position position="293"/>
    </location>
    <ligand>
        <name>Zn(2+)</name>
        <dbReference type="ChEBI" id="CHEBI:29105"/>
        <label>2</label>
    </ligand>
</feature>
<feature type="binding site" evidence="4 70">
    <location>
        <position position="332"/>
    </location>
    <ligand>
        <name>Zn(2+)</name>
        <dbReference type="ChEBI" id="CHEBI:29105"/>
        <label>3</label>
    </ligand>
</feature>
<feature type="binding site" evidence="4 70">
    <location>
        <position position="337"/>
    </location>
    <ligand>
        <name>Zn(2+)</name>
        <dbReference type="ChEBI" id="CHEBI:29105"/>
        <label>3</label>
    </ligand>
</feature>
<feature type="binding site" evidence="4 70">
    <location>
        <position position="352"/>
    </location>
    <ligand>
        <name>Zn(2+)</name>
        <dbReference type="ChEBI" id="CHEBI:29105"/>
        <label>3</label>
    </ligand>
</feature>
<feature type="binding site" evidence="4 70">
    <location>
        <position position="360"/>
    </location>
    <ligand>
        <name>Zn(2+)</name>
        <dbReference type="ChEBI" id="CHEBI:29105"/>
        <label>3</label>
    </ligand>
</feature>
<feature type="binding site" evidence="4 70">
    <location>
        <position position="365"/>
    </location>
    <ligand>
        <name>Zn(2+)</name>
        <dbReference type="ChEBI" id="CHEBI:29105"/>
        <label>4</label>
    </ligand>
</feature>
<feature type="binding site" evidence="4 70">
    <location>
        <position position="368"/>
    </location>
    <ligand>
        <name>Zn(2+)</name>
        <dbReference type="ChEBI" id="CHEBI:29105"/>
        <label>4</label>
    </ligand>
</feature>
<feature type="binding site" evidence="4">
    <location>
        <position position="373"/>
    </location>
    <ligand>
        <name>Zn(2+)</name>
        <dbReference type="ChEBI" id="CHEBI:29105"/>
        <label>4</label>
    </ligand>
</feature>
<feature type="binding site" evidence="4 70">
    <location>
        <position position="377"/>
    </location>
    <ligand>
        <name>Zn(2+)</name>
        <dbReference type="ChEBI" id="CHEBI:29105"/>
        <label>4</label>
    </ligand>
</feature>
<feature type="binding site" evidence="4 70">
    <location>
        <position position="418"/>
    </location>
    <ligand>
        <name>Zn(2+)</name>
        <dbReference type="ChEBI" id="CHEBI:29105"/>
        <label>5</label>
    </ligand>
</feature>
<feature type="binding site" evidence="4 70">
    <location>
        <position position="421"/>
    </location>
    <ligand>
        <name>Zn(2+)</name>
        <dbReference type="ChEBI" id="CHEBI:29105"/>
        <label>5</label>
    </ligand>
</feature>
<feature type="binding site" evidence="4 70">
    <location>
        <position position="436"/>
    </location>
    <ligand>
        <name>Zn(2+)</name>
        <dbReference type="ChEBI" id="CHEBI:29105"/>
        <label>5</label>
    </ligand>
</feature>
<feature type="binding site" evidence="4 70">
    <location>
        <position position="441"/>
    </location>
    <ligand>
        <name>Zn(2+)</name>
        <dbReference type="ChEBI" id="CHEBI:29105"/>
        <label>5</label>
    </ligand>
</feature>
<feature type="binding site" evidence="4 70">
    <location>
        <position position="446"/>
    </location>
    <ligand>
        <name>Zn(2+)</name>
        <dbReference type="ChEBI" id="CHEBI:29105"/>
        <label>6</label>
    </ligand>
</feature>
<feature type="binding site" evidence="4">
    <location>
        <position position="449"/>
    </location>
    <ligand>
        <name>Zn(2+)</name>
        <dbReference type="ChEBI" id="CHEBI:29105"/>
        <label>6</label>
    </ligand>
</feature>
<feature type="binding site" evidence="4">
    <location>
        <position position="457"/>
    </location>
    <ligand>
        <name>Zn(2+)</name>
        <dbReference type="ChEBI" id="CHEBI:29105"/>
        <label>6</label>
    </ligand>
</feature>
<feature type="binding site" evidence="4">
    <location>
        <position position="461"/>
    </location>
    <ligand>
        <name>Zn(2+)</name>
        <dbReference type="ChEBI" id="CHEBI:29105"/>
        <label>6</label>
    </ligand>
</feature>
<feature type="modified residue" description="Phosphoserine; by PINK1" evidence="49 68 73 75 78">
    <location>
        <position position="65"/>
    </location>
</feature>
<feature type="modified residue" description="Phosphothreonine; by PINK1" evidence="49">
    <location>
        <position position="175"/>
    </location>
</feature>
<feature type="modified residue" description="Phosphothreonine" evidence="49">
    <location>
        <position position="217"/>
    </location>
</feature>
<feature type="cross-link" description="Glycyl lysine isopeptide (Lys-Gly) (interchain with G-Cter in ISG15)" evidence="81">
    <location>
        <position position="349"/>
    </location>
</feature>
<feature type="cross-link" description="Glycyl lysine isopeptide (Lys-Gly) (interchain with G-Cter in ISG15)" evidence="81">
    <location>
        <position position="369"/>
    </location>
</feature>
<feature type="splice variant" id="VSP_011705" description="In isoform 4." evidence="90">
    <location>
        <begin position="1"/>
        <end position="191"/>
    </location>
</feature>
<feature type="splice variant" id="VSP_011706" description="In isoform 3." evidence="90">
    <location>
        <begin position="1"/>
        <end position="79"/>
    </location>
</feature>
<feature type="splice variant" id="VSP_041563" description="In isoform 6." evidence="92">
    <location>
        <begin position="58"/>
        <end position="206"/>
    </location>
</feature>
<feature type="splice variant" id="VSP_011707" description="In isoform 2 and isoform 7." evidence="89 91">
    <location>
        <begin position="179"/>
        <end position="206"/>
    </location>
</feature>
<feature type="splice variant" id="VSP_011708" description="In isoform 5." evidence="88">
    <original>V</original>
    <variation>VGTGDTVVLRGALGGFRRGV</variation>
    <location>
        <position position="290"/>
    </location>
</feature>
<feature type="splice variant" id="VSP_011709" description="In isoform 3." evidence="90">
    <original>AGCPNSL</original>
    <variation>VCLLPGM</variation>
    <location>
        <begin position="291"/>
        <end position="297"/>
    </location>
</feature>
<feature type="splice variant" id="VSP_011710" description="In isoform 3." evidence="90">
    <location>
        <begin position="298"/>
        <end position="465"/>
    </location>
</feature>
<feature type="splice variant" id="VSP_053651" description="In isoform 7 and isoform 8." evidence="91">
    <location>
        <begin position="312"/>
        <end position="361"/>
    </location>
</feature>
<feature type="splice variant" id="VSP_011711" description="In isoform 5." evidence="88">
    <original>FAFCREC</original>
    <variation>YGQRRTK</variation>
    <location>
        <begin position="362"/>
        <end position="368"/>
    </location>
</feature>
<feature type="splice variant" id="VSP_011712" description="In isoform 5." evidence="88">
    <location>
        <begin position="369"/>
        <end position="465"/>
    </location>
</feature>
<feature type="sequence variant" id="VAR_019733" description="In PARK2; dbSNP:rs532703934." evidence="28">
    <original>V</original>
    <variation>M</variation>
    <location>
        <position position="15"/>
    </location>
</feature>
<feature type="sequence variant" id="VAR_019734" description="In PARK2; dbSNP:rs147757966." evidence="33">
    <original>R</original>
    <variation>Q</variation>
    <location>
        <position position="33"/>
    </location>
</feature>
<feature type="sequence variant" id="VAR_019735" description="In PARK2; dbSNP:rs148990138." evidence="23">
    <original>P</original>
    <variation>L</variation>
    <location>
        <position position="37"/>
    </location>
</feature>
<feature type="sequence variant" id="VAR_019736" description="In PARK2 and PARK; induces a conformational change in the PSMD4-binding site of Ubl resulting in impaired proteasomal binding; decreases ubiquitination and degradation; increased aggregation; impairs the ability to ubiquitinate and degrade SYT11; dbSNP:rs368134308." evidence="10 17 21 39 51 57 83">
    <original>R</original>
    <variation>P</variation>
    <location>
        <position position="42"/>
    </location>
</feature>
<feature type="sequence variant" id="VAR_019737" description="In PARK2." evidence="27">
    <original>A</original>
    <variation>P</variation>
    <location>
        <position position="46"/>
    </location>
</feature>
<feature type="sequence variant" id="VAR_070078" description="In PARK2; dbSNP:rs137853059." evidence="22">
    <original>V</original>
    <variation>E</variation>
    <location>
        <position position="56"/>
    </location>
</feature>
<feature type="sequence variant" id="VAR_019738" description="In PARK2; dbSNP:rs55774500." evidence="19 25 33">
    <original>A</original>
    <variation>E</variation>
    <location>
        <position position="82"/>
    </location>
</feature>
<feature type="sequence variant" id="VAR_019739" description="In PARK2; dbSNP:rs566229879.">
    <original>A</original>
    <variation>V</variation>
    <location>
        <position position="92"/>
    </location>
</feature>
<feature type="sequence variant" id="VAR_019740" description="In dbSNP:rs1256316516." evidence="34">
    <original>Q</original>
    <variation>H</variation>
    <location>
        <position position="100"/>
    </location>
</feature>
<feature type="sequence variant" id="VAR_019741" description="In PARK2; severely compromises the mitochondrial localization; fails to stabilize BCL2; decreased binding to the TP53 promoter; abolishes TP53 transcriptional repression; dbSNP:rs137853057." evidence="6 9 53 55 58">
    <original>K</original>
    <variation>N</variation>
    <location>
        <position position="161"/>
    </location>
</feature>
<feature type="sequence variant" id="VAR_019742" description="In dbSNP:rs1801474." evidence="6 8 12 30">
    <original>S</original>
    <variation>N</variation>
    <location>
        <position position="167"/>
    </location>
</feature>
<feature type="sequence variant" id="VAR_054107" description="In PARK2; uncertain significance; dbSNP:rs9456735." evidence="21">
    <original>M</original>
    <variation>L</variation>
    <location>
        <position position="192"/>
    </location>
</feature>
<feature type="sequence variant" id="VAR_019743" description="In PARK2; uncertain significance; dbSNP:rs9456735." evidence="30">
    <original>M</original>
    <variation>V</variation>
    <location>
        <position position="192"/>
    </location>
</feature>
<feature type="sequence variant" id="VAR_019744" description="In PARK2; severely compromises the mitochondrial localization; fails to stabilize BCL2; loss of activity towards MIRO1; dbSNP:rs137853060." evidence="9 16 24 30 55 63">
    <original>K</original>
    <variation>N</variation>
    <location>
        <position position="211"/>
    </location>
</feature>
<feature type="sequence variant" id="VAR_019746" description="In PARK2; dbSNP:rs137853058." evidence="15 22">
    <original>C</original>
    <variation>Y</variation>
    <location>
        <position position="212"/>
    </location>
</feature>
<feature type="sequence variant" id="VAR_019747" description="In PARK2; dbSNP:rs137853054." evidence="30">
    <original>T</original>
    <variation>M</variation>
    <location>
        <position position="240"/>
    </location>
</feature>
<feature type="sequence variant" id="VAR_019748" description="In PARK2; impairs the ability to ubiquitinate SNCAIP and BCL2; loss of UBE2L3 binding; severely compromises the mitochondrial localization; dbSNP:rs137853054." evidence="10 17 20 55 58 87">
    <original>T</original>
    <variation>R</variation>
    <location>
        <position position="240"/>
    </location>
</feature>
<feature type="sequence variant" id="VAR_019749" description="In PARK; late onset; dbSNP:rs747427602." evidence="33">
    <original>C</original>
    <variation>Y</variation>
    <location>
        <position position="253"/>
    </location>
</feature>
<feature type="sequence variant" id="VAR_019750" description="In PARK2 and PARK; uncertain significance; impairs the ability to ubiquitinate SNCAIP and ZNF746; decreased binding to the TP53 promoter; abolishes TP53 transcriptional repression; dbSNP:rs150562946." evidence="6 9 20 21 25 33 53">
    <original>R</original>
    <variation>C</variation>
    <location>
        <position position="256"/>
    </location>
</feature>
<feature type="sequence variant" id="VAR_019751" description="In dbSNP:rs772622421." evidence="34">
    <original>R</original>
    <variation>S</variation>
    <location>
        <position position="271"/>
    </location>
</feature>
<feature type="sequence variant" id="VAR_019752" description="In PARK2 and PARK; impairs the ability to ubiquitinate SNCAIP; abolishes p53/TP53 transcriptional repression; impairs the ability to ubiquitinate and degrade SYT11; dbSNP:rs34424986." evidence="6 9 16 20 21 24 25 33 53 59 64 83">
    <original>R</original>
    <variation>W</variation>
    <location>
        <position position="275"/>
    </location>
</feature>
<feature type="sequence variant" id="VAR_019753" description="In PARK; does not affect PINK-1 dependent localization to depolarized mitochondria; dbSNP:rs72480422." evidence="9 33 55">
    <original>D</original>
    <variation>N</variation>
    <location>
        <position position="280"/>
    </location>
</feature>
<feature type="sequence variant" id="VAR_019754" description="In PARK2; dbSNP:rs751037529.">
    <original>G</original>
    <variation>R</variation>
    <location>
        <position position="284"/>
    </location>
</feature>
<feature type="sequence variant" id="VAR_019755" description="In PARK2; increased aggregation; fails to ubiquitinate SYT11; loses ability to bind SYT11; impaired relocalization to damaged mitochondria; loss of function in mitophagy; dbSNP:rs55961220." evidence="9 35 57">
    <original>C</original>
    <variation>G</variation>
    <location>
        <position position="289"/>
    </location>
</feature>
<feature type="sequence variant" id="VAR_062672" description="In a patient with Parkinson disease; uncertain significance." evidence="52">
    <original>Q</original>
    <variation>R</variation>
    <location>
        <position position="311"/>
    </location>
</feature>
<feature type="sequence variant" id="VAR_019756" description="In PARK2; does not affect PINK-1 dependent localization to depolarized mitochondria." evidence="9 25 55">
    <original>G</original>
    <variation>E</variation>
    <location>
        <position position="328"/>
    </location>
</feature>
<feature type="sequence variant" id="VAR_019757" description="In dbSNP:rs199657839." evidence="9 82">
    <original>R</original>
    <variation>C</variation>
    <location>
        <position position="334"/>
    </location>
</feature>
<feature type="sequence variant" id="VAR_019758" description="In dbSNP:rs1554274880." evidence="34">
    <original>A</original>
    <variation>S</variation>
    <location>
        <position position="339"/>
    </location>
</feature>
<feature type="sequence variant" id="VAR_019759" description="In PARK2; impairs folding of IBR domain; dbSNP:rs1554274861." evidence="23 46">
    <original>T</original>
    <variation>P</variation>
    <location>
        <position position="351"/>
    </location>
</feature>
<feature type="sequence variant" id="VAR_019760" description="In dbSNP:rs56092260." evidence="12">
    <original>R</original>
    <variation>W</variation>
    <location>
        <position position="366"/>
    </location>
</feature>
<feature type="sequence variant" id="VAR_062673" description="In a patient with Parkinson disease; uncertain significance." evidence="52">
    <original>A</original>
    <variation>T</variation>
    <location>
        <position position="371"/>
    </location>
</feature>
<feature type="sequence variant" id="VAR_019761" description="In dbSNP:rs1801582." evidence="6 12 28 33">
    <original>V</original>
    <variation>L</variation>
    <location>
        <position position="380"/>
    </location>
</feature>
<feature type="sequence variant" id="VAR_019762" description="In dbSNP:rs1801334." evidence="6 28 33">
    <original>D</original>
    <variation>N</variation>
    <location>
        <position position="394"/>
    </location>
</feature>
<feature type="sequence variant" id="VAR_070079" description="In PARK2; dbSNP:rs55830907." evidence="39">
    <original>R</original>
    <variation>C</variation>
    <location>
        <position position="402"/>
    </location>
</feature>
<feature type="sequence variant" id="VAR_019763" description="In PARK2; loss of activity and self-ubiquitination; impairs the ability to ubiquitinate SNCAIP; no effect on polyubiquitination or mitophagy; does not affect turnover of CDCRE1; impairs PINK1-dependent localization to dysfunctional depolarized mitochondria; dbSNP:rs778125254." evidence="6 9 20 39 54 63 70 84">
    <original>T</original>
    <variation>N</variation>
    <location>
        <position position="415"/>
    </location>
</feature>
<feature type="sequence variant" id="VAR_070080" description="In PARK2; decreased binding to the TP53 promoter; abolishes TP53 transcriptional repression; fails to ubiquitinate SYT11 but does not loose ability to bind SYT11; dbSNP:rs1554252200." evidence="35 39 53">
    <original>C</original>
    <variation>R</variation>
    <location>
        <position position="418"/>
    </location>
</feature>
<feature type="sequence variant" id="VAR_019764" description="In PARK2; loss of self-ubiquitination; impairs PINK1-dependent localization to dysfunctional depolarized mitochondria; impaired E3 ubiquitin-protein ligase toward ZNF746; dbSNP:rs191486604." evidence="9 16 21 24 33 54 59 70">
    <original>G</original>
    <variation>D</variation>
    <location>
        <position position="430"/>
    </location>
</feature>
<feature type="sequence variant" id="VAR_019765" description="In PARK2; impaired E3 ubiquitin-protein ligase toward ZNF746 and BCL2; dbSNP:rs397514694." evidence="11 58 59">
    <original>C</original>
    <variation>F</variation>
    <location>
        <position position="431"/>
    </location>
</feature>
<feature type="sequence variant" id="VAR_019766" description="In PARK2; impaired E3 ubiquitin-protein ligase toward BCL2; dbSNP:rs149953814." evidence="21 24 30 33 58">
    <original>P</original>
    <variation>L</variation>
    <location>
        <position position="437"/>
    </location>
</feature>
<feature type="sequence variant" id="VAR_019767" description="In PARK2; decreased binding to the TP53 promoter; abolishes TP53 transcriptional repression; dbSNP:rs778305273." evidence="25 53">
    <original>C</original>
    <variation>R</variation>
    <location>
        <position position="441"/>
    </location>
</feature>
<feature type="mutagenesis site" description="Loss of phosphorylation. Undergoes autoubiquitination in the presence of phosphorylated ubiquitin." evidence="78">
    <original>S</original>
    <variation>A</variation>
    <location>
        <position position="65"/>
    </location>
</feature>
<feature type="mutagenesis site" description="Phosphomimetic mutant; still requires PINK1 for activation. PRKN is activated in presence of phosphorylated ubiquitin." evidence="73 75 78">
    <original>S</original>
    <variation>E</variation>
    <location>
        <position position="65"/>
    </location>
</feature>
<feature type="mutagenesis site" description="Loss of phosphorylation. Reduced mitochondrial localization; when associated with A-217." evidence="49">
    <original>T</original>
    <variation>A</variation>
    <location>
        <position position="175"/>
    </location>
</feature>
<feature type="mutagenesis site" description="Phosphomimetic mutant. Mostly localizes to the mitochondria; when associated with E-217." evidence="49">
    <original>T</original>
    <variation>E</variation>
    <location>
        <position position="175"/>
    </location>
</feature>
<feature type="mutagenesis site" description="Loss of phosphorylation. Reduced mitochondrial localization; when associated with A-175." evidence="49">
    <original>T</original>
    <variation>A</variation>
    <location>
        <position position="217"/>
    </location>
</feature>
<feature type="mutagenesis site" description="Phosphomimetic mutant. Mostly localizes to the mitochondria; when associated with E-175." evidence="49">
    <original>T</original>
    <variation>E</variation>
    <location>
        <position position="217"/>
    </location>
</feature>
<feature type="mutagenesis site" description="Loss of mitochondrial localization." evidence="49">
    <original>C</original>
    <variation>S</variation>
    <location>
        <position position="238"/>
    </location>
</feature>
<feature type="mutagenesis site" description="Impairs folding of IBR domain." evidence="46">
    <original>C</original>
    <variation>S</variation>
    <location>
        <position position="332"/>
    </location>
</feature>
<feature type="mutagenesis site" description="Impairs the ability to ubiquitinate SNCAIP." evidence="20">
    <original>C</original>
    <variation>A</variation>
    <location>
        <position position="337"/>
    </location>
</feature>
<feature type="mutagenesis site" description="Impairs protein folding." evidence="46">
    <original>C</original>
    <variation>S</variation>
    <location>
        <position position="365"/>
    </location>
</feature>
<feature type="mutagenesis site" description="Decreased autoinhibition and increased E3 activity." evidence="75">
    <original>W</original>
    <variation>A</variation>
    <location>
        <position position="403"/>
    </location>
</feature>
<feature type="mutagenesis site" description="Impairs the ability of self-ubiquitination and to ubiquitinate SNCAIP." evidence="20 48">
    <original>C</original>
    <variation>A</variation>
    <location>
        <position position="421"/>
    </location>
</feature>
<feature type="mutagenesis site" description="Reduced self-ubiquitination." evidence="70">
    <original>G</original>
    <variation>E</variation>
    <location>
        <position position="429"/>
    </location>
</feature>
<feature type="mutagenesis site" description="Loss of activity." evidence="70">
    <original>C</original>
    <variation>A</variation>
    <location>
        <position position="431"/>
    </location>
</feature>
<feature type="mutagenesis site" description="Impairs the ability to ubiquitinate target proteins. No effect on translocation to mitochondria." evidence="20 67 69 78 84">
    <original>C</original>
    <variation>S</variation>
    <location>
        <position position="431"/>
    </location>
</feature>
<feature type="mutagenesis site" description="Impaired activity." evidence="67 69">
    <original>H</original>
    <variation>N</variation>
    <variation>A</variation>
    <location>
        <position position="433"/>
    </location>
</feature>
<feature type="mutagenesis site" description="Impaired activity." evidence="67 69">
    <original>E</original>
    <variation>Q</variation>
    <variation>A</variation>
    <location>
        <position position="444"/>
    </location>
</feature>
<feature type="sequence conflict" description="In Ref. 1; BAA25751 and 3; AAM21458/AAM21457." evidence="92" ref="1 3">
    <original>S</original>
    <variation>P</variation>
    <location>
        <position position="223"/>
    </location>
</feature>
<feature type="sequence conflict" description="In Ref. 2; AAM21461." evidence="92" ref="2">
    <original>CV</original>
    <variation>MI</variation>
    <location>
        <begin position="289"/>
        <end position="290"/>
    </location>
</feature>
<feature type="sequence conflict" description="In Ref. 9; AAS88422." evidence="92" ref="9">
    <original>A</original>
    <variation>V</variation>
    <location>
        <position position="339"/>
    </location>
</feature>
<feature type="strand" evidence="99">
    <location>
        <begin position="2"/>
        <end position="11"/>
    </location>
</feature>
<feature type="strand" evidence="99">
    <location>
        <begin position="13"/>
        <end position="16"/>
    </location>
</feature>
<feature type="strand" evidence="95">
    <location>
        <begin position="19"/>
        <end position="21"/>
    </location>
</feature>
<feature type="helix" evidence="99">
    <location>
        <begin position="23"/>
        <end position="34"/>
    </location>
</feature>
<feature type="helix" evidence="99">
    <location>
        <begin position="38"/>
        <end position="40"/>
    </location>
</feature>
<feature type="strand" evidence="99">
    <location>
        <begin position="41"/>
        <end position="45"/>
    </location>
</feature>
<feature type="strand" evidence="99">
    <location>
        <begin position="48"/>
        <end position="50"/>
    </location>
</feature>
<feature type="turn" evidence="95">
    <location>
        <begin position="52"/>
        <end position="55"/>
    </location>
</feature>
<feature type="helix" evidence="99">
    <location>
        <begin position="56"/>
        <end position="59"/>
    </location>
</feature>
<feature type="turn" evidence="100">
    <location>
        <begin position="62"/>
        <end position="64"/>
    </location>
</feature>
<feature type="strand" evidence="99">
    <location>
        <begin position="66"/>
        <end position="71"/>
    </location>
</feature>
<feature type="helix" evidence="102">
    <location>
        <begin position="102"/>
        <end position="104"/>
    </location>
</feature>
<feature type="strand" evidence="97">
    <location>
        <begin position="147"/>
        <end position="150"/>
    </location>
</feature>
<feature type="turn" evidence="97">
    <location>
        <begin position="152"/>
        <end position="154"/>
    </location>
</feature>
<feature type="strand" evidence="97">
    <location>
        <begin position="156"/>
        <end position="166"/>
    </location>
</feature>
<feature type="turn" evidence="97">
    <location>
        <begin position="167"/>
        <end position="169"/>
    </location>
</feature>
<feature type="strand" evidence="97">
    <location>
        <begin position="174"/>
        <end position="178"/>
    </location>
</feature>
<feature type="helix" evidence="97">
    <location>
        <begin position="183"/>
        <end position="187"/>
    </location>
</feature>
<feature type="strand" evidence="105">
    <location>
        <begin position="188"/>
        <end position="190"/>
    </location>
</feature>
<feature type="strand" evidence="97">
    <location>
        <begin position="192"/>
        <end position="196"/>
    </location>
</feature>
<feature type="strand" evidence="101">
    <location>
        <begin position="198"/>
        <end position="200"/>
    </location>
</feature>
<feature type="strand" evidence="97">
    <location>
        <begin position="205"/>
        <end position="212"/>
    </location>
</feature>
<feature type="strand" evidence="98">
    <location>
        <begin position="223"/>
        <end position="225"/>
    </location>
</feature>
<feature type="turn" evidence="97">
    <location>
        <begin position="239"/>
        <end position="241"/>
    </location>
</feature>
<feature type="strand" evidence="97">
    <location>
        <begin position="246"/>
        <end position="250"/>
    </location>
</feature>
<feature type="strand" evidence="97">
    <location>
        <begin position="257"/>
        <end position="260"/>
    </location>
</feature>
<feature type="helix" evidence="97">
    <location>
        <begin position="261"/>
        <end position="273"/>
    </location>
</feature>
<feature type="strand" evidence="97">
    <location>
        <begin position="278"/>
        <end position="280"/>
    </location>
</feature>
<feature type="turn" evidence="97">
    <location>
        <begin position="281"/>
        <end position="283"/>
    </location>
</feature>
<feature type="strand" evidence="97">
    <location>
        <begin position="284"/>
        <end position="286"/>
    </location>
</feature>
<feature type="strand" evidence="103">
    <location>
        <begin position="290"/>
        <end position="292"/>
    </location>
</feature>
<feature type="helix" evidence="97">
    <location>
        <begin position="301"/>
        <end position="307"/>
    </location>
</feature>
<feature type="helix" evidence="97">
    <location>
        <begin position="309"/>
        <end position="326"/>
    </location>
</feature>
<feature type="turn" evidence="97">
    <location>
        <begin position="335"/>
        <end position="337"/>
    </location>
</feature>
<feature type="strand" evidence="102">
    <location>
        <begin position="340"/>
        <end position="342"/>
    </location>
</feature>
<feature type="strand" evidence="97">
    <location>
        <begin position="348"/>
        <end position="351"/>
    </location>
</feature>
<feature type="turn" evidence="104">
    <location>
        <begin position="355"/>
        <end position="358"/>
    </location>
</feature>
<feature type="strand" evidence="97">
    <location>
        <begin position="363"/>
        <end position="365"/>
    </location>
</feature>
<feature type="turn" evidence="97">
    <location>
        <begin position="366"/>
        <end position="368"/>
    </location>
</feature>
<feature type="strand" evidence="102">
    <location>
        <begin position="374"/>
        <end position="376"/>
    </location>
</feature>
<feature type="helix" evidence="96">
    <location>
        <begin position="379"/>
        <end position="381"/>
    </location>
</feature>
<feature type="helix" evidence="97">
    <location>
        <begin position="395"/>
        <end position="400"/>
    </location>
</feature>
<feature type="turn" evidence="104">
    <location>
        <begin position="403"/>
        <end position="406"/>
    </location>
</feature>
<feature type="strand" evidence="97">
    <location>
        <begin position="414"/>
        <end position="417"/>
    </location>
</feature>
<feature type="turn" evidence="97">
    <location>
        <begin position="419"/>
        <end position="421"/>
    </location>
</feature>
<feature type="strand" evidence="97">
    <location>
        <begin position="424"/>
        <end position="426"/>
    </location>
</feature>
<feature type="strand" evidence="97">
    <location>
        <begin position="429"/>
        <end position="431"/>
    </location>
</feature>
<feature type="strand" evidence="97">
    <location>
        <begin position="433"/>
        <end position="435"/>
    </location>
</feature>
<feature type="turn" evidence="97">
    <location>
        <begin position="439"/>
        <end position="441"/>
    </location>
</feature>
<feature type="strand" evidence="97">
    <location>
        <begin position="444"/>
        <end position="446"/>
    </location>
</feature>
<feature type="turn" evidence="97">
    <location>
        <begin position="447"/>
        <end position="449"/>
    </location>
</feature>
<feature type="helix" evidence="97">
    <location>
        <begin position="455"/>
        <end position="461"/>
    </location>
</feature>
<name>PRKN_HUMAN</name>
<comment type="function">
    <text evidence="10 13 17 18 20 26 29 32 38 40 42 47 48 49 50 51 53 54 58 59 60 61 62 63 65 66 68 71 73 74 75 76 78 79 80 81 83 84 85">Functions within a multiprotein E3 ubiquitin ligase complex, catalyzing the covalent attachment of ubiquitin moieties onto substrate proteins (PubMed:10888878, PubMed:10973942, PubMed:11431533, PubMed:12150907, PubMed:12628165, PubMed:15105460, PubMed:16135753, PubMed:21376232, PubMed:21532592, PubMed:22396657, PubMed:23620051, PubMed:23754282, PubMed:24660806, PubMed:24751536, PubMed:29311685, PubMed:32047033). Substrates include SYT11 and VDAC1 (PubMed:29311685, PubMed:32047033). Other substrates are BCL2, CCNE1, GPR37, RHOT1/MIRO1, MFN1, MFN2, STUB1, SNCAIP, SEPTIN5, TOMM20, USP30, ZNF746, MIRO1 and AIMP2 (PubMed:10888878, PubMed:10973942, PubMed:11431533, PubMed:12150907, PubMed:12628165, PubMed:15105460, PubMed:16135753, PubMed:21376232, PubMed:21532592, PubMed:22396657, PubMed:23620051, PubMed:23754282, PubMed:24660806, PubMed:24751536). Mediates monoubiquitination as well as 'Lys-6', 'Lys-11', 'Lys-48'-linked and 'Lys-63'-linked polyubiquitination of substrates depending on the context (PubMed:19229105, PubMed:20889974, PubMed:25474007, PubMed:25621951, PubMed:32047033). Participates in the removal and/or detoxification of abnormally folded or damaged protein by mediating 'Lys-63'-linked polyubiquitination of misfolded proteins such as PARK7: 'Lys-63'-linked polyubiquitinated misfolded proteins are then recognized by HDAC6, leading to their recruitment to aggresomes, followed by degradation (PubMed:17846173, PubMed:19229105). Mediates 'Lys-63'-linked polyubiquitination of a 22 kDa O-linked glycosylated isoform of SNCAIP, possibly playing a role in Lewy-body formation (PubMed:11431533, PubMed:11590439, PubMed:15105460, PubMed:15728840, PubMed:19229105). Mediates monoubiquitination of BCL2, thereby acting as a positive regulator of autophagy (PubMed:20889974). Protects against mitochondrial dysfunction during cellular stress, by acting downstream of PINK1 to coordinate mitochondrial quality control mechanisms that remove and replace dysfunctional mitochondrial components (PubMed:11439185, PubMed:18957282, PubMed:19029340, PubMed:19966284, PubMed:21376232, PubMed:22082830, PubMed:22396657, PubMed:23620051, PubMed:23933751, PubMed:24660806, PubMed:24784582, PubMed:24896179, PubMed:25474007, PubMed:25527291, PubMed:32047033). Depending on the severity of mitochondrial damage and/or dysfunction, activity ranges from preventing apoptosis and stimulating mitochondrial biogenesis to regulating mitochondrial dynamics and eliminating severely damaged mitochondria via mitophagy (PubMed:11439185, PubMed:19029340, PubMed:19801972, PubMed:19966284, PubMed:21376232, PubMed:22082830, PubMed:22396657, PubMed:23620051, PubMed:23685073, PubMed:23933751, PubMed:24896179, PubMed:25527291, PubMed:32047033, PubMed:33499712). Activation and recruitment onto the outer membrane of damaged/dysfunctional mitochondria (OMM) requires PINK1-mediated phosphorylation of both PRKN and ubiquitin (PubMed:24660806, PubMed:24784582, PubMed:25474007, PubMed:25527291). After mitochondrial damage, functions with PINK1 to mediate the decision between mitophagy or preventing apoptosis by inducing either the poly- or monoubiquitination of VDAC1, respectively; polyubiquitination of VDAC1 promotes mitophagy, while monoubiquitination of VDAC1 decreases mitochondrial calcium influx which ultimately inhibits apoptosis (PubMed:27534820, PubMed:32047033). When cellular stress results in irreversible mitochondrial damage, promotes the autophagic degradation of dysfunctional depolarized mitochondria (mitophagy) by promoting the ubiquitination of mitochondrial proteins such as TOMM20, RHOT1/MIRO1, MFN1 and USP30 (PubMed:19029340, PubMed:19966284, PubMed:21753002, PubMed:22396657, PubMed:23620051, PubMed:23685073, PubMed:23933751, PubMed:24896179, PubMed:25527291). Preferentially assembles 'Lys-6'-, 'Lys-11'- and 'Lys-63'-linked polyubiquitin chains, leading to mitophagy (PubMed:25621951, PubMed:32047033). The PINK1-PRKN pathway also promotes fission of damaged mitochondria by PINK1-mediated phosphorylation which promotes the PRKN-dependent degradation of mitochondrial proteins involved in fission such as MFN2 (PubMed:23620051). This prevents the refusion of unhealthy mitochondria with the mitochondrial network or initiates mitochondrial fragmentation facilitating their later engulfment by autophagosomes (PubMed:23620051). Regulates motility of damaged mitochondria via the ubiquitination and subsequent degradation of MIRO1 and MIRO2; in motor neurons, this likely inhibits mitochondrial intracellular anterograde transport along the axons which probably increases the chance of the mitochondria undergoing mitophagy in the soma (PubMed:22396657). Involved in mitochondrial biogenesis via the 'Lys-48'-linked polyubiquitination of transcriptional repressor ZNF746/PARIS which leads to its subsequent proteasomal degradation and allows activation of the transcription factor PPARGC1A (PubMed:21376232). Limits the production of reactive oxygen species (ROS) (PubMed:18541373). Regulates cyclin-E during neuronal apoptosis (PubMed:12628165). In collaboration with CHPF isoform 2, may enhance cell viability and protect cells from oxidative stress (PubMed:22082830). Independently of its ubiquitin ligase activity, protects from apoptosis by the transcriptional repression of p53/TP53 (PubMed:19801972). May protect neurons against alpha synuclein toxicity, proteasomal dysfunction, GPR37 accumulation, and kainate-induced excitotoxicity (PubMed:11439185). May play a role in controlling neurotransmitter trafficking at the presynaptic terminal and in calcium-dependent exocytosis. May represent a tumor suppressor gene (PubMed:12719539).</text>
</comment>
<comment type="catalytic activity">
    <reaction evidence="69">
        <text>[E2 ubiquitin-conjugating enzyme]-S-ubiquitinyl-L-cysteine + [acceptor protein]-L-lysine = [E2 ubiquitin-conjugating enzyme]-L-cysteine + [acceptor protein]-N(6)-ubiquitinyl-L-lysine.</text>
        <dbReference type="EC" id="2.3.2.31"/>
    </reaction>
</comment>
<comment type="activity regulation">
    <text evidence="67 69 73 74 75 78 79 81">In the autoinhibited state the side chain of Phe-463 inserts into a hydrophobic groove in RING-0, occluding the ubiquitin acceptor site Cys-431, whereas the REP repressor element binds RING-1 and blocks its E2-binding site (PubMed:23727886, PubMed:23770887). Activation of PRKN requires 2 steps: (1) phosphorylation at Ser-65 by PINK1 and (2) binding to phosphorylated ubiquitin, leading to unlock repression of the catalytic Cys-431 by the RING-0 region via an allosteric mechanism and converting PRKN to its fully-active form (PubMed:24660806, PubMed:24784582, PubMed:25474007, PubMed:25527291). According to another report, phosphorylation at Ser-65 by PINK1 is not essential for activation and only binding to phosphorylated ubiquitin is essential to unlock repression (PubMed:24751536). In addition, ISG15 conjugation positively regulates its ubiquitin E3 ligase activity by suppressing the intramolecular interaction that maintains its autoinhibited conformation (PubMed:27534820).</text>
</comment>
<comment type="pathway">
    <text>Protein modification; protein ubiquitination.</text>
</comment>
<comment type="subunit">
    <text evidence="2 14 20 26 29 31 35 36 40 41 42 43 44 45 48 51 54 56 59 60 62 65 71 72">Forms an E3 ubiquitin ligase complex with UBE2L3 or UBE2L6 (PubMed:11078524, PubMed:21532592). Mediates 'Lys-63'-linked polyubiquitination by associating with UBE2V1. Part of a SCF-like complex, consisting of PRKN, CUL1 and FBXW7 (PubMed:12628165). Interacts with SNCAIP (PubMed:11590439, PubMed:15728840). Binds to the C2A and C2B domains of SYT11 (PubMed:12925569). Interacts and regulates the turnover of SEPTIN5 (PubMed:11078524). Part of a complex, including STUB1, HSP70 and GPR37 (PubMed:12150907). The amount of STUB1 in the complex increases during ER stress (PubMed:12150907). STUB1 promotes the dissociation of HSP70 from PRKN and GPR37, thus facilitating PRKN-mediated GPR37 ubiquitination (PubMed:12150907). HSP70 transiently associates with unfolded GPR37 and inhibits the E3 activity of PRKN, whereas, STUB1 enhances the E3 activity of PRKN through promotion of dissociation of HSP70 from PRKN-GPR37 complexes (PubMed:12150907). Interacts with PSMD4 and PACRG (PubMed:12634850, PubMed:14532270). Interacts with LRRK2 (PubMed:16352719). Interacts with RANBP2 (PubMed:16332688). Interacts with SUMO1 but not SUMO2, which promotes nuclear localization and autoubiquitination (PubMed:16955485). Interacts (via first RING-type domain) with AIMP2 (via N-terminus) (PubMed:16135753). Interacts with PSMA7 and RNF41 (PubMed:15987638, PubMed:18541373). Interacts with PINK1 (PubMed:19966284, PubMed:20798600). Forms a complex with PINK1 and PARK7 (PubMed:19229105). Interacts with CHPF, the interaction with isoform 2 may facilitate PRKN transport into the mitochondria (PubMed:22082830). Interacts with MFN2 (phosphorylated), promotes PRKN localization in dysfunctional depolarized mitochondria (PubMed:23620051). Interacts with FBXO7; this promotes translocation to dysfunctional depolarized mitochondria (PubMed:23933751). Interacts with ZNF746 (PubMed:21376232). Interacts with heat shock protein 70 family members, including HSPA1L, HSPA1A and HSPA8; interaction HSPA1L promotes translocation to damaged mitochondria (PubMed:24270810). Interacts with BAG4 and, to a lesser extent, BAG5; interaction with BAG4 inhibits translocation to damaged mitochondria (PubMed:24270810). Forms a complex with PRKN and PARK7 (PubMed:19229105). Interacts with AMBRA1 (By similarity).</text>
</comment>
<comment type="interaction">
    <interactant intactId="EBI-716346">
        <id>O60260</id>
    </interactant>
    <interactant intactId="EBI-9684323">
        <id>P54252-2</id>
        <label>ATXN3</label>
    </interactant>
    <organismsDiffer>false</organismsDiffer>
    <experiments>5</experiments>
</comment>
<comment type="interaction">
    <interactant intactId="EBI-716346">
        <id>O60260</id>
    </interactant>
    <interactant intactId="EBI-9029620">
        <id>Q8IZ52-2</id>
        <label>CHPF</label>
    </interactant>
    <organismsDiffer>false</organismsDiffer>
    <experiments>5</experiments>
</comment>
<comment type="interaction">
    <interactant intactId="EBI-716346">
        <id>O60260</id>
    </interactant>
    <interactant intactId="EBI-1161222">
        <id>Q9Y3I1</id>
        <label>FBXO7</label>
    </interactant>
    <organismsDiffer>false</organismsDiffer>
    <experiments>10</experiments>
</comment>
<comment type="interaction">
    <interactant intactId="EBI-716346">
        <id>O60260</id>
    </interactant>
    <interactant intactId="EBI-9102965">
        <id>Q9Y3I1-1</id>
        <label>FBXO7</label>
    </interactant>
    <organismsDiffer>false</organismsDiffer>
    <experiments>2</experiments>
</comment>
<comment type="interaction">
    <interactant intactId="EBI-716346">
        <id>O60260</id>
    </interactant>
    <interactant intactId="EBI-301697">
        <id>Q9UBN7</id>
        <label>HDAC6</label>
    </interactant>
    <organismsDiffer>false</organismsDiffer>
    <experiments>6</experiments>
</comment>
<comment type="interaction">
    <interactant intactId="EBI-716346">
        <id>O60260</id>
    </interactant>
    <interactant intactId="EBI-352572">
        <id>P08238</id>
        <label>HSP90AB1</label>
    </interactant>
    <organismsDiffer>false</organismsDiffer>
    <experiments>2</experiments>
</comment>
<comment type="interaction">
    <interactant intactId="EBI-716346">
        <id>O60260</id>
    </interactant>
    <interactant intactId="EBI-5323863">
        <id>Q5S007</id>
        <label>LRRK2</label>
    </interactant>
    <organismsDiffer>false</organismsDiffer>
    <experiments>3</experiments>
</comment>
<comment type="interaction">
    <interactant intactId="EBI-716346">
        <id>O60260</id>
    </interactant>
    <interactant intactId="EBI-3324756">
        <id>O95140</id>
        <label>MFN2</label>
    </interactant>
    <organismsDiffer>false</organismsDiffer>
    <experiments>4</experiments>
</comment>
<comment type="interaction">
    <interactant intactId="EBI-716346">
        <id>O60260</id>
    </interactant>
    <interactant intactId="EBI-359462">
        <id>Q16342</id>
        <label>PDCD2</label>
    </interactant>
    <organismsDiffer>false</organismsDiffer>
    <experiments>5</experiments>
</comment>
<comment type="interaction">
    <interactant intactId="EBI-716346">
        <id>O60260</id>
    </interactant>
    <interactant intactId="EBI-2846068">
        <id>Q9BXM7</id>
        <label>PINK1</label>
    </interactant>
    <organismsDiffer>false</organismsDiffer>
    <experiments>7</experiments>
</comment>
<comment type="interaction">
    <interactant intactId="EBI-716346">
        <id>O60260</id>
    </interactant>
    <interactant intactId="EBI-15643376">
        <id>Q9BXM7-1</id>
        <label>PINK1</label>
    </interactant>
    <organismsDiffer>false</organismsDiffer>
    <experiments>2</experiments>
</comment>
<comment type="interaction">
    <interactant intactId="EBI-716346">
        <id>O60260</id>
    </interactant>
    <interactant intactId="EBI-716346">
        <id>O60260</id>
        <label>PRKN</label>
    </interactant>
    <organismsDiffer>false</organismsDiffer>
    <experiments>5</experiments>
</comment>
<comment type="interaction">
    <interactant intactId="EBI-716346">
        <id>O60260</id>
    </interactant>
    <interactant intactId="EBI-973138">
        <id>P49792</id>
        <label>RANBP2</label>
    </interactant>
    <organismsDiffer>false</organismsDiffer>
    <experiments>11</experiments>
</comment>
<comment type="interaction">
    <interactant intactId="EBI-716346">
        <id>O60260</id>
    </interactant>
    <interactant intactId="EBI-1396430">
        <id>Q8IXI2</id>
        <label>RHOT1</label>
    </interactant>
    <organismsDiffer>false</organismsDiffer>
    <experiments>3</experiments>
</comment>
<comment type="interaction">
    <interactant intactId="EBI-716346">
        <id>O60260</id>
    </interactant>
    <interactant intactId="EBI-358993">
        <id>Q15645</id>
        <label>TRIP13</label>
    </interactant>
    <organismsDiffer>false</organismsDiffer>
    <experiments>4</experiments>
</comment>
<comment type="interaction">
    <interactant intactId="EBI-716346">
        <id>O60260</id>
    </interactant>
    <interactant intactId="EBI-3862525">
        <id>Q6NUN9</id>
        <label>ZNF746</label>
    </interactant>
    <organismsDiffer>false</organismsDiffer>
    <experiments>6</experiments>
</comment>
<comment type="interaction">
    <interactant intactId="EBI-716346">
        <id>O60260</id>
    </interactant>
    <interactant intactId="EBI-772125">
        <id>Q9Z2Q6</id>
        <label>Septin5</label>
    </interactant>
    <organismsDiffer>true</organismsDiffer>
    <experiments>2</experiments>
</comment>
<comment type="interaction">
    <interactant intactId="EBI-716346">
        <id>O60260</id>
    </interactant>
    <interactant intactId="EBI-444641">
        <id>P68510</id>
        <label>Ywhah</label>
    </interactant>
    <organismsDiffer>true</organismsDiffer>
    <experiments>6</experiments>
</comment>
<comment type="interaction">
    <interactant intactId="EBI-716346">
        <id>O60260</id>
    </interactant>
    <interactant intactId="EBI-6858513">
        <id>PRO_0000045592</id>
        <dbReference type="UniProtKB" id="Q99IB8"/>
    </interactant>
    <organismsDiffer>true</organismsDiffer>
    <experiments>3</experiments>
</comment>
<comment type="interaction">
    <interactant intactId="EBI-21251460">
        <id>O60260-5</id>
    </interactant>
    <interactant intactId="EBI-25840993">
        <id>Q6ZTN6-2</id>
        <label>ANKRD13D</label>
    </interactant>
    <organismsDiffer>false</organismsDiffer>
    <experiments>3</experiments>
</comment>
<comment type="interaction">
    <interactant intactId="EBI-21251460">
        <id>O60260-5</id>
    </interactant>
    <interactant intactId="EBI-25880850">
        <id>Q86WR3</id>
        <label>ANUBL1</label>
    </interactant>
    <organismsDiffer>false</organismsDiffer>
    <experiments>3</experiments>
</comment>
<comment type="interaction">
    <interactant intactId="EBI-21251460">
        <id>O60260-5</id>
    </interactant>
    <interactant intactId="EBI-11529439">
        <id>P63010-2</id>
        <label>AP2B1</label>
    </interactant>
    <organismsDiffer>false</organismsDiffer>
    <experiments>6</experiments>
</comment>
<comment type="interaction">
    <interactant intactId="EBI-21251460">
        <id>O60260-5</id>
    </interactant>
    <interactant intactId="EBI-77613">
        <id>P05067</id>
        <label>APP</label>
    </interactant>
    <organismsDiffer>false</organismsDiffer>
    <experiments>5</experiments>
</comment>
<comment type="interaction">
    <interactant intactId="EBI-21251460">
        <id>O60260-5</id>
    </interactant>
    <interactant intactId="EBI-10186132">
        <id>Q0P5N6</id>
        <label>ARL16</label>
    </interactant>
    <organismsDiffer>false</organismsDiffer>
    <experiments>6</experiments>
</comment>
<comment type="interaction">
    <interactant intactId="EBI-21251460">
        <id>O60260-5</id>
    </interactant>
    <interactant intactId="EBI-25844820">
        <id>Q86TN1</id>
        <label>ARNT2</label>
    </interactant>
    <organismsDiffer>false</organismsDiffer>
    <experiments>3</experiments>
</comment>
<comment type="interaction">
    <interactant intactId="EBI-21251460">
        <id>O60260-5</id>
    </interactant>
    <interactant intactId="EBI-707573">
        <id>Q8WXK3</id>
        <label>ASB13</label>
    </interactant>
    <organismsDiffer>false</organismsDiffer>
    <experiments>3</experiments>
</comment>
<comment type="interaction">
    <interactant intactId="EBI-21251460">
        <id>O60260-5</id>
    </interactant>
    <interactant intactId="EBI-12015080">
        <id>Q8WXK3-2</id>
        <label>ASB13</label>
    </interactant>
    <organismsDiffer>false</organismsDiffer>
    <experiments>3</experiments>
</comment>
<comment type="interaction">
    <interactant intactId="EBI-21251460">
        <id>O60260-5</id>
    </interactant>
    <interactant intactId="EBI-14199987">
        <id>Q9Y575-3</id>
        <label>ASB3</label>
    </interactant>
    <organismsDiffer>false</organismsDiffer>
    <experiments>3</experiments>
</comment>
<comment type="interaction">
    <interactant intactId="EBI-21251460">
        <id>O60260-5</id>
    </interactant>
    <interactant intactId="EBI-12104328">
        <id>Q9H672-2</id>
        <label>ASB7</label>
    </interactant>
    <organismsDiffer>false</organismsDiffer>
    <experiments>3</experiments>
</comment>
<comment type="interaction">
    <interactant intactId="EBI-21251460">
        <id>O60260-5</id>
    </interactant>
    <interactant intactId="EBI-745641">
        <id>Q96DX5</id>
        <label>ASB9</label>
    </interactant>
    <organismsDiffer>false</organismsDiffer>
    <experiments>3</experiments>
</comment>
<comment type="interaction">
    <interactant intactId="EBI-21251460">
        <id>O60260-5</id>
    </interactant>
    <interactant intactId="EBI-25843552">
        <id>Q96DX5-3</id>
        <label>ASB9</label>
    </interactant>
    <organismsDiffer>false</organismsDiffer>
    <experiments>3</experiments>
</comment>
<comment type="interaction">
    <interactant intactId="EBI-21251460">
        <id>O60260-5</id>
    </interactant>
    <interactant intactId="EBI-1048913">
        <id>Q9H0Y0</id>
        <label>ATG10</label>
    </interactant>
    <organismsDiffer>false</organismsDiffer>
    <experiments>3</experiments>
</comment>
<comment type="interaction">
    <interactant intactId="EBI-21251460">
        <id>O60260-5</id>
    </interactant>
    <interactant intactId="EBI-930964">
        <id>P54253</id>
        <label>ATXN1</label>
    </interactant>
    <organismsDiffer>false</organismsDiffer>
    <experiments>6</experiments>
</comment>
<comment type="interaction">
    <interactant intactId="EBI-21251460">
        <id>O60260-5</id>
    </interactant>
    <interactant intactId="EBI-1263541">
        <id>O14867</id>
        <label>BACH1</label>
    </interactant>
    <organismsDiffer>false</organismsDiffer>
    <experiments>3</experiments>
</comment>
<comment type="interaction">
    <interactant intactId="EBI-21251460">
        <id>O60260-5</id>
    </interactant>
    <interactant intactId="EBI-10988864">
        <id>P46379-2</id>
        <label>BAG6</label>
    </interactant>
    <organismsDiffer>false</organismsDiffer>
    <experiments>3</experiments>
</comment>
<comment type="interaction">
    <interactant intactId="EBI-21251460">
        <id>O60260-5</id>
    </interactant>
    <interactant intactId="EBI-10174813">
        <id>A8KA13</id>
        <label>BCL6B</label>
    </interactant>
    <organismsDiffer>false</organismsDiffer>
    <experiments>3</experiments>
</comment>
<comment type="interaction">
    <interactant intactId="EBI-21251460">
        <id>O60260-5</id>
    </interactant>
    <interactant intactId="EBI-2837444">
        <id>Q8WUW1</id>
        <label>BRK1</label>
    </interactant>
    <organismsDiffer>false</organismsDiffer>
    <experiments>3</experiments>
</comment>
<comment type="interaction">
    <interactant intactId="EBI-21251460">
        <id>O60260-5</id>
    </interactant>
    <interactant intactId="EBI-12248206">
        <id>P29466-3</id>
        <label>CASP1</label>
    </interactant>
    <organismsDiffer>false</organismsDiffer>
    <experiments>6</experiments>
</comment>
<comment type="interaction">
    <interactant intactId="EBI-21251460">
        <id>O60260-5</id>
    </interactant>
    <interactant intactId="EBI-25879469">
        <id>Q13939</id>
        <label>CCIN</label>
    </interactant>
    <organismsDiffer>false</organismsDiffer>
    <experiments>3</experiments>
</comment>
<comment type="interaction">
    <interactant intactId="EBI-21251460">
        <id>O60260-5</id>
    </interactant>
    <interactant intactId="EBI-21770675">
        <id>P78396-2</id>
        <label>CCNA1</label>
    </interactant>
    <organismsDiffer>false</organismsDiffer>
    <experiments>3</experiments>
</comment>
<comment type="interaction">
    <interactant intactId="EBI-21251460">
        <id>O60260-5</id>
    </interactant>
    <interactant intactId="EBI-1041567">
        <id>Q00535</id>
        <label>CDK5</label>
    </interactant>
    <organismsDiffer>false</organismsDiffer>
    <experiments>3</experiments>
</comment>
<comment type="interaction">
    <interactant intactId="EBI-21251460">
        <id>O60260-5</id>
    </interactant>
    <interactant intactId="EBI-350590">
        <id>Q9UNS2</id>
        <label>COPS3</label>
    </interactant>
    <organismsDiffer>false</organismsDiffer>
    <experiments>3</experiments>
</comment>
<comment type="interaction">
    <interactant intactId="EBI-21251460">
        <id>O60260-5</id>
    </interactant>
    <interactant intactId="EBI-372690">
        <id>Q9UBU7</id>
        <label>DBF4</label>
    </interactant>
    <organismsDiffer>false</organismsDiffer>
    <experiments>3</experiments>
</comment>
<comment type="interaction">
    <interactant intactId="EBI-21251460">
        <id>O60260-5</id>
    </interactant>
    <interactant intactId="EBI-10983996">
        <id>Q5QP82-2</id>
        <label>DCAF10</label>
    </interactant>
    <organismsDiffer>false</organismsDiffer>
    <experiments>3</experiments>
</comment>
<comment type="interaction">
    <interactant intactId="EBI-21251460">
        <id>O60260-5</id>
    </interactant>
    <interactant intactId="EBI-359808">
        <id>P61962</id>
        <label>DCAF7</label>
    </interactant>
    <organismsDiffer>false</organismsDiffer>
    <experiments>3</experiments>
</comment>
<comment type="interaction">
    <interactant intactId="EBI-21251460">
        <id>O60260-5</id>
    </interactant>
    <interactant intactId="EBI-25842815">
        <id>Q5TAQ9-2</id>
        <label>DCAF8</label>
    </interactant>
    <organismsDiffer>false</organismsDiffer>
    <experiments>3</experiments>
</comment>
<comment type="interaction">
    <interactant intactId="EBI-21251460">
        <id>O60260-5</id>
    </interactant>
    <interactant intactId="EBI-2510241">
        <id>Q9BW61</id>
        <label>DDA1</label>
    </interactant>
    <organismsDiffer>false</organismsDiffer>
    <experiments>3</experiments>
</comment>
<comment type="interaction">
    <interactant intactId="EBI-21251460">
        <id>O60260-5</id>
    </interactant>
    <interactant intactId="EBI-25842538">
        <id>Q8NDP9</id>
        <label>DKFZp547K2416</label>
    </interactant>
    <organismsDiffer>false</organismsDiffer>
    <experiments>3</experiments>
</comment>
<comment type="interaction">
    <interactant intactId="EBI-21251460">
        <id>O60260-5</id>
    </interactant>
    <interactant intactId="EBI-631152">
        <id>P78352-2</id>
        <label>DLG4</label>
    </interactant>
    <organismsDiffer>false</organismsDiffer>
    <experiments>6</experiments>
</comment>
<comment type="interaction">
    <interactant intactId="EBI-21251460">
        <id>O60260-5</id>
    </interactant>
    <interactant intactId="EBI-347834">
        <id>P31689</id>
        <label>DNAJA1</label>
    </interactant>
    <organismsDiffer>false</organismsDiffer>
    <experiments>6</experiments>
</comment>
<comment type="interaction">
    <interactant intactId="EBI-21251460">
        <id>O60260-5</id>
    </interactant>
    <interactant intactId="EBI-372173">
        <id>O77932</id>
        <label>DXO</label>
    </interactant>
    <organismsDiffer>false</organismsDiffer>
    <experiments>3</experiments>
</comment>
<comment type="interaction">
    <interactant intactId="EBI-21251460">
        <id>O60260-5</id>
    </interactant>
    <interactant intactId="EBI-11132357">
        <id>O75530-2</id>
        <label>EED</label>
    </interactant>
    <organismsDiffer>false</organismsDiffer>
    <experiments>3</experiments>
</comment>
<comment type="interaction">
    <interactant intactId="EBI-21251460">
        <id>O60260-5</id>
    </interactant>
    <interactant intactId="EBI-9246952">
        <id>Q8TC29</id>
        <label>ENKUR</label>
    </interactant>
    <organismsDiffer>false</organismsDiffer>
    <experiments>6</experiments>
</comment>
<comment type="interaction">
    <interactant intactId="EBI-21251460">
        <id>O60260-5</id>
    </interactant>
    <interactant intactId="EBI-3893327">
        <id>Q6P1L5</id>
        <label>FAM117B</label>
    </interactant>
    <organismsDiffer>false</organismsDiffer>
    <experiments>3</experiments>
</comment>
<comment type="interaction">
    <interactant intactId="EBI-21251460">
        <id>O60260-5</id>
    </interactant>
    <interactant intactId="EBI-719781">
        <id>O00757</id>
        <label>FBP2</label>
    </interactant>
    <organismsDiffer>false</organismsDiffer>
    <experiments>3</experiments>
</comment>
<comment type="interaction">
    <interactant intactId="EBI-21251460">
        <id>O60260-5</id>
    </interactant>
    <interactant intactId="EBI-2372268">
        <id>P57775</id>
        <label>FBXW4</label>
    </interactant>
    <organismsDiffer>false</organismsDiffer>
    <experiments>3</experiments>
</comment>
<comment type="interaction">
    <interactant intactId="EBI-21251460">
        <id>O60260-5</id>
    </interactant>
    <interactant intactId="EBI-396453">
        <id>Q9UHY8</id>
        <label>FEZ2</label>
    </interactant>
    <organismsDiffer>false</organismsDiffer>
    <experiments>3</experiments>
</comment>
<comment type="interaction">
    <interactant intactId="EBI-21251460">
        <id>O60260-5</id>
    </interactant>
    <interactant intactId="EBI-348399">
        <id>P22607</id>
        <label>FGFR3</label>
    </interactant>
    <organismsDiffer>false</organismsDiffer>
    <experiments>3</experiments>
</comment>
<comment type="interaction">
    <interactant intactId="EBI-21251460">
        <id>O60260-5</id>
    </interactant>
    <interactant intactId="EBI-764342">
        <id>Q9H2C0</id>
        <label>GAN</label>
    </interactant>
    <organismsDiffer>false</organismsDiffer>
    <experiments>3</experiments>
</comment>
<comment type="interaction">
    <interactant intactId="EBI-21251460">
        <id>O60260-5</id>
    </interactant>
    <interactant intactId="EBI-8799578">
        <id>Q9NXC2</id>
        <label>GFOD1</label>
    </interactant>
    <organismsDiffer>false</organismsDiffer>
    <experiments>3</experiments>
</comment>
<comment type="interaction">
    <interactant intactId="EBI-21251460">
        <id>O60260-5</id>
    </interactant>
    <interactant intactId="EBI-2548508">
        <id>Q96IK5</id>
        <label>GMCL1</label>
    </interactant>
    <organismsDiffer>false</organismsDiffer>
    <experiments>3</experiments>
</comment>
<comment type="interaction">
    <interactant intactId="EBI-21251460">
        <id>O60260-5</id>
    </interactant>
    <interactant intactId="EBI-356942">
        <id>P62879</id>
        <label>GNB2</label>
    </interactant>
    <organismsDiffer>false</organismsDiffer>
    <experiments>3</experiments>
</comment>
<comment type="interaction">
    <interactant intactId="EBI-21251460">
        <id>O60260-5</id>
    </interactant>
    <interactant intactId="EBI-21649723">
        <id>Q7Z602</id>
        <label>GPR141</label>
    </interactant>
    <organismsDiffer>false</organismsDiffer>
    <experiments>3</experiments>
</comment>
<comment type="interaction">
    <interactant intactId="EBI-21251460">
        <id>O60260-5</id>
    </interactant>
    <interactant intactId="EBI-351506">
        <id>P06396</id>
        <label>GSN</label>
    </interactant>
    <organismsDiffer>false</organismsDiffer>
    <experiments>3</experiments>
</comment>
<comment type="interaction">
    <interactant intactId="EBI-21251460">
        <id>O60260-5</id>
    </interactant>
    <interactant intactId="EBI-79722">
        <id>P68431</id>
        <label>H3C12</label>
    </interactant>
    <organismsDiffer>false</organismsDiffer>
    <experiments>3</experiments>
</comment>
<comment type="interaction">
    <interactant intactId="EBI-21251460">
        <id>O60260-5</id>
    </interactant>
    <interactant intactId="EBI-746815">
        <id>Q86YM7</id>
        <label>HOMER1</label>
    </interactant>
    <organismsDiffer>false</organismsDiffer>
    <experiments>6</experiments>
</comment>
<comment type="interaction">
    <interactant intactId="EBI-21251460">
        <id>O60260-5</id>
    </interactant>
    <interactant intactId="EBI-11052499">
        <id>P0DMV8</id>
        <label>HSPA1A</label>
    </interactant>
    <organismsDiffer>false</organismsDiffer>
    <experiments>6</experiments>
</comment>
<comment type="interaction">
    <interactant intactId="EBI-21251460">
        <id>O60260-5</id>
    </interactant>
    <interactant intactId="EBI-351896">
        <id>P11142</id>
        <label>HSPA8</label>
    </interactant>
    <organismsDiffer>false</organismsDiffer>
    <experiments>9</experiments>
</comment>
<comment type="interaction">
    <interactant intactId="EBI-21251460">
        <id>O60260-5</id>
    </interactant>
    <interactant intactId="EBI-21911304">
        <id>Q6DN90-2</id>
        <label>IQSEC1</label>
    </interactant>
    <organismsDiffer>false</organismsDiffer>
    <experiments>6</experiments>
</comment>
<comment type="interaction">
    <interactant intactId="EBI-21251460">
        <id>O60260-5</id>
    </interactant>
    <interactant intactId="EBI-10220600">
        <id>Q8NA54</id>
        <label>IQUB</label>
    </interactant>
    <organismsDiffer>false</organismsDiffer>
    <experiments>3</experiments>
</comment>
<comment type="interaction">
    <interactant intactId="EBI-21251460">
        <id>O60260-5</id>
    </interactant>
    <interactant intactId="EBI-746466">
        <id>P05161</id>
        <label>ISG15</label>
    </interactant>
    <organismsDiffer>false</organismsDiffer>
    <experiments>3</experiments>
</comment>
<comment type="interaction">
    <interactant intactId="EBI-21251460">
        <id>O60260-5</id>
    </interactant>
    <interactant intactId="EBI-25856470">
        <id>Q9UKP3-2</id>
        <label>ITGB1BP2</label>
    </interactant>
    <organismsDiffer>false</organismsDiffer>
    <experiments>3</experiments>
</comment>
<comment type="interaction">
    <interactant intactId="EBI-21251460">
        <id>O60260-5</id>
    </interactant>
    <interactant intactId="EBI-25871195">
        <id>Q9NVX7-2</id>
        <label>KBTBD4</label>
    </interactant>
    <organismsDiffer>false</organismsDiffer>
    <experiments>3</experiments>
</comment>
<comment type="interaction">
    <interactant intactId="EBI-21251460">
        <id>O60260-5</id>
    </interactant>
    <interactant intactId="EBI-2796400">
        <id>Q9UIH9</id>
        <label>KLF15</label>
    </interactant>
    <organismsDiffer>false</organismsDiffer>
    <experiments>3</experiments>
</comment>
<comment type="interaction">
    <interactant intactId="EBI-21251460">
        <id>O60260-5</id>
    </interactant>
    <interactant intactId="EBI-21328926">
        <id>Q6TDP4</id>
        <label>KLHL17</label>
    </interactant>
    <organismsDiffer>false</organismsDiffer>
    <experiments>3</experiments>
</comment>
<comment type="interaction">
    <interactant intactId="EBI-21251460">
        <id>O60260-5</id>
    </interactant>
    <interactant intactId="EBI-2510096">
        <id>O94889</id>
        <label>KLHL18</label>
    </interactant>
    <organismsDiffer>false</organismsDiffer>
    <experiments>3</experiments>
</comment>
<comment type="interaction">
    <interactant intactId="EBI-21251460">
        <id>O60260-5</id>
    </interactant>
    <interactant intactId="EBI-714379">
        <id>Q9Y2M5</id>
        <label>KLHL20</label>
    </interactant>
    <organismsDiffer>false</organismsDiffer>
    <experiments>3</experiments>
</comment>
<comment type="interaction">
    <interactant intactId="EBI-21251460">
        <id>O60260-5</id>
    </interactant>
    <interactant intactId="EBI-6426464">
        <id>Q8WZ60</id>
        <label>KLHL6</label>
    </interactant>
    <organismsDiffer>false</organismsDiffer>
    <experiments>3</experiments>
</comment>
<comment type="interaction">
    <interactant intactId="EBI-21251460">
        <id>O60260-5</id>
    </interactant>
    <interactant intactId="EBI-10241252">
        <id>Q3SY46</id>
        <label>KRTAP13-3</label>
    </interactant>
    <organismsDiffer>false</organismsDiffer>
    <experiments>3</experiments>
</comment>
<comment type="interaction">
    <interactant intactId="EBI-21251460">
        <id>O60260-5</id>
    </interactant>
    <interactant intactId="EBI-1044640">
        <id>Q9BYQ4</id>
        <label>KRTAP9-2</label>
    </interactant>
    <organismsDiffer>false</organismsDiffer>
    <experiments>3</experiments>
</comment>
<comment type="interaction">
    <interactant intactId="EBI-21251460">
        <id>O60260-5</id>
    </interactant>
    <interactant intactId="EBI-1108377">
        <id>Q9BYZ2</id>
        <label>LDHAL6B</label>
    </interactant>
    <organismsDiffer>false</organismsDiffer>
    <experiments>6</experiments>
</comment>
<comment type="interaction">
    <interactant intactId="EBI-21251460">
        <id>O60260-5</id>
    </interactant>
    <interactant intactId="EBI-739832">
        <id>Q8TBB1</id>
        <label>LNX1</label>
    </interactant>
    <organismsDiffer>false</organismsDiffer>
    <experiments>3</experiments>
</comment>
<comment type="interaction">
    <interactant intactId="EBI-21251460">
        <id>O60260-5</id>
    </interactant>
    <interactant intactId="EBI-347779">
        <id>O95777</id>
        <label>LSM8</label>
    </interactant>
    <organismsDiffer>false</organismsDiffer>
    <experiments>6</experiments>
</comment>
<comment type="interaction">
    <interactant intactId="EBI-21251460">
        <id>O60260-5</id>
    </interactant>
    <interactant intactId="EBI-373144">
        <id>Q9GZQ8</id>
        <label>MAP1LC3B</label>
    </interactant>
    <organismsDiffer>false</organismsDiffer>
    <experiments>3</experiments>
</comment>
<comment type="interaction">
    <interactant intactId="EBI-21251460">
        <id>O60260-5</id>
    </interactant>
    <interactant intactId="EBI-7796455">
        <id>P10636-6</id>
        <label>MAPT</label>
    </interactant>
    <organismsDiffer>false</organismsDiffer>
    <experiments>3</experiments>
</comment>
<comment type="interaction">
    <interactant intactId="EBI-21251460">
        <id>O60260-5</id>
    </interactant>
    <interactant intactId="EBI-25848049">
        <id>P61244-4</id>
        <label>MAX</label>
    </interactant>
    <organismsDiffer>false</organismsDiffer>
    <experiments>3</experiments>
</comment>
<comment type="interaction">
    <interactant intactId="EBI-21251460">
        <id>O60260-5</id>
    </interactant>
    <interactant intactId="EBI-4397720">
        <id>Q8TDB4</id>
        <label>MGARP</label>
    </interactant>
    <organismsDiffer>false</organismsDiffer>
    <experiments>6</experiments>
</comment>
<comment type="interaction">
    <interactant intactId="EBI-21251460">
        <id>O60260-5</id>
    </interactant>
    <interactant intactId="EBI-21250407">
        <id>A4FUJ8</id>
        <label>MKL1</label>
    </interactant>
    <organismsDiffer>false</organismsDiffer>
    <experiments>6</experiments>
</comment>
<comment type="interaction">
    <interactant intactId="EBI-21251460">
        <id>O60260-5</id>
    </interactant>
    <interactant intactId="EBI-716139">
        <id>P51948</id>
        <label>MNAT1</label>
    </interactant>
    <organismsDiffer>false</organismsDiffer>
    <experiments>3</experiments>
</comment>
<comment type="interaction">
    <interactant intactId="EBI-21251460">
        <id>O60260-5</id>
    </interactant>
    <interactant intactId="EBI-2512452">
        <id>Q8N594</id>
        <label>MPND</label>
    </interactant>
    <organismsDiffer>false</organismsDiffer>
    <experiments>3</experiments>
</comment>
<comment type="interaction">
    <interactant intactId="EBI-21251460">
        <id>O60260-5</id>
    </interactant>
    <interactant intactId="EBI-10698053">
        <id>Q9Y483-4</id>
        <label>MTF2</label>
    </interactant>
    <organismsDiffer>false</organismsDiffer>
    <experiments>3</experiments>
</comment>
<comment type="interaction">
    <interactant intactId="EBI-21251460">
        <id>O60260-5</id>
    </interactant>
    <interactant intactId="EBI-3446748">
        <id>Q9NPC7</id>
        <label>MYNN</label>
    </interactant>
    <organismsDiffer>false</organismsDiffer>
    <experiments>3</experiments>
</comment>
<comment type="interaction">
    <interactant intactId="EBI-21251460">
        <id>O60260-5</id>
    </interactant>
    <interactant intactId="EBI-1058491">
        <id>Q96FW1</id>
        <label>OTUB1</label>
    </interactant>
    <organismsDiffer>false</organismsDiffer>
    <experiments>3</experiments>
</comment>
<comment type="interaction">
    <interactant intactId="EBI-21251460">
        <id>O60260-5</id>
    </interactant>
    <interactant intactId="EBI-25830200">
        <id>Q6GQQ9-2</id>
        <label>OTUD7B</label>
    </interactant>
    <organismsDiffer>false</organismsDiffer>
    <experiments>3</experiments>
</comment>
<comment type="interaction">
    <interactant intactId="EBI-21251460">
        <id>O60260-5</id>
    </interactant>
    <interactant intactId="EBI-713724">
        <id>P68402</id>
        <label>PAFAH1B2</label>
    </interactant>
    <organismsDiffer>false</organismsDiffer>
    <experiments>3</experiments>
</comment>
<comment type="interaction">
    <interactant intactId="EBI-21251460">
        <id>O60260-5</id>
    </interactant>
    <interactant intactId="EBI-17159452">
        <id>Q9NR21-5</id>
        <label>PARP11</label>
    </interactant>
    <organismsDiffer>false</organismsDiffer>
    <experiments>3</experiments>
</comment>
<comment type="interaction">
    <interactant intactId="EBI-21251460">
        <id>O60260-5</id>
    </interactant>
    <interactant intactId="EBI-11022007">
        <id>Q9HBE1-4</id>
        <label>PATZ1</label>
    </interactant>
    <organismsDiffer>false</organismsDiffer>
    <experiments>3</experiments>
</comment>
<comment type="interaction">
    <interactant intactId="EBI-21251460">
        <id>O60260-5</id>
    </interactant>
    <interactant intactId="EBI-2561395">
        <id>Q96MG8</id>
        <label>PCMTD1</label>
    </interactant>
    <organismsDiffer>false</organismsDiffer>
    <experiments>3</experiments>
</comment>
<comment type="interaction">
    <interactant intactId="EBI-21251460">
        <id>O60260-5</id>
    </interactant>
    <interactant intactId="EBI-6309018">
        <id>Q9NV79</id>
        <label>PCMTD2</label>
    </interactant>
    <organismsDiffer>false</organismsDiffer>
    <experiments>3</experiments>
</comment>
<comment type="interaction">
    <interactant intactId="EBI-21251460">
        <id>O60260-5</id>
    </interactant>
    <interactant intactId="EBI-716063">
        <id>Q13113</id>
        <label>PDZK1IP1</label>
    </interactant>
    <organismsDiffer>false</organismsDiffer>
    <experiments>6</experiments>
</comment>
<comment type="interaction">
    <interactant intactId="EBI-21251460">
        <id>O60260-5</id>
    </interactant>
    <interactant intactId="EBI-12339509">
        <id>Q96LB9</id>
        <label>PGLYRP3</label>
    </interactant>
    <organismsDiffer>false</organismsDiffer>
    <experiments>3</experiments>
</comment>
<comment type="interaction">
    <interactant intactId="EBI-21251460">
        <id>O60260-5</id>
    </interactant>
    <interactant intactId="EBI-12891828">
        <id>Q6ZR37</id>
        <label>PLEKHG7</label>
    </interactant>
    <organismsDiffer>false</organismsDiffer>
    <experiments>6</experiments>
</comment>
<comment type="interaction">
    <interactant intactId="EBI-21251460">
        <id>O60260-5</id>
    </interactant>
    <interactant intactId="EBI-359352">
        <id>P25786</id>
        <label>PSMA1</label>
    </interactant>
    <organismsDiffer>false</organismsDiffer>
    <experiments>6</experiments>
</comment>
<comment type="interaction">
    <interactant intactId="EBI-21251460">
        <id>O60260-5</id>
    </interactant>
    <interactant intactId="EBI-603329">
        <id>P40306</id>
        <label>PSMB10</label>
    </interactant>
    <organismsDiffer>false</organismsDiffer>
    <experiments>3</experiments>
</comment>
<comment type="interaction">
    <interactant intactId="EBI-21251460">
        <id>O60260-5</id>
    </interactant>
    <interactant intactId="EBI-603350">
        <id>P28070</id>
        <label>PSMB4</label>
    </interactant>
    <organismsDiffer>false</organismsDiffer>
    <experiments>3</experiments>
</comment>
<comment type="interaction">
    <interactant intactId="EBI-21251460">
        <id>O60260-5</id>
    </interactant>
    <interactant intactId="EBI-721835">
        <id>O60671</id>
        <label>RAD1</label>
    </interactant>
    <organismsDiffer>false</organismsDiffer>
    <experiments>6</experiments>
</comment>
<comment type="interaction">
    <interactant intactId="EBI-21251460">
        <id>O60260-5</id>
    </interactant>
    <interactant intactId="EBI-25880533">
        <id>Q8NDN9-2</id>
        <label>RCBTB1</label>
    </interactant>
    <organismsDiffer>false</organismsDiffer>
    <experiments>3</experiments>
</comment>
<comment type="interaction">
    <interactant intactId="EBI-21251460">
        <id>O60260-5</id>
    </interactant>
    <interactant intactId="EBI-712388">
        <id>P41220</id>
        <label>RGS2</label>
    </interactant>
    <organismsDiffer>false</organismsDiffer>
    <experiments>6</experiments>
</comment>
<comment type="interaction">
    <interactant intactId="EBI-21251460">
        <id>O60260-5</id>
    </interactant>
    <interactant intactId="EBI-25879714">
        <id>A0A087WUY2</id>
        <label>RGS3</label>
    </interactant>
    <organismsDiffer>false</organismsDiffer>
    <experiments>6</experiments>
</comment>
<comment type="interaction">
    <interactant intactId="EBI-21251460">
        <id>O60260-5</id>
    </interactant>
    <interactant intactId="EBI-6426999">
        <id>O94844</id>
        <label>RHOBTB1</label>
    </interactant>
    <organismsDiffer>false</organismsDiffer>
    <experiments>3</experiments>
</comment>
<comment type="interaction">
    <interactant intactId="EBI-21251460">
        <id>O60260-5</id>
    </interactant>
    <interactant intactId="EBI-714023">
        <id>Q8N5U6</id>
        <label>RNF10</label>
    </interactant>
    <organismsDiffer>false</organismsDiffer>
    <experiments>3</experiments>
</comment>
<comment type="interaction">
    <interactant intactId="EBI-21251460">
        <id>O60260-5</id>
    </interactant>
    <interactant intactId="EBI-396669">
        <id>Q9Y3C5</id>
        <label>RNF11</label>
    </interactant>
    <organismsDiffer>false</organismsDiffer>
    <experiments>3</experiments>
</comment>
<comment type="interaction">
    <interactant intactId="EBI-21251460">
        <id>O60260-5</id>
    </interactant>
    <interactant intactId="EBI-21535400">
        <id>Q6ZNA4-2</id>
        <label>RNF111</label>
    </interactant>
    <organismsDiffer>false</organismsDiffer>
    <experiments>6</experiments>
</comment>
<comment type="interaction">
    <interactant intactId="EBI-21251460">
        <id>O60260-5</id>
    </interactant>
    <interactant intactId="EBI-25829984">
        <id>Q9ULX5</id>
        <label>RNF112</label>
    </interactant>
    <organismsDiffer>false</organismsDiffer>
    <experiments>6</experiments>
</comment>
<comment type="interaction">
    <interactant intactId="EBI-21251460">
        <id>O60260-5</id>
    </interactant>
    <interactant intactId="EBI-749039">
        <id>Q8WVD3</id>
        <label>RNF138</label>
    </interactant>
    <organismsDiffer>false</organismsDiffer>
    <experiments>3</experiments>
</comment>
<comment type="interaction">
    <interactant intactId="EBI-21251460">
        <id>O60260-5</id>
    </interactant>
    <interactant intactId="EBI-2130308">
        <id>Q9UBS8</id>
        <label>RNF14</label>
    </interactant>
    <organismsDiffer>false</organismsDiffer>
    <experiments>3</experiments>
</comment>
<comment type="interaction">
    <interactant intactId="EBI-21251460">
        <id>O60260-5</id>
    </interactant>
    <interactant intactId="EBI-2130320">
        <id>Q96A37</id>
        <label>RNF166</label>
    </interactant>
    <organismsDiffer>false</organismsDiffer>
    <experiments>3</experiments>
</comment>
<comment type="interaction">
    <interactant intactId="EBI-21251460">
        <id>O60260-5</id>
    </interactant>
    <interactant intactId="EBI-743938">
        <id>Q96D59</id>
        <label>RNF183</label>
    </interactant>
    <organismsDiffer>false</organismsDiffer>
    <experiments>3</experiments>
</comment>
<comment type="interaction">
    <interactant intactId="EBI-21251460">
        <id>O60260-5</id>
    </interactant>
    <interactant intactId="EBI-2129220">
        <id>Q96BH1</id>
        <label>RNF25</label>
    </interactant>
    <organismsDiffer>false</organismsDiffer>
    <experiments>3</experiments>
</comment>
<comment type="interaction">
    <interactant intactId="EBI-21251460">
        <id>O60260-5</id>
    </interactant>
    <interactant intactId="EBI-354112">
        <id>P08865</id>
        <label>RPSA</label>
    </interactant>
    <organismsDiffer>false</organismsDiffer>
    <experiments>3</experiments>
</comment>
<comment type="interaction">
    <interactant intactId="EBI-21251460">
        <id>O60260-5</id>
    </interactant>
    <interactant intactId="EBI-752324">
        <id>Q8N488</id>
        <label>RYBP</label>
    </interactant>
    <organismsDiffer>false</organismsDiffer>
    <experiments>6</experiments>
</comment>
<comment type="interaction">
    <interactant intactId="EBI-21251460">
        <id>O60260-5</id>
    </interactant>
    <interactant intactId="EBI-346977">
        <id>Q15393</id>
        <label>SF3B3</label>
    </interactant>
    <organismsDiffer>false</organismsDiffer>
    <experiments>3</experiments>
</comment>
<comment type="interaction">
    <interactant intactId="EBI-21251460">
        <id>O60260-5</id>
    </interactant>
    <interactant intactId="EBI-10182463">
        <id>Q2NKQ1-4</id>
        <label>SGSM1</label>
    </interactant>
    <organismsDiffer>false</organismsDiffer>
    <experiments>6</experiments>
</comment>
<comment type="interaction">
    <interactant intactId="EBI-21251460">
        <id>O60260-5</id>
    </interactant>
    <interactant intactId="EBI-21623725">
        <id>Q14190-2</id>
        <label>SIM2</label>
    </interactant>
    <organismsDiffer>false</organismsDiffer>
    <experiments>3</experiments>
</comment>
<comment type="interaction">
    <interactant intactId="EBI-21251460">
        <id>O60260-5</id>
    </interactant>
    <interactant intactId="EBI-358545">
        <id>Q9GZS3</id>
        <label>SKIC8</label>
    </interactant>
    <organismsDiffer>false</organismsDiffer>
    <experiments>6</experiments>
</comment>
<comment type="interaction">
    <interactant intactId="EBI-21251460">
        <id>O60260-5</id>
    </interactant>
    <interactant intactId="EBI-9845742">
        <id>Q9HCE7-2</id>
        <label>SMURF1</label>
    </interactant>
    <organismsDiffer>false</organismsDiffer>
    <experiments>3</experiments>
</comment>
<comment type="interaction">
    <interactant intactId="EBI-21251460">
        <id>O60260-5</id>
    </interactant>
    <interactant intactId="EBI-985879">
        <id>P37840</id>
        <label>SNCA</label>
    </interactant>
    <organismsDiffer>false</organismsDiffer>
    <experiments>8</experiments>
</comment>
<comment type="interaction">
    <interactant intactId="EBI-21251460">
        <id>O60260-5</id>
    </interactant>
    <interactant intactId="EBI-25880040">
        <id>Q9Y6H5-5</id>
        <label>SNCAIP</label>
    </interactant>
    <organismsDiffer>false</organismsDiffer>
    <experiments>6</experiments>
</comment>
<comment type="interaction">
    <interactant intactId="EBI-21251460">
        <id>O60260-5</id>
    </interactant>
    <interactant intactId="EBI-538492">
        <id>Q96DI7</id>
        <label>SNRNP40</label>
    </interactant>
    <organismsDiffer>false</organismsDiffer>
    <experiments>3</experiments>
</comment>
<comment type="interaction">
    <interactant intactId="EBI-21251460">
        <id>O60260-5</id>
    </interactant>
    <interactant intactId="EBI-3929549">
        <id>O14544</id>
        <label>SOCS6</label>
    </interactant>
    <organismsDiffer>false</organismsDiffer>
    <experiments>3</experiments>
</comment>
<comment type="interaction">
    <interactant intactId="EBI-21251460">
        <id>O60260-5</id>
    </interactant>
    <interactant intactId="EBI-11959123">
        <id>Q99932-2</id>
        <label>SPAG8</label>
    </interactant>
    <organismsDiffer>false</organismsDiffer>
    <experiments>6</experiments>
</comment>
<comment type="interaction">
    <interactant intactId="EBI-21251460">
        <id>O60260-5</id>
    </interactant>
    <interactant intactId="EBI-2510414">
        <id>Q8IUW3</id>
        <label>SPATA2L</label>
    </interactant>
    <organismsDiffer>false</organismsDiffer>
    <experiments>3</experiments>
</comment>
<comment type="interaction">
    <interactant intactId="EBI-21251460">
        <id>O60260-5</id>
    </interactant>
    <interactant intactId="EBI-8345366">
        <id>Q8TCT7-2</id>
        <label>SPPL2B</label>
    </interactant>
    <organismsDiffer>false</organismsDiffer>
    <experiments>3</experiments>
</comment>
<comment type="interaction">
    <interactant intactId="EBI-21251460">
        <id>O60260-5</id>
    </interactant>
    <interactant intactId="EBI-5235340">
        <id>Q7Z699</id>
        <label>SPRED1</label>
    </interactant>
    <organismsDiffer>false</organismsDiffer>
    <experiments>3</experiments>
</comment>
<comment type="interaction">
    <interactant intactId="EBI-21251460">
        <id>O60260-5</id>
    </interactant>
    <interactant intactId="EBI-354861">
        <id>Q9C004</id>
        <label>SPRY4</label>
    </interactant>
    <organismsDiffer>false</organismsDiffer>
    <experiments>3</experiments>
</comment>
<comment type="interaction">
    <interactant intactId="EBI-21251460">
        <id>O60260-5</id>
    </interactant>
    <interactant intactId="EBI-2659201">
        <id>Q96BD6</id>
        <label>SPSB1</label>
    </interactant>
    <organismsDiffer>false</organismsDiffer>
    <experiments>3</experiments>
</comment>
<comment type="interaction">
    <interactant intactId="EBI-21251460">
        <id>O60260-5</id>
    </interactant>
    <interactant intactId="EBI-2323209">
        <id>Q99619</id>
        <label>SPSB2</label>
    </interactant>
    <organismsDiffer>false</organismsDiffer>
    <experiments>3</experiments>
</comment>
<comment type="interaction">
    <interactant intactId="EBI-21251460">
        <id>O60260-5</id>
    </interactant>
    <interactant intactId="EBI-373258">
        <id>O75886</id>
        <label>STAM2</label>
    </interactant>
    <organismsDiffer>false</organismsDiffer>
    <experiments>3</experiments>
</comment>
<comment type="interaction">
    <interactant intactId="EBI-21251460">
        <id>O60260-5</id>
    </interactant>
    <interactant intactId="EBI-396676">
        <id>O95630</id>
        <label>STAMBP</label>
    </interactant>
    <organismsDiffer>false</organismsDiffer>
    <experiments>3</experiments>
</comment>
<comment type="interaction">
    <interactant intactId="EBI-21251460">
        <id>O60260-5</id>
    </interactant>
    <interactant intactId="EBI-357085">
        <id>Q9UNE7</id>
        <label>STUB1</label>
    </interactant>
    <organismsDiffer>false</organismsDiffer>
    <experiments>6</experiments>
</comment>
<comment type="interaction">
    <interactant intactId="EBI-21251460">
        <id>O60260-5</id>
    </interactant>
    <interactant intactId="EBI-751770">
        <id>Q9BT88</id>
        <label>SYT11</label>
    </interactant>
    <organismsDiffer>false</organismsDiffer>
    <experiments>6</experiments>
</comment>
<comment type="interaction">
    <interactant intactId="EBI-21251460">
        <id>O60260-5</id>
    </interactant>
    <interactant intactId="EBI-372899">
        <id>Q13148</id>
        <label>TARDBP</label>
    </interactant>
    <organismsDiffer>false</organismsDiffer>
    <experiments>3</experiments>
</comment>
<comment type="interaction">
    <interactant intactId="EBI-21251460">
        <id>O60260-5</id>
    </interactant>
    <interactant intactId="EBI-1047158">
        <id>Q16650</id>
        <label>TBR1</label>
    </interactant>
    <organismsDiffer>false</organismsDiffer>
    <experiments>6</experiments>
</comment>
<comment type="interaction">
    <interactant intactId="EBI-21251460">
        <id>O60260-5</id>
    </interactant>
    <interactant intactId="EBI-25840535">
        <id>Q15554-4</id>
        <label>TERF2</label>
    </interactant>
    <organismsDiffer>false</organismsDiffer>
    <experiments>6</experiments>
</comment>
<comment type="interaction">
    <interactant intactId="EBI-21251460">
        <id>O60260-5</id>
    </interactant>
    <interactant intactId="EBI-711424">
        <id>Q04724</id>
        <label>TLE1</label>
    </interactant>
    <organismsDiffer>false</organismsDiffer>
    <experiments>3</experiments>
</comment>
<comment type="interaction">
    <interactant intactId="EBI-21251460">
        <id>O60260-5</id>
    </interactant>
    <interactant intactId="EBI-25831574">
        <id>Q71RG4-4</id>
        <label>TMUB2</label>
    </interactant>
    <organismsDiffer>false</organismsDiffer>
    <experiments>3</experiments>
</comment>
<comment type="interaction">
    <interactant intactId="EBI-21251460">
        <id>O60260-5</id>
    </interactant>
    <interactant intactId="EBI-74615">
        <id>Q9H0E2</id>
        <label>TOLLIP</label>
    </interactant>
    <organismsDiffer>false</organismsDiffer>
    <experiments>3</experiments>
</comment>
<comment type="interaction">
    <interactant intactId="EBI-21251460">
        <id>O60260-5</id>
    </interactant>
    <interactant intactId="EBI-81290">
        <id>P19474</id>
        <label>TRIM21</label>
    </interactant>
    <organismsDiffer>false</organismsDiffer>
    <experiments>3</experiments>
</comment>
<comment type="interaction">
    <interactant intactId="EBI-21251460">
        <id>O60260-5</id>
    </interactant>
    <interactant intactId="EBI-17716262">
        <id>Q9UPQ4-2</id>
        <label>TRIM35</label>
    </interactant>
    <organismsDiffer>false</organismsDiffer>
    <experiments>3</experiments>
</comment>
<comment type="interaction">
    <interactant intactId="EBI-21251460">
        <id>O60260-5</id>
    </interactant>
    <interactant intactId="EBI-25840976">
        <id>Q8NBM4-4</id>
        <label>UBAC2</label>
    </interactant>
    <organismsDiffer>false</organismsDiffer>
    <experiments>3</experiments>
</comment>
<comment type="interaction">
    <interactant intactId="EBI-21251460">
        <id>O60260-5</id>
    </interactant>
    <interactant intactId="EBI-7353612">
        <id>P57075-2</id>
        <label>UBASH3A</label>
    </interactant>
    <organismsDiffer>false</organismsDiffer>
    <experiments>6</experiments>
</comment>
<comment type="interaction">
    <interactant intactId="EBI-21251460">
        <id>O60260-5</id>
    </interactant>
    <interactant intactId="EBI-413034">
        <id>P0CG47</id>
        <label>UBB</label>
    </interactant>
    <organismsDiffer>false</organismsDiffer>
    <experiments>6</experiments>
</comment>
<comment type="interaction">
    <interactant intactId="EBI-21251460">
        <id>O60260-5</id>
    </interactant>
    <interactant intactId="EBI-6657186">
        <id>O15205</id>
        <label>UBD</label>
    </interactant>
    <organismsDiffer>false</organismsDiffer>
    <experiments>3</experiments>
</comment>
<comment type="interaction">
    <interactant intactId="EBI-21251460">
        <id>O60260-5</id>
    </interactant>
    <interactant intactId="EBI-988826">
        <id>Q9Y385</id>
        <label>UBE2J1</label>
    </interactant>
    <organismsDiffer>false</organismsDiffer>
    <experiments>3</experiments>
</comment>
<comment type="interaction">
    <interactant intactId="EBI-21251460">
        <id>O60260-5</id>
    </interactant>
    <interactant intactId="EBI-711173">
        <id>P68036</id>
        <label>UBE2L3</label>
    </interactant>
    <organismsDiffer>false</organismsDiffer>
    <experiments>3</experiments>
</comment>
<comment type="interaction">
    <interactant intactId="EBI-21251460">
        <id>O60260-5</id>
    </interactant>
    <interactant intactId="EBI-1041660">
        <id>P61081</id>
        <label>UBE2M</label>
    </interactant>
    <organismsDiffer>false</organismsDiffer>
    <experiments>3</experiments>
</comment>
<comment type="interaction">
    <interactant intactId="EBI-21251460">
        <id>O60260-5</id>
    </interactant>
    <interactant intactId="EBI-2339946">
        <id>Q9C0C9</id>
        <label>UBE2O</label>
    </interactant>
    <organismsDiffer>false</organismsDiffer>
    <experiments>3</experiments>
</comment>
<comment type="interaction">
    <interactant intactId="EBI-21251460">
        <id>O60260-5</id>
    </interactant>
    <interactant intactId="EBI-1050671">
        <id>Q13404</id>
        <label>UBE2V1</label>
    </interactant>
    <organismsDiffer>false</organismsDiffer>
    <experiments>3</experiments>
</comment>
<comment type="interaction">
    <interactant intactId="EBI-21251460">
        <id>O60260-5</id>
    </interactant>
    <interactant intactId="EBI-11530712">
        <id>Q04323-2</id>
        <label>UBXN1</label>
    </interactant>
    <organismsDiffer>false</organismsDiffer>
    <experiments>3</experiments>
</comment>
<comment type="interaction">
    <interactant intactId="EBI-21251460">
        <id>O60260-5</id>
    </interactant>
    <interactant intactId="EBI-1045733">
        <id>Q9Y3C8</id>
        <label>UFC1</label>
    </interactant>
    <organismsDiffer>false</organismsDiffer>
    <experiments>3</experiments>
</comment>
<comment type="interaction">
    <interactant intactId="EBI-21251460">
        <id>O60260-5</id>
    </interactant>
    <interactant intactId="EBI-17761788">
        <id>Q96RL1-2</id>
        <label>UIMC1</label>
    </interactant>
    <organismsDiffer>false</organismsDiffer>
    <experiments>3</experiments>
</comment>
<comment type="interaction">
    <interactant intactId="EBI-21251460">
        <id>O60260-5</id>
    </interactant>
    <interactant intactId="EBI-10696113">
        <id>O75604-3</id>
        <label>USP2</label>
    </interactant>
    <organismsDiffer>false</organismsDiffer>
    <experiments>3</experiments>
</comment>
<comment type="interaction">
    <interactant intactId="EBI-21251460">
        <id>O60260-5</id>
    </interactant>
    <interactant intactId="EBI-11027067">
        <id>P18206-2</id>
        <label>VCL</label>
    </interactant>
    <organismsDiffer>false</organismsDiffer>
    <experiments>6</experiments>
</comment>
<comment type="interaction">
    <interactant intactId="EBI-21251460">
        <id>O60260-5</id>
    </interactant>
    <interactant intactId="EBI-354022">
        <id>P45880</id>
        <label>VDAC2</label>
    </interactant>
    <organismsDiffer>false</organismsDiffer>
    <experiments>6</experiments>
</comment>
<comment type="interaction">
    <interactant intactId="EBI-21251460">
        <id>O60260-5</id>
    </interactant>
    <interactant intactId="EBI-12157263">
        <id>P40337-2</id>
        <label>VHL</label>
    </interactant>
    <organismsDiffer>false</organismsDiffer>
    <experiments>3</experiments>
</comment>
<comment type="interaction">
    <interactant intactId="EBI-21251460">
        <id>O60260-5</id>
    </interactant>
    <interactant intactId="EBI-11141397">
        <id>Q9UBQ0-2</id>
        <label>VPS29</label>
    </interactant>
    <organismsDiffer>false</organismsDiffer>
    <experiments>3</experiments>
</comment>
<comment type="interaction">
    <interactant intactId="EBI-21251460">
        <id>O60260-5</id>
    </interactant>
    <interactant intactId="EBI-743923">
        <id>O00308</id>
        <label>WWP2</label>
    </interactant>
    <organismsDiffer>false</organismsDiffer>
    <experiments>3</experiments>
</comment>
<comment type="interaction">
    <interactant intactId="EBI-21251460">
        <id>O60260-5</id>
    </interactant>
    <interactant intactId="EBI-306940">
        <id>Q04917</id>
        <label>YWHAH</label>
    </interactant>
    <organismsDiffer>false</organismsDiffer>
    <experiments>6</experiments>
</comment>
<comment type="interaction">
    <interactant intactId="EBI-21251460">
        <id>O60260-5</id>
    </interactant>
    <interactant intactId="EBI-25842419">
        <id>O43167-2</id>
        <label>ZBTB24</label>
    </interactant>
    <organismsDiffer>false</organismsDiffer>
    <experiments>3</experiments>
</comment>
<comment type="interaction">
    <interactant intactId="EBI-21251460">
        <id>O60260-5</id>
    </interactant>
    <interactant intactId="EBI-7227791">
        <id>Q15916</id>
        <label>ZBTB6</label>
    </interactant>
    <organismsDiffer>false</organismsDiffer>
    <experiments>3</experiments>
</comment>
<comment type="interaction">
    <interactant intactId="EBI-21251460">
        <id>O60260-5</id>
    </interactant>
    <interactant intactId="EBI-25900580">
        <id>Q9Y649</id>
    </interactant>
    <organismsDiffer>false</organismsDiffer>
    <experiments>3</experiments>
</comment>
<comment type="subcellular location">
    <subcellularLocation>
        <location evidence="7 45 47 49 50 51 52 62 65 71 77">Cytoplasm</location>
        <location evidence="7 45 47 49 50 51 52 62 65 71 77">Cytosol</location>
    </subcellularLocation>
    <subcellularLocation>
        <location evidence="45">Nucleus</location>
    </subcellularLocation>
    <subcellularLocation>
        <location evidence="52">Endoplasmic reticulum</location>
    </subcellularLocation>
    <subcellularLocation>
        <location evidence="49 50 51 58 62 65 68 71 77">Mitochondrion</location>
    </subcellularLocation>
    <subcellularLocation>
        <location evidence="2">Mitochondrion outer membrane</location>
    </subcellularLocation>
    <subcellularLocation>
        <location evidence="35">Cell projection</location>
        <location evidence="35">Neuron projection</location>
    </subcellularLocation>
    <subcellularLocation>
        <location evidence="2">Postsynaptic density</location>
    </subcellularLocation>
    <subcellularLocation>
        <location evidence="2">Presynapse</location>
    </subcellularLocation>
    <text evidence="7 17 35 49 50 51 54 62 65 77">Mainly localizes in the cytosol (PubMed:19029340, PubMed:19229105). Co-localizes with SYT11 in neutrites (PubMed:12925569). Co-localizes with SNCAIP in brainstem Lewy bodies (PubMed:10319893, PubMed:11431533). Translocates to dysfunctional mitochondria that have lost the mitochondrial membrane potential; recruitment to mitochondria is PINK1-dependent (PubMed:18957282, PubMed:19966284, PubMed:23620051, PubMed:24898855). Mitochondrial localization also gradually increases with cellular growth (PubMed:22082830).</text>
</comment>
<comment type="alternative products">
    <event type="alternative splicing"/>
    <isoform>
        <id>O60260-1</id>
        <name>1</name>
        <sequence type="displayed"/>
    </isoform>
    <isoform>
        <id>O60260-2</id>
        <name>2</name>
        <name>SV5DEL</name>
        <sequence type="described" ref="VSP_011707"/>
    </isoform>
    <isoform>
        <id>O60260-3</id>
        <name>3</name>
        <sequence type="described" ref="VSP_011706 VSP_011709 VSP_011710"/>
    </isoform>
    <isoform>
        <id>O60260-4</id>
        <name>4</name>
        <sequence type="described" ref="VSP_011705"/>
    </isoform>
    <isoform>
        <id>O60260-5</id>
        <name>5</name>
        <sequence type="described" ref="VSP_011708 VSP_011711 VSP_011712"/>
    </isoform>
    <isoform>
        <id>O60260-6</id>
        <name>6</name>
        <sequence type="described" ref="VSP_041563"/>
    </isoform>
    <isoform>
        <id>O60260-7</id>
        <name>7</name>
        <name>SV5,9DEL</name>
        <sequence type="described" ref="VSP_011707 VSP_053651"/>
    </isoform>
    <isoform>
        <id>O60260-8</id>
        <name>8</name>
        <name>SV9DEL</name>
        <sequence type="described" ref="VSP_053651"/>
    </isoform>
</comment>
<comment type="tissue specificity">
    <text evidence="29 32 37 52 86">Highly expressed in the brain including the substantia nigra (PubMed:19501131, PubMed:9560156). Expressed in heart, testis and skeletal muscle (PubMed:9560156). Expression is down-regulated or absent in tumor biopsies, and absent in the brain of PARK2 patients (PubMed:12719539, PubMed:14614460). Overexpression protects dopamine neurons from kainate-mediated apoptosis (PubMed:12628165). Found in serum (at protein level) (PubMed:19501131).</text>
</comment>
<comment type="domain">
    <text evidence="53">The ubiquitin-like domain binds the PSMD4 subunit of 26S proteasomes.</text>
</comment>
<comment type="domain">
    <text evidence="53">The RING-type 1 zinc finger domain is required to repress p53/TP53 transcription.</text>
</comment>
<comment type="domain">
    <text evidence="70 93">Members of the RBR family are atypical E3 ligases. They interact with the E2 conjugating enzyme UBE2L3 and function like HECT-type E3 enzymes: they bind E2s via the first RING domain, but require an obligate trans-thiolation step during the ubiquitin transfer, requiring a conserved cysteine residue in the second RING domain.</text>
</comment>
<comment type="PTM">
    <text evidence="81">ISGylated. Conjugated to ubiquitin-like protein ISG15 upon IFN-beta stimulation. ISGylation positively regulates its E3 ligase activity.</text>
</comment>
<comment type="PTM">
    <text evidence="51 70 78">Auto-ubiquitinates in an E2-dependent manner leading to its own degradation (PubMed:19229105, PubMed:23770917, PubMed:25474007). Also polyubiquitinated by RNF41 for proteasomal degradation (PubMed:19229105).</text>
</comment>
<comment type="PTM">
    <text evidence="38">S-nitrosylated. The inhibition of PRKN ubiquitin E3 ligase activity by S-nitrosylation could contribute to the degenerative process in PD by impairing the ubiquitination of PRKN substrates.</text>
</comment>
<comment type="PTM">
    <text evidence="49 68 73 75 78">Phosphorylated (PubMed:18957282, PubMed:23754282, PubMed:24660806, PubMed:24784582, PubMed:25474007). Activation requires phosphorylation at Ser-65 by PINK1 and binding to PINK1 phosphorylated ubiquitin (PubMed:18957282, PubMed:23754282, PubMed:24660806, PubMed:24784582, PubMed:25474007). Phosphorylation at Thr-175 by PINK1 and at Thr-217 is important for mitochondrial localization (PubMed:18957282).</text>
</comment>
<comment type="disease" evidence="30 33 54 83">
    <disease id="DI-02134">
        <name>Parkinson disease</name>
        <acronym>PARK</acronym>
        <description>A complex neurodegenerative disorder characterized by bradykinesia, resting tremor, muscular rigidity and postural instability. Additional features are characteristic postural abnormalities, dysautonomia, dystonic cramps, and dementia. The pathology of Parkinson disease involves the loss of dopaminergic neurons in the substantia nigra and the presence of Lewy bodies (intraneuronal accumulations of aggregated proteins), in surviving neurons in various areas of the brain. The disease is progressive and usually manifests after the age of 50 years, although early-onset cases (before 50 years) are known. The majority of the cases are sporadic suggesting a multifactorial etiology based on environmental and genetic factors. However, some patients present with a positive family history for the disease. Familial forms of the disease usually begin at earlier ages and are associated with atypical clinical features.</description>
        <dbReference type="MIM" id="168600"/>
    </disease>
    <text>Disease susceptibility may be associated with variants affecting the gene represented in this entry. Heterozygous mutations act as susceptibility alleles for late-onset Parkinson disease (PubMed:12629236, PubMed:12730996).</text>
</comment>
<comment type="disease" evidence="6 9 10 11 15 16 17 19 20 21 22 23 24 25 27 28 30 33 35 39 46 51 53 55 57 58 59 63 64 70 84 86 87">
    <disease id="DI-01238">
        <name>Parkinson disease 2</name>
        <acronym>PARK2</acronym>
        <description>An autosomal recessive form of Parkinson disease, a complex neurodegenerative disorder characterized by bradykinesia, resting tremor, muscular rigidity and postural instability. PARK2 differs from classic forms of Parkinson disease by early DOPA-induced dyskinesia, diurnal fluctuation of the symptoms, sleep benefit, dystonia and hyper-reflexia. Dementia is absent. Pathologically, patients show loss of dopaminergic neurons in the substantia nigra, similar to that seen in classic Parkinson disease; however, Lewy bodies (intraneuronal accumulations of aggregated proteins) are absent. Disease onset is usually before age 40 years.</description>
        <dbReference type="MIM" id="600116"/>
    </disease>
    <text>The disease is caused by variants affecting the gene represented in this entry.</text>
</comment>
<comment type="disease">
    <text>Defects in PRKN may be involved in the development and/or progression of ovarian cancer.</text>
</comment>
<comment type="miscellaneous">
    <text>The parkin locus (PRKN), adjacent to the 6q telomere is hyper-recombinable and lies within FRA6E, the third most common fragile site in tumor tissue.</text>
</comment>
<comment type="similarity">
    <text evidence="92">Belongs to the RBR family. Parkin subfamily.</text>
</comment>
<comment type="online information" name="Protein Spotlight">
    <link uri="https://www.proteinspotlight.org/back_issues/131"/>
    <text>Life's tremors - Issue 131 of September 2011</text>
</comment>
<accession>O60260</accession>
<accession>A3FG77</accession>
<accession>A8K975</accession>
<accession>D3JZW7</accession>
<accession>D3K2X0</accession>
<accession>Q5TFV8</accession>
<accession>Q5VVX4</accession>
<accession>Q6Q2I6</accession>
<accession>Q8NI41</accession>
<accession>Q8NI43</accession>
<accession>Q8NI44</accession>
<accession>Q8WW07</accession>
<protein>
    <recommendedName>
        <fullName evidence="92">E3 ubiquitin-protein ligase parkin</fullName>
        <shortName>Parkin</shortName>
        <ecNumber evidence="69 84">2.3.2.31</ecNumber>
    </recommendedName>
    <alternativeName>
        <fullName evidence="94">Parkin RBR E3 ubiquitin-protein ligase</fullName>
    </alternativeName>
    <alternativeName>
        <fullName>Parkinson juvenile disease protein 2</fullName>
        <shortName>Parkinson disease protein 2</shortName>
    </alternativeName>
</protein>
<keyword id="KW-0002">3D-structure</keyword>
<keyword id="KW-0025">Alternative splicing</keyword>
<keyword id="KW-0072">Autophagy</keyword>
<keyword id="KW-0966">Cell projection</keyword>
<keyword id="KW-0963">Cytoplasm</keyword>
<keyword id="KW-0225">Disease variant</keyword>
<keyword id="KW-0256">Endoplasmic reticulum</keyword>
<keyword id="KW-1017">Isopeptide bond</keyword>
<keyword id="KW-0472">Membrane</keyword>
<keyword id="KW-0479">Metal-binding</keyword>
<keyword id="KW-0496">Mitochondrion</keyword>
<keyword id="KW-1000">Mitochondrion outer membrane</keyword>
<keyword id="KW-0523">Neurodegeneration</keyword>
<keyword id="KW-0539">Nucleus</keyword>
<keyword id="KW-0907">Parkinson disease</keyword>
<keyword id="KW-0908">Parkinsonism</keyword>
<keyword id="KW-0597">Phosphoprotein</keyword>
<keyword id="KW-1267">Proteomics identification</keyword>
<keyword id="KW-1185">Reference proteome</keyword>
<keyword id="KW-0677">Repeat</keyword>
<keyword id="KW-0702">S-nitrosylation</keyword>
<keyword id="KW-0770">Synapse</keyword>
<keyword id="KW-0804">Transcription</keyword>
<keyword id="KW-0805">Transcription regulation</keyword>
<keyword id="KW-0808">Transferase</keyword>
<keyword id="KW-0832">Ubl conjugation</keyword>
<keyword id="KW-0833">Ubl conjugation pathway</keyword>
<keyword id="KW-0862">Zinc</keyword>
<keyword id="KW-0863">Zinc-finger</keyword>